<keyword id="KW-0002">3D-structure</keyword>
<keyword id="KW-0025">Alternative splicing</keyword>
<keyword id="KW-0106">Calcium</keyword>
<keyword id="KW-0130">Cell adhesion</keyword>
<keyword id="KW-0965">Cell junction</keyword>
<keyword id="KW-1003">Cell membrane</keyword>
<keyword id="KW-0966">Cell projection</keyword>
<keyword id="KW-0903">Direct protein sequencing</keyword>
<keyword id="KW-0225">Disease variant</keyword>
<keyword id="KW-1015">Disulfide bond</keyword>
<keyword id="KW-0245">EGF-like domain</keyword>
<keyword id="KW-0325">Glycoprotein</keyword>
<keyword id="KW-1183">Host cell receptor for virus entry</keyword>
<keyword id="KW-0945">Host-virus interaction</keyword>
<keyword id="KW-0401">Integrin</keyword>
<keyword id="KW-0460">Magnesium</keyword>
<keyword id="KW-0472">Membrane</keyword>
<keyword id="KW-0479">Metal-binding</keyword>
<keyword id="KW-0597">Phosphoprotein</keyword>
<keyword id="KW-0628">Postsynaptic cell membrane</keyword>
<keyword id="KW-1267">Proteomics identification</keyword>
<keyword id="KW-0675">Receptor</keyword>
<keyword id="KW-1185">Reference proteome</keyword>
<keyword id="KW-0677">Repeat</keyword>
<keyword id="KW-0732">Signal</keyword>
<keyword id="KW-0770">Synapse</keyword>
<keyword id="KW-0812">Transmembrane</keyword>
<keyword id="KW-1133">Transmembrane helix</keyword>
<gene>
    <name evidence="91" type="primary">ITGB3</name>
    <name type="synonym">GP3A</name>
</gene>
<reference key="1">
    <citation type="journal article" date="1987" name="J. Biol. Chem.">
        <title>Protein sequence of endothelial glycoprotein IIIa derived from a cDNA clone. Identity with platelet glycoprotein IIIa and similarity to 'integrin'.</title>
        <authorList>
            <person name="Fitzgerald L.A."/>
            <person name="Steiner B."/>
            <person name="Rall S.C. Jr."/>
            <person name="Lo S."/>
            <person name="Phillips D.R."/>
        </authorList>
    </citation>
    <scope>NUCLEOTIDE SEQUENCE [MRNA] (ISOFORM BETA-3A)</scope>
</reference>
<reference key="2">
    <citation type="journal article" date="1988" name="J. Clin. Invest.">
        <title>Structure of platelet glycoprotein IIIa. A common subunit for two different membrane receptors.</title>
        <authorList>
            <person name="Zimrin A.B."/>
            <person name="Eisman R."/>
            <person name="Vilaire G."/>
            <person name="Schwartz E."/>
            <person name="Bennett J.S."/>
            <person name="Poncz M."/>
        </authorList>
    </citation>
    <scope>NUCLEOTIDE SEQUENCE [MRNA] (ISOFORM BETA-3A)</scope>
</reference>
<reference key="3">
    <citation type="journal article" date="1990" name="Mol. Biol. Rep.">
        <title>GPIIb and GPIIIa amino acid sequences deduced from human megakaryocyte cDNAs.</title>
        <authorList>
            <person name="Frachet P."/>
            <person name="Uzan G."/>
            <person name="Thevenon D."/>
            <person name="Denarier E."/>
            <person name="Prandini M.H."/>
            <person name="Marguerie G."/>
        </authorList>
    </citation>
    <scope>NUCLEOTIDE SEQUENCE [MRNA] (ISOFORM BETA-3A)</scope>
</reference>
<reference key="4">
    <citation type="journal article" date="1997" name="J. Biol. Chem.">
        <title>Cloning and characterization of a novel integrin beta3 subunit.</title>
        <authorList>
            <person name="Kumar C.S."/>
            <person name="James I.E."/>
            <person name="Wong A."/>
            <person name="Mwangi V."/>
            <person name="Feild J.A."/>
            <person name="Nuthulaganti P."/>
            <person name="Connor J.R."/>
            <person name="Eichman C."/>
            <person name="Ali F."/>
            <person name="Hwang S.M."/>
            <person name="Rieman D.J."/>
            <person name="Drake F.H."/>
            <person name="Gowen M."/>
        </authorList>
    </citation>
    <scope>NUCLEOTIDE SEQUENCE [MRNA] (ISOFORM BETA-3C)</scope>
    <scope>FUNCTION</scope>
    <scope>SUBCELLULAR LOCATION</scope>
    <source>
        <tissue>Osteoclastoma</tissue>
    </source>
</reference>
<reference key="5">
    <citation type="submission" date="2005-09" db="EMBL/GenBank/DDBJ databases">
        <authorList>
            <person name="Mural R.J."/>
            <person name="Istrail S."/>
            <person name="Sutton G.G."/>
            <person name="Florea L."/>
            <person name="Halpern A.L."/>
            <person name="Mobarry C.M."/>
            <person name="Lippert R."/>
            <person name="Walenz B."/>
            <person name="Shatkay H."/>
            <person name="Dew I."/>
            <person name="Miller J.R."/>
            <person name="Flanigan M.J."/>
            <person name="Edwards N.J."/>
            <person name="Bolanos R."/>
            <person name="Fasulo D."/>
            <person name="Halldorsson B.V."/>
            <person name="Hannenhalli S."/>
            <person name="Turner R."/>
            <person name="Yooseph S."/>
            <person name="Lu F."/>
            <person name="Nusskern D.R."/>
            <person name="Shue B.C."/>
            <person name="Zheng X.H."/>
            <person name="Zhong F."/>
            <person name="Delcher A.L."/>
            <person name="Huson D.H."/>
            <person name="Kravitz S.A."/>
            <person name="Mouchard L."/>
            <person name="Reinert K."/>
            <person name="Remington K.A."/>
            <person name="Clark A.G."/>
            <person name="Waterman M.S."/>
            <person name="Eichler E.E."/>
            <person name="Adams M.D."/>
            <person name="Hunkapiller M.W."/>
            <person name="Myers E.W."/>
            <person name="Venter J.C."/>
        </authorList>
    </citation>
    <scope>NUCLEOTIDE SEQUENCE [LARGE SCALE GENOMIC DNA]</scope>
</reference>
<reference key="6">
    <citation type="journal article" date="2004" name="Genome Res.">
        <title>The status, quality, and expansion of the NIH full-length cDNA project: the Mammalian Gene Collection (MGC).</title>
        <authorList>
            <consortium name="The MGC Project Team"/>
        </authorList>
    </citation>
    <scope>NUCLEOTIDE SEQUENCE [LARGE SCALE MRNA] (ISOFORM BETA-3A)</scope>
</reference>
<reference key="7">
    <citation type="journal article" date="1994" name="Blood">
        <title>Isolation and characterization of a TATA-less promoter for the human beta 3 integrin gene.</title>
        <authorList>
            <person name="Villa-Garcia M."/>
            <person name="Li L."/>
            <person name="Riely G."/>
            <person name="Bray P.F."/>
        </authorList>
    </citation>
    <scope>NUCLEOTIDE SEQUENCE [GENOMIC DNA] OF 1-26</scope>
    <source>
        <tissue>Blood</tissue>
    </source>
</reference>
<reference key="8">
    <citation type="journal article" date="1988" name="Blood">
        <title>Cloning of glycoprotein IIIa cDNA from human erythroleukemia cells and localization of the gene to chromosome 17.</title>
        <authorList>
            <person name="Rosa J.P."/>
            <person name="Bray P.F."/>
            <person name="Gayet O."/>
            <person name="Johnston G.I."/>
            <person name="Cook R.G."/>
            <person name="Jackson K.W."/>
            <person name="Shuman M.A."/>
            <person name="McEver R.P."/>
        </authorList>
    </citation>
    <scope>NUCLEOTIDE SEQUENCE [MRNA] OF 11-788</scope>
    <source>
        <tissue>Erythroleukemia</tissue>
    </source>
</reference>
<reference key="9">
    <citation type="journal article" date="1991" name="Biochem. J.">
        <title>Separation of important new platelet glycoproteins (GPIa, GPIc, GPIc*, GPIIa and GMP-140) by F.P.L.C. Characterization by monoclonal antibodies and gas-phase sequencing.</title>
        <authorList>
            <person name="Catimel B."/>
            <person name="Parmentier S."/>
            <person name="Leung L.L."/>
            <person name="McGregor J.L."/>
        </authorList>
    </citation>
    <scope>PROTEIN SEQUENCE OF 27-37</scope>
    <source>
        <tissue>Platelet</tissue>
    </source>
</reference>
<reference key="10">
    <citation type="journal article" date="2003" name="Nat. Biotechnol.">
        <title>Exploring proteomes and analyzing protein processing by mass spectrometric identification of sorted N-terminal peptides.</title>
        <authorList>
            <person name="Gevaert K."/>
            <person name="Goethals M."/>
            <person name="Martens L."/>
            <person name="Van Damme J."/>
            <person name="Staes A."/>
            <person name="Thomas G.R."/>
            <person name="Vandekerckhove J."/>
        </authorList>
    </citation>
    <scope>PROTEIN SEQUENCE OF 27-34</scope>
    <source>
        <tissue>Platelet</tissue>
    </source>
</reference>
<reference key="11">
    <citation type="journal article" date="1990" name="J. Biol. Chem.">
        <title>The genomic organization of platelet glycoprotein IIIa.</title>
        <authorList>
            <person name="Zimrin A.B."/>
            <person name="Gidwitz S."/>
            <person name="Lord S."/>
            <person name="Schwartz E."/>
            <person name="Bennett J.S."/>
            <person name="White G.C. II"/>
            <person name="Poncz M."/>
        </authorList>
    </citation>
    <scope>NUCLEOTIDE SEQUENCE [GENOMIC DNA] OF 28-788</scope>
</reference>
<reference key="12">
    <citation type="journal article" date="1990" name="J. Biol. Chem.">
        <title>Characterization of the human platelet glycoprotein IIIa gene. Comparison with the fibronectin receptor beta-subunit gene.</title>
        <authorList>
            <person name="Lanza F."/>
            <person name="Kieffer N."/>
            <person name="Phillips D.R."/>
            <person name="Fitzgerald L.A."/>
        </authorList>
    </citation>
    <scope>NUCLEOTIDE SEQUENCE [GENOMIC DNA] OF 28-788</scope>
</reference>
<reference key="13">
    <citation type="submission" date="1993-12" db="EMBL/GenBank/DDBJ databases">
        <title>A new exon II polymorphism in the platelet glycoprotein IIIa.</title>
        <authorList>
            <person name="Pascual C."/>
            <person name="Balas A."/>
            <person name="Garcia-Sanchez F."/>
            <person name="Rodriguez de la Rua A."/>
            <person name="Vicario J.L."/>
        </authorList>
    </citation>
    <scope>NUCLEOTIDE SEQUENCE [GENOMIC DNA] OF 56-120</scope>
    <scope>VARIANTS PRO-59 AND ARG-66</scope>
    <source>
        <tissue>Blood</tissue>
    </source>
</reference>
<reference key="14">
    <citation type="journal article" date="1992" name="Int. Immunol.">
        <title>The gene organization of the human beta 7 subunit, the common beta subunit of the leukocyte integrins HML-1 and LPAM-1.</title>
        <authorList>
            <person name="Jiang W.-M."/>
            <person name="Jenkins D."/>
            <person name="Yuan Q."/>
            <person name="Leung E."/>
            <person name="Choo K.H."/>
            <person name="Watson J.D."/>
            <person name="Krissansen G.W."/>
        </authorList>
    </citation>
    <scope>NUCLEOTIDE SEQUENCE [GENOMIC DNA] OF 122-204</scope>
</reference>
<reference key="15">
    <citation type="journal article" date="1987" name="Blood">
        <title>Purification and partial amino acid sequence of human platelet membrane glycoproteins IIb and IIIa.</title>
        <authorList>
            <person name="Hiraiwa A."/>
            <person name="Matsukage A."/>
            <person name="Shiku H."/>
            <person name="Takahashi T."/>
            <person name="Naito K."/>
            <person name="Yamada K."/>
        </authorList>
    </citation>
    <scope>PROTEIN SEQUENCE OF 218-234 AND 439-443</scope>
</reference>
<reference key="16">
    <citation type="journal article" date="1989" name="Proc. Natl. Acad. Sci. U.S.A.">
        <title>An alternative cytoplasmic domain of the integrin beta 3 subunit.</title>
        <authorList>
            <person name="Van Kuppevelt T.H.M.S.M."/>
            <person name="Languino L.R."/>
            <person name="Gailit J.O."/>
            <person name="Suzuki S."/>
            <person name="Ruoslahti E."/>
        </authorList>
    </citation>
    <scope>NUCLEOTIDE SEQUENCE [MRNA] OF 707-788 (ISOFORM BETA-3B)</scope>
    <source>
        <tissue>Placenta</tissue>
    </source>
</reference>
<reference key="17">
    <citation type="journal article" date="1991" name="Biochem. J.">
        <title>Assignment of disulphide bonds in human platelet GPIIIa. A disulphide pattern for the beta-subunits of the integrin family.</title>
        <authorList>
            <person name="Calvete J.J."/>
            <person name="Henschen A."/>
            <person name="Gonzalez-Rodriguez J."/>
        </authorList>
    </citation>
    <scope>PARTIAL PROTEIN SEQUENCE</scope>
    <scope>DISULFIDE BONDS</scope>
</reference>
<reference key="18">
    <citation type="journal article" date="1994" name="Virology">
        <title>Entry of coxsackievirus A9 into host cells: specific interactions with alpha v beta 3 integrin, the vitronectin receptor.</title>
        <authorList>
            <person name="Roivainen M."/>
            <person name="Piirainen L."/>
            <person name="Hovi T."/>
            <person name="Virtanen I."/>
            <person name="Riikonen T."/>
            <person name="Heino J."/>
            <person name="Hyypiae T."/>
        </authorList>
    </citation>
    <scope>FUNCTION (MICROBIAL INFECTION)</scope>
    <scope>INTERACTION WITH COXSACKIEVIRUS A9 CAPSID PROTEINS</scope>
</reference>
<reference key="19">
    <citation type="journal article" date="1996" name="J. Biol. Chem.">
        <title>Outside-in integrin signal transduction. Alpha IIb beta 3-(GP IIb IIIa) tyrosine phosphorylation induced by platelet aggregation.</title>
        <authorList>
            <person name="Law D.A."/>
            <person name="Nannizzi-Alaimo L."/>
            <person name="Phillips D.R."/>
        </authorList>
    </citation>
    <scope>PHOSPHORYLATION AT TYR-773 AND TYR-785 (ISOFORM BETA-3A)</scope>
</reference>
<reference key="20">
    <citation type="journal article" date="1997" name="J. Biol. Chem.">
        <title>Human neutrophil elastase proteolytically activates the platelet integrin alphaIIbbeta3 through cleavage of the carboxyl terminus of the alphaIIb subunit heavy chain. Involvement in the potentiation of platelet aggregation.</title>
        <authorList>
            <person name="Si-Tahar M."/>
            <person name="Pidard D."/>
            <person name="Balloy V."/>
            <person name="Moniatte M."/>
            <person name="Kieffer N."/>
            <person name="Van Dorsselaer A."/>
            <person name="Chignard M."/>
        </authorList>
    </citation>
    <scope>FUNCTION</scope>
</reference>
<reference key="21">
    <citation type="journal article" date="1998" name="Proc. Natl. Acad. Sci. U.S.A.">
        <title>beta3 Integrins mediate the cellular entry of hantaviruses that cause respiratory failure.</title>
        <authorList>
            <person name="Gavrilovskaya I.N."/>
            <person name="Shepley M."/>
            <person name="Shaw R."/>
            <person name="Ginsberg M.H."/>
            <person name="Mackow E.R."/>
        </authorList>
    </citation>
    <scope>FUNCTION (MICROBIAL INFECTION)</scope>
    <scope>INTERACTION WITH HANTAAN GLYCOPROTEIN G</scope>
</reference>
<reference key="22">
    <citation type="journal article" date="1999" name="Blood">
        <title>The Tat protein of human immunodeficiency virus type-1 promotes vascular cell growth and locomotion by engaging the alpha5beta1 and alphavbeta3 integrins and by mobilizing sequestered basic fibroblast growth factor.</title>
        <authorList>
            <person name="Barillari G."/>
            <person name="Sgadari C."/>
            <person name="Fiorelli V."/>
            <person name="Samaniego F."/>
            <person name="Colombini S."/>
            <person name="Manzari V."/>
            <person name="Modesti A."/>
            <person name="Nair B.C."/>
            <person name="Cafaro A."/>
            <person name="Stuerzl M."/>
            <person name="Ensoli B."/>
        </authorList>
    </citation>
    <scope>FUNCTION (MICROBIAL INFECTION)</scope>
    <scope>INTERACTION WITH HIV-1 TAT</scope>
</reference>
<reference key="23">
    <citation type="journal article" date="2000" name="Exp. Cell Res.">
        <title>Activation of integrin alpha(V)beta(3) regulates cell adhesion and migration to bone sialoprotein.</title>
        <authorList>
            <person name="Byzova T.V."/>
            <person name="Kim W."/>
            <person name="Midura R.J."/>
            <person name="Plow E.F."/>
        </authorList>
    </citation>
    <scope>FUNCTION</scope>
</reference>
<reference key="24">
    <citation type="journal article" date="2000" name="J. Biol. Chem.">
        <title>Threonine phosphorylation of the beta 3 integrin cytoplasmic tail, at a site recognized by PDK1 and Akt/PKB in vitro, regulates Shc binding.</title>
        <authorList>
            <person name="Kirk R.I."/>
            <person name="Sanderson M.R."/>
            <person name="Lerea K.M."/>
        </authorList>
    </citation>
    <scope>PHOSPHORYLATION AT THR-779</scope>
</reference>
<reference key="25">
    <citation type="journal article" date="2001" name="J. Virol.">
        <title>Entry of human parechovirus 1.</title>
        <authorList>
            <person name="Joki-Korpela P."/>
            <person name="Marjomaki V."/>
            <person name="Krogerus C."/>
            <person name="Heino J."/>
            <person name="Hyypia T."/>
        </authorList>
    </citation>
    <scope>FUNCTION (MICROBIAL INFECTION)</scope>
    <scope>INTERACTION WITH HUMAN PARECHOVIRUS 1 CAPSID PROTEINS</scope>
</reference>
<reference key="26">
    <citation type="journal article" date="2002" name="J. Cell Biol.">
        <title>Coordinate interactions of Csk, Src, and Syk kinases with [alpha]IIb[beta]3 initiate integrin signaling to the cytoskeleton.</title>
        <authorList>
            <person name="Obergfell A."/>
            <person name="Eto K."/>
            <person name="Mocsai A."/>
            <person name="Buensuceso C."/>
            <person name="Moores S.L."/>
            <person name="Brugge J.S."/>
            <person name="Lowell C.A."/>
            <person name="Shattil S.J."/>
        </authorList>
    </citation>
    <scope>INTERACTION WITH SYK</scope>
</reference>
<reference key="27">
    <citation type="journal article" date="2002" name="J. Cell Biol.">
        <title>Different splice variants of filamin-B affect myogenesis, subcellular distribution, and determine binding to integrin (beta) subunits.</title>
        <authorList>
            <person name="van Der Flier A."/>
            <person name="Kuikman I."/>
            <person name="Kramer D."/>
            <person name="Geerts D."/>
            <person name="Kreft M."/>
            <person name="Takafuta T."/>
            <person name="Shapiro S.S."/>
            <person name="Sonnenberg A."/>
        </authorList>
    </citation>
    <scope>INTERACTION WITH FLNB</scope>
    <source>
        <tissue>Keratinocyte</tissue>
        <tissue>Skeletal muscle</tissue>
    </source>
</reference>
<reference key="28">
    <citation type="journal article" date="2003" name="J. Biol. Chem.">
        <title>CCN3 (NOV) is a novel angiogenic regulator of the CCN protein family.</title>
        <authorList>
            <person name="Lin C.G."/>
            <person name="Leu S.J."/>
            <person name="Chen N."/>
            <person name="Tebeau C.M."/>
            <person name="Lin S.X."/>
            <person name="Yeung C.Y."/>
            <person name="Lau L.F."/>
        </authorList>
    </citation>
    <scope>INTERACTION WITH CCN3</scope>
</reference>
<reference key="29">
    <citation type="journal article" date="2003" name="J. Biol. Chem.">
        <title>Cell adhesion to fibrillin-1 molecules and microfibrils is mediated by alpha 5 beta 1 and alpha v beta 3 integrins.</title>
        <authorList>
            <person name="Bax D.V."/>
            <person name="Bernard S.E."/>
            <person name="Lomas A."/>
            <person name="Morgan A."/>
            <person name="Humphries J."/>
            <person name="Shuttleworth C.A."/>
            <person name="Humphries M.J."/>
            <person name="Kielty C.M."/>
        </authorList>
    </citation>
    <scope>FUNCTION</scope>
    <scope>INTERACTION WITH FBN1</scope>
</reference>
<reference key="30">
    <citation type="journal article" date="2004" name="Nat. Cell Biol.">
        <title>Myosin-X provides a motor-based link between integrins and the cytoskeleton.</title>
        <authorList>
            <person name="Zhang H."/>
            <person name="Berg J.S."/>
            <person name="Li Z."/>
            <person name="Wang Y."/>
            <person name="Lang P."/>
            <person name="Sousa A.D."/>
            <person name="Bhaskar A."/>
            <person name="Cheney R.E."/>
            <person name="Stromblad S."/>
        </authorList>
    </citation>
    <scope>INTERACTION WITH MYO10</scope>
</reference>
<reference key="31">
    <citation type="journal article" date="2005" name="Nat. Med.">
        <title>Integrin alphavbeta3 is a coreceptor for human cytomegalovirus.</title>
        <authorList>
            <person name="Wang X."/>
            <person name="Huang D.Y."/>
            <person name="Huong S.M."/>
            <person name="Huang E.S."/>
        </authorList>
    </citation>
    <scope>FUNCTION (MICROBIAL INFECTION)</scope>
    <scope>INTERACTION WITH CYTOMEGALOVIRUS/HHV-5 GH:GL PROTEINS</scope>
</reference>
<reference key="32">
    <citation type="journal article" date="2005" name="Blood">
        <title>A role for the thiol isomerase protein ERP5 in platelet function.</title>
        <authorList>
            <person name="Jordan P.A."/>
            <person name="Stevens J.M."/>
            <person name="Hubbard G.P."/>
            <person name="Barrett N.E."/>
            <person name="Sage T."/>
            <person name="Authi K.S."/>
            <person name="Gibbins J.M."/>
        </authorList>
    </citation>
    <scope>INTERACTION WITH PDIA6</scope>
</reference>
<reference key="33">
    <citation type="journal article" date="2005" name="Dev. Biol.">
        <title>Epithelial membrane protein-2 regulates surface expression of alphavbeta3 integrin in the endometrium.</title>
        <authorList>
            <person name="Wadehra M."/>
            <person name="Forbes A."/>
            <person name="Pushkarna N."/>
            <person name="Goodglick L."/>
            <person name="Gordon L.K."/>
            <person name="Williams C.J."/>
            <person name="Braun J."/>
        </authorList>
    </citation>
    <scope>INTERACTION WITH EMP2</scope>
</reference>
<reference key="34">
    <citation type="journal article" date="2005" name="J. Biol. Chem.">
        <title>Cartilage oligomeric matrix protein/thrombospondin 5 supports chondrocyte attachment through interaction with integrins.</title>
        <authorList>
            <person name="Chen F.-H."/>
            <person name="Thomas A.O."/>
            <person name="Hecht J.T."/>
            <person name="Goldring M.B."/>
            <person name="Lawler J."/>
        </authorList>
    </citation>
    <scope>INTERACTION WITH COMP</scope>
</reference>
<reference key="35">
    <citation type="journal article" date="2005" name="J. Clin. Invest.">
        <title>Structure and function of the platelet integrin alphaIIbbeta3.</title>
        <authorList>
            <person name="Bennett J.S."/>
        </authorList>
    </citation>
    <scope>REVIEW</scope>
</reference>
<reference key="36">
    <citation type="journal article" date="2005" name="J. Proteome Res.">
        <title>Human plasma N-glycoproteome analysis by immunoaffinity subtraction, hydrazide chemistry, and mass spectrometry.</title>
        <authorList>
            <person name="Liu T."/>
            <person name="Qian W.-J."/>
            <person name="Gritsenko M.A."/>
            <person name="Camp D.G. II"/>
            <person name="Monroe M.E."/>
            <person name="Moore R.J."/>
            <person name="Smith R.D."/>
        </authorList>
    </citation>
    <scope>GLYCOSYLATION [LARGE SCALE ANALYSIS] AT ASN-125</scope>
    <source>
        <tissue>Plasma</tissue>
    </source>
</reference>
<reference key="37">
    <citation type="journal article" date="2006" name="J. Biol. Chem.">
        <title>Proteolytically processed soluble tumor endothelial marker (TEM) 5 mediates endothelial cell survival during angiogenesis by linking integrin alpha(v)beta3 to glycosaminoglycans.</title>
        <authorList>
            <person name="Vallon M."/>
            <person name="Essler M."/>
        </authorList>
    </citation>
    <scope>INTERACTION WITH ADGRA2</scope>
</reference>
<reference key="38">
    <citation type="journal article" date="2006" name="Mol. Cell. Proteomics">
        <title>Elucidation of N-glycosylation sites on human platelet proteins: a glycoproteomic approach.</title>
        <authorList>
            <person name="Lewandrowski U."/>
            <person name="Moebius J."/>
            <person name="Walter U."/>
            <person name="Sickmann A."/>
        </authorList>
    </citation>
    <scope>GLYCOSYLATION [LARGE SCALE ANALYSIS] AT ASN-125</scope>
    <source>
        <tissue>Platelet</tissue>
    </source>
</reference>
<reference key="39">
    <citation type="journal article" date="2007" name="J. Thromb. Haemost.">
        <title>Platelet integrin alpha(IIb)beta(3): activation mechanisms.</title>
        <authorList>
            <person name="Ma Y.Q."/>
            <person name="Qin J."/>
            <person name="Plow E.F."/>
        </authorList>
    </citation>
    <scope>REVIEW</scope>
</reference>
<reference key="40">
    <citation type="journal article" date="2008" name="J. Biol. Chem.">
        <title>Direct binding of integrin alphavbeta3 to FGF1 plays a role in FGF1 signaling.</title>
        <authorList>
            <person name="Mori S."/>
            <person name="Wu C.Y."/>
            <person name="Yamaji S."/>
            <person name="Saegusa J."/>
            <person name="Shi B."/>
            <person name="Ma Z."/>
            <person name="Kuwabara Y."/>
            <person name="Lam K.S."/>
            <person name="Isseroff R.R."/>
            <person name="Takada Y.K."/>
            <person name="Takada Y."/>
        </authorList>
    </citation>
    <scope>FUNCTION</scope>
    <scope>BINDING TO FGF1</scope>
    <scope>IDENTIFICATION IN A COMPLEX WITH FGF1 AND FGFR1</scope>
</reference>
<reference key="41">
    <citation type="journal article" date="2008" name="J. Clin. Invest.">
        <title>Interactions between integrin alphaIIbbeta3 and the serotonin transporter regulate serotonin transport and platelet aggregation in mice and humans.</title>
        <authorList>
            <person name="Carneiro A.M."/>
            <person name="Cook E.H."/>
            <person name="Murphy D.L."/>
            <person name="Blakely R.D."/>
        </authorList>
    </citation>
    <scope>INTERACTION WITH SLC6A4</scope>
</reference>
<reference key="42">
    <citation type="journal article" date="2008" name="J. Biol. Chem.">
        <title>Pro-inflammatory secretory phospholipase A2 type IIA binds to integrins alphavbeta3 and alpha4beta1 and induces proliferation of monocytic cells in an integrin-dependent manner.</title>
        <authorList>
            <person name="Saegusa J."/>
            <person name="Akakura N."/>
            <person name="Wu C.Y."/>
            <person name="Hoogland C."/>
            <person name="Ma Z."/>
            <person name="Lam K.S."/>
            <person name="Liu F.T."/>
            <person name="Takada Y.K."/>
            <person name="Takada Y."/>
        </authorList>
    </citation>
    <scope>FUNCTION</scope>
</reference>
<reference key="43">
    <citation type="journal article" date="2008" name="J. Proteome Res.">
        <title>Phosphoproteome of resting human platelets.</title>
        <authorList>
            <person name="Zahedi R.P."/>
            <person name="Lewandrowski U."/>
            <person name="Wiesner J."/>
            <person name="Wortelkamp S."/>
            <person name="Moebius J."/>
            <person name="Schuetz C."/>
            <person name="Walter U."/>
            <person name="Gambaryan S."/>
            <person name="Sickmann A."/>
        </authorList>
    </citation>
    <scope>PHOSPHORYLATION [LARGE SCALE ANALYSIS] AT TYR-773</scope>
    <scope>IDENTIFICATION BY MASS SPECTROMETRY [LARGE SCALE ANALYSIS]</scope>
    <source>
        <tissue>Platelet</tissue>
    </source>
</reference>
<reference key="44">
    <citation type="journal article" date="2008" name="J. Virol.">
        <title>Integrin alphaVbeta3 Binds to the RGD motif of glycoprotein B of Kaposi's sarcoma-associated herpesvirus and functions as an RGD-dependent entry receptor.</title>
        <authorList>
            <person name="Garrigues H.J."/>
            <person name="Rubinchikova Y.E."/>
            <person name="Dipersio C.M."/>
            <person name="Rose T.M."/>
        </authorList>
    </citation>
    <scope>FUNCTION (MICROBIAL INFECTION)</scope>
    <scope>INTERACTION WITH HHV-8 GLYCOPROTEIN B</scope>
</reference>
<reference key="45">
    <citation type="journal article" date="2009" name="Blood">
        <title>Naturally processed peptides spanning the HPA-1a polymorphism are efficiently generated and displayed from platelet glycoprotein by HLA-DRB3*0101-positive antigen-presenting cells.</title>
        <authorList>
            <person name="Anani Sarab G."/>
            <person name="Moss M."/>
            <person name="Barker R.N."/>
            <person name="Urbaniak S.J."/>
        </authorList>
    </citation>
    <scope>IDENTIFICATION OF ALLOANTIGEN HPA-1A BY MASS SPECTROMETRY</scope>
    <scope>ASSOCIATION TO ALLELE HLA-DRB3*01:01</scope>
</reference>
<reference key="46">
    <citation type="journal article" date="2009" name="FASEB J.">
        <title>Integrin alpha(v)beta(3) is a pleiotrophin receptor required for pleiotrophin-induced endothelial cell migration through receptor protein tyrosine phosphatase beta/zeta.</title>
        <authorList>
            <person name="Mikelis C."/>
            <person name="Sfaelou E."/>
            <person name="Koutsioumpa M."/>
            <person name="Kieffer N."/>
            <person name="Papadimitriou E."/>
        </authorList>
    </citation>
    <scope>INTERACTION WITH PTN</scope>
    <scope>PHOSPHORYLATION AT TYR-773</scope>
</reference>
<reference key="47">
    <citation type="journal article" date="2009" name="J. Biol. Chem.">
        <title>The direct binding of insulin-like growth factor-1 (IGF-1) to integrin alphavbeta3 is involved in IGF-1 signaling.</title>
        <authorList>
            <person name="Saegusa J."/>
            <person name="Yamaji S."/>
            <person name="Ieguchi K."/>
            <person name="Wu C.Y."/>
            <person name="Lam K.S."/>
            <person name="Liu F.T."/>
            <person name="Takada Y.K."/>
            <person name="Takada Y."/>
        </authorList>
    </citation>
    <scope>FUNCTION</scope>
    <scope>BINDING TO IGF1</scope>
    <scope>IDENTIFICATION IN A COMPLEX WITH IGF1 AND IGF1R</scope>
</reference>
<reference key="48">
    <citation type="journal article" date="2009" name="J. Proteome Res.">
        <title>Glycoproteomics analysis of human liver tissue by combination of multiple enzyme digestion and hydrazide chemistry.</title>
        <authorList>
            <person name="Chen R."/>
            <person name="Jiang X."/>
            <person name="Sun D."/>
            <person name="Han G."/>
            <person name="Wang F."/>
            <person name="Ye M."/>
            <person name="Wang L."/>
            <person name="Zou H."/>
        </authorList>
    </citation>
    <scope>GLYCOSYLATION [LARGE SCALE ANALYSIS] AT ASN-680</scope>
    <source>
        <tissue>Liver</tissue>
    </source>
</reference>
<reference key="49">
    <citation type="journal article" date="2010" name="J. Biol. Chem.">
        <title>Tyrosine phosphorylation of integrin beta3 regulates kindlin-2 binding and integrin activation.</title>
        <authorList>
            <person name="Bledzka K."/>
            <person name="Bialkowska K."/>
            <person name="Nie H."/>
            <person name="Qin J."/>
            <person name="Byzova T."/>
            <person name="Wu C."/>
            <person name="Plow E.F."/>
            <person name="Ma Y.Q."/>
        </authorList>
    </citation>
    <scope>INTERACTION WITH FERMT2</scope>
    <scope>SUBCELLULAR LOCATION</scope>
</reference>
<reference key="50">
    <citation type="journal article" date="2010" name="J. Biol. Chem.">
        <title>Direct binding of the EGF-like domain of neuregulin-1 to integrins ({alpha}v{beta}3 and {alpha}6{beta}4) is involved in neuregulin-1/ErbB signaling.</title>
        <authorList>
            <person name="Ieguchi K."/>
            <person name="Fujita M."/>
            <person name="Ma Z."/>
            <person name="Davari P."/>
            <person name="Taniguchi Y."/>
            <person name="Sekiguchi K."/>
            <person name="Wang B."/>
            <person name="Takada Y.K."/>
            <person name="Takada Y."/>
        </authorList>
    </citation>
    <scope>FUNCTION</scope>
    <scope>BINDING TO NRG1</scope>
    <scope>IDENTIFICATION IN A COMPLEX WITH NRG1 AND ERBB3</scope>
</reference>
<reference key="51">
    <citation type="journal article" date="2012" name="J. Bone Miner. Res.">
        <title>DICAM inhibits osteoclast differentiation through attenuation of the integrin alphaVbeta3 pathway.</title>
        <authorList>
            <person name="Jung Y.K."/>
            <person name="Han S.W."/>
            <person name="Kim G.W."/>
            <person name="Jeong J.H."/>
            <person name="Kim H.J."/>
            <person name="Choi J.Y."/>
        </authorList>
    </citation>
    <scope>INTERACTION WITH MXRA8</scope>
</reference>
<reference key="52">
    <citation type="journal article" date="2012" name="J. Immunol.">
        <title>Integrins alphavbeta3 and alpha4beta1 act as coreceptors for fractalkine, and the integrin-binding defective mutant of fractalkine is an antagonist of CX3CR1.</title>
        <authorList>
            <person name="Fujita M."/>
            <person name="Takada Y.K."/>
            <person name="Takada Y."/>
        </authorList>
    </citation>
    <scope>FUNCTION</scope>
    <scope>BINDING TO CX3CL1</scope>
    <scope>IDENTIFICATION IN A COMPLEX WITH CX3CR1 AND CX3CL1</scope>
    <scope>CX3CL1-BINDING REGION</scope>
</reference>
<reference key="53">
    <citation type="journal article" date="2013" name="J. Gen. Virol.">
        <title>Integrins modulate the infection efficiency of West Nile virus into cells.</title>
        <authorList>
            <person name="Schmidt K."/>
            <person name="Keller M."/>
            <person name="Bader B.L."/>
            <person name="Korytar T."/>
            <person name="Finke S."/>
            <person name="Ziegler U."/>
            <person name="Groschup M.H."/>
        </authorList>
    </citation>
    <scope>FUNCTION (MICROBIAL INFECTION)</scope>
    <scope>INTERACTION WITH WEST NILE VIRUS ENVELOPE PROTEIN E</scope>
</reference>
<reference key="54">
    <citation type="journal article" date="2014" name="J. Virol.">
        <title>Roles of the putative integrin-binding motif of the human metapneumovirus fusion (f) protein in cell-cell fusion, viral infectivity, and pathogenesis.</title>
        <authorList>
            <person name="Wei Y."/>
            <person name="Zhang Y."/>
            <person name="Cai H."/>
            <person name="Mirza A.M."/>
            <person name="Iorio R.M."/>
            <person name="Peeples M.E."/>
            <person name="Niewiesk S."/>
            <person name="Li J."/>
        </authorList>
    </citation>
    <scope>FUNCTION (MICROBIAL INFECTION)</scope>
    <scope>INTERACTION WITH HUMAN METAPNEUMOVIRUS FUSION PROTEIN</scope>
</reference>
<reference key="55">
    <citation type="journal article" date="2014" name="PLoS ONE">
        <title>The chemokine fractalkine can activate integrins without CX3CR1 through direct binding to a ligand-binding site distinct from the classical RGD-binding site.</title>
        <authorList>
            <person name="Fujita M."/>
            <person name="Takada Y.K."/>
            <person name="Takada Y."/>
        </authorList>
    </citation>
    <scope>BINDING TO CX3CL1</scope>
    <scope>CX3CL1-BINDING REGION</scope>
</reference>
<reference key="56">
    <citation type="journal article" date="2015" name="J. Biol. Chem.">
        <title>Proinflammatory secreted phospholipase A2 type IIA (sPLA-IIA) induces integrin activation through direct binding to a newly identified binding site (site 2) in integrins alphavbeta3, alpha4beta1, and alpha5beta1.</title>
        <authorList>
            <person name="Fujita M."/>
            <person name="Zhu K."/>
            <person name="Fujita C.K."/>
            <person name="Zhao M."/>
            <person name="Lam K.S."/>
            <person name="Kurth M.J."/>
            <person name="Takada Y.K."/>
            <person name="Takada Y."/>
        </authorList>
    </citation>
    <scope>FUNCTION</scope>
</reference>
<reference key="57">
    <citation type="journal article" date="2017" name="Biochem. J.">
        <title>The CD9, CD81, and CD151 EC2 domains bind to the classical RGD-binding site of integrin alphavbeta3.</title>
        <authorList>
            <person name="Yu J."/>
            <person name="Lee C.Y."/>
            <person name="Changou C.A."/>
            <person name="Cedano-Prieto D.M."/>
            <person name="Takada Y.K."/>
            <person name="Takada Y."/>
        </authorList>
    </citation>
    <scope>INTERACTION WITH CD9; CD81 AND CD151</scope>
</reference>
<reference key="58">
    <citation type="journal article" date="2017" name="Biosci. Rep.">
        <title>The integrin-binding defective FGF2 mutants potently suppress FGF2 signalling and angiogenesis.</title>
        <authorList>
            <person name="Mori S."/>
            <person name="Hatori N."/>
            <person name="Kawaguchi N."/>
            <person name="Hamada Y."/>
            <person name="Shih T.C."/>
            <person name="Wu C.Y."/>
            <person name="Lam K.S."/>
            <person name="Matsuura N."/>
            <person name="Yamamoto H."/>
            <person name="Takada Y.K."/>
            <person name="Takada Y."/>
        </authorList>
    </citation>
    <scope>FUNCTION</scope>
    <scope>INTERACTION WITH FGF2</scope>
</reference>
<reference key="59">
    <citation type="journal article" date="2017" name="J. Biol. Chem.">
        <title>Direct binding to integrins and loss of disulfide linkage in interleukin-1beta (IL-1beta) are involved in the agonistic action of IL-1beta.</title>
        <authorList>
            <person name="Takada Y.K."/>
            <person name="Yu J."/>
            <person name="Fujita M."/>
            <person name="Saegusa J."/>
            <person name="Wu C.Y."/>
            <person name="Takada Y."/>
        </authorList>
    </citation>
    <scope>FUNCTION</scope>
    <scope>INTERACTION WITH IL1B</scope>
</reference>
<reference key="60">
    <citation type="journal article" date="2017" name="PLoS ONE">
        <title>Direct integrin binding to insulin-like growth factor-2 through the C-domain is required for insulin-like growth factor receptor type 1 (IGF1R) signaling.</title>
        <authorList>
            <person name="Cedano Prieto D.M."/>
            <person name="Cheng Y."/>
            <person name="Chang C.C."/>
            <person name="Yu J."/>
            <person name="Takada Y.K."/>
            <person name="Takada Y."/>
        </authorList>
    </citation>
    <scope>FUNCTION</scope>
    <scope>INTERACTION WITH IGF2</scope>
</reference>
<reference key="61">
    <citation type="journal article" date="2018" name="Biochem. J.">
        <title>Stromal cell-derived factor-1 (CXCL12) activates integrins by direct binding to an allosteric ligand-binding site (site 2) of integrins without CXCR4.</title>
        <authorList>
            <person name="Fujita M."/>
            <person name="Davari P."/>
            <person name="Takada Y.K."/>
            <person name="Takada Y."/>
        </authorList>
    </citation>
    <scope>INTERACTION WITH CXCL12</scope>
</reference>
<reference key="62">
    <citation type="journal article" date="2019" name="J. Immunol.">
        <title>Integrin Binding to the Trimeric Interface of CD40L Plays a Critical Role in CD40/CD40L Signaling.</title>
        <authorList>
            <person name="Takada Y.K."/>
            <person name="Yu J."/>
            <person name="Shimoda M."/>
            <person name="Takada Y."/>
        </authorList>
    </citation>
    <scope>FUNCTION</scope>
</reference>
<reference key="63">
    <citation type="journal article" date="2021" name="Sci. Signal.">
        <title>Short linear motif candidates in the cell entry system used by SARS-CoV-2 and their potential therapeutic implications.</title>
        <authorList>
            <person name="Meszaros B."/>
            <person name="Samano-Sanchez H."/>
            <person name="Alvarado-Valverde J."/>
            <person name="Calyseva J."/>
            <person name="Martinez-Perez E."/>
            <person name="Alves R."/>
            <person name="Shields D.C."/>
            <person name="Kumar M."/>
            <person name="Rippmann F."/>
            <person name="Chemes L.B."/>
            <person name="Gibson T.J."/>
        </authorList>
    </citation>
    <scope>MOTIF</scope>
</reference>
<reference key="64">
    <citation type="journal article" date="2021" name="Sci. Signal.">
        <title>Cytoplasmic short linear motifs in ACE2 and integrin beta3 link SARS-CoV-2 host cell receptors to mediators of endocytosis and autophagy.</title>
        <authorList>
            <person name="Kliche J."/>
            <person name="Kuss H."/>
            <person name="Ali M."/>
            <person name="Ivarsson Y."/>
        </authorList>
    </citation>
    <scope>MOTIF</scope>
</reference>
<reference key="65">
    <citation type="journal article" date="2022" name="J. Cell Biol.">
        <title>PEAK1 Y635 phosphorylation regulates cell migration through association with Tensin3 and integrins.</title>
        <authorList>
            <person name="Zuidema A."/>
            <person name="Atherton P."/>
            <person name="Kreft M."/>
            <person name="Hoekman L."/>
            <person name="Bleijerveld O.B."/>
            <person name="Nagaraj N."/>
            <person name="Chen N."/>
            <person name="Faessler R."/>
            <person name="Sonnenberg A."/>
        </authorList>
    </citation>
    <scope>INTERACTION WITH TNS3</scope>
    <scope>SUBCELLULAR LOCATION</scope>
    <scope>MUTAGENESIS OF TYR-773 AND TYR-785</scope>
</reference>
<reference key="66">
    <citation type="journal article" date="2023" name="Life. Sci Alliance">
        <title>The C-type lectin domain of CD62P (P-selectin) functions as an integrin ligand.</title>
        <authorList>
            <person name="Takada Y.K."/>
            <person name="Simon S.I."/>
            <person name="Takada Y."/>
        </authorList>
    </citation>
    <scope>INTERACTION WITH SELP</scope>
</reference>
<reference key="67">
    <citation type="journal article" date="2024" name="Metabolism">
        <title>Tm4sf19 deficiency inhibits osteoclast multinucleation and prevents bone loss.</title>
        <authorList>
            <person name="Park S."/>
            <person name="Heo J.S."/>
            <person name="Mizuno S."/>
            <person name="Kim M."/>
            <person name="An H."/>
            <person name="Hong E."/>
            <person name="Kang M.G."/>
            <person name="Kim J."/>
            <person name="Yun R."/>
            <person name="Park H."/>
            <person name="Noh E.H."/>
            <person name="Lee M.J."/>
            <person name="Yoon K."/>
            <person name="Kim P."/>
            <person name="Son M."/>
            <person name="Pang K."/>
            <person name="Lee J."/>
            <person name="Park J."/>
            <person name="Ooshima A."/>
            <person name="Kim T.J."/>
            <person name="Park J.Y."/>
            <person name="Yang K.M."/>
            <person name="Myung S.J."/>
            <person name="Bae H."/>
            <person name="Lee K.M."/>
            <person name="Letterio J."/>
            <person name="Park S.H."/>
            <person name="Takahashi S."/>
            <person name="Kim S.J."/>
        </authorList>
    </citation>
    <scope>INTERACTION WITH TM4SF19</scope>
</reference>
<reference evidence="92" key="68">
    <citation type="journal article" date="2001" name="Science">
        <title>Crystal structure of the extracellular segment of integrin alpha Vbeta3.</title>
        <authorList>
            <person name="Xiong J.P."/>
            <person name="Stehle T."/>
            <person name="Diefenbach B."/>
            <person name="Zhang R."/>
            <person name="Dunker R."/>
            <person name="Scott D.L."/>
            <person name="Joachimiak A."/>
            <person name="Goodman S.L."/>
            <person name="Arnaout M.A."/>
        </authorList>
    </citation>
    <scope>X-RAY CRYSTALLOGRAPHY (3.10 ANGSTROMS) OF 27-718 IN COMPLEX WITH CALCIUM</scope>
    <scope>GLYCOSYLATION AT ASN-346; ASN-397; ASN-585 AND ASN-680</scope>
    <scope>DISULFIDE BONDS</scope>
</reference>
<reference evidence="93" key="69">
    <citation type="journal article" date="2004" name="Nature">
        <title>Structural basis for allostery in integrins and binding to fibrinogen-mimetic therapeutics.</title>
        <authorList>
            <person name="Xiao T."/>
            <person name="Takagi J."/>
            <person name="Coller B.S."/>
            <person name="Wang J.H."/>
            <person name="Springer T.A."/>
        </authorList>
    </citation>
    <scope>X-RAY CRYSTALLOGRAPHY (2.90 ANGSTROMS) OF 27-466 IN COMPLEX WITH ITGA2B; CALCIUM AND MAGNESIUM</scope>
    <scope>DOMAIN</scope>
    <scope>GLYCOSYLATION AT ASN-125; ASN-346 AND ASN-397</scope>
    <scope>DISULFIDE BONDS</scope>
</reference>
<reference evidence="94" key="70">
    <citation type="journal article" date="2007" name="J. Mol. Biol.">
        <title>Crystallographic structure of the human leukocyte antigen DRA, DRB3*0101: models of a directional alloimmune response and autoimmunity.</title>
        <authorList>
            <person name="Parry C.S."/>
            <person name="Gorski J."/>
            <person name="Stern L.J."/>
        </authorList>
    </citation>
    <scope>X-RAY CRYSTALLOGRAPHY (2.25 ANGSTROMS) OF 50-61 (ALLOANTIGEN HPA-1A) IN COMPLEX WITH HLA-DRA/HLA-DRB3 HETERODIMER</scope>
</reference>
<reference evidence="95 96" key="71">
    <citation type="journal article" date="2008" name="Mol. Cell">
        <title>Structure of a complete integrin ectodomain in a physiologic resting state and activation and deactivation by applied forces.</title>
        <authorList>
            <person name="Zhu J."/>
            <person name="Luo B.H."/>
            <person name="Xiao T."/>
            <person name="Zhang C."/>
            <person name="Nishida N."/>
            <person name="Springer T.A."/>
        </authorList>
    </citation>
    <scope>X-RAY CRYSTALLOGRAPHY (2.55 ANGSTROMS) OF 27-716 IN COMPLEX WITH ITGA2B; CALCIUM AND MANGANESE</scope>
    <scope>DOMAIN</scope>
    <scope>GLYCOSYLATION AT ASN-125; ASN-346; ASN-397; ASN-478 AND ASN-585</scope>
    <scope>DISULFIDE BONDS</scope>
</reference>
<reference evidence="97" key="72">
    <citation type="journal article" date="2009" name="J. Cell Biol.">
        <title>Crystal structure of the complete integrin alphaVbeta3 ectodomain plus an alpha/beta transmembrane fragment.</title>
        <authorList>
            <person name="Xiong J.P."/>
            <person name="Mahalingham B."/>
            <person name="Alonso J.L."/>
            <person name="Borrelli L.A."/>
            <person name="Rui X."/>
            <person name="Anand S."/>
            <person name="Hyman B.T."/>
            <person name="Rysiok T."/>
            <person name="Mueller-Pompalla D."/>
            <person name="Goodman S.L."/>
            <person name="Arnaout M.A."/>
        </authorList>
    </citation>
    <scope>X-RAY CRYSTALLOGRAPHY (2.90 ANGSTROMS) OF 27-721 IN COMPLEX WITH ITGAV AND CALCIUM</scope>
    <scope>GLYCOSYLATION AT ASN-125; ASN-346; ASN-397; ASN-478 AND ASN-585</scope>
    <scope>DISULFIDE BONDS</scope>
    <scope>MUTAGENESIS OF 502-GLU--GLN-508; ARG-659 AND 698-ASP--LYS-702</scope>
</reference>
<reference key="73">
    <citation type="journal article" date="1994" name="Thromb. Haemost.">
        <title>Inherited diseases of platelet glycoproteins: considerations for rapid molecular characterization.</title>
        <authorList>
            <person name="Bray P.F."/>
        </authorList>
    </citation>
    <scope>REVIEW ON GT2 VARIANTS</scope>
</reference>
<reference key="74">
    <citation type="journal article" date="1989" name="J. Clin. Invest.">
        <title>The human platelet alloantigens, PlA1 and PlA2, are associated with a leucine33/proline33 amino acid polymorphism in membrane glycoprotein IIIa, and are distinguishable by DNA typing.</title>
        <authorList>
            <person name="Newman P.J."/>
            <person name="Derbes R.S."/>
            <person name="Aster R.H."/>
        </authorList>
    </citation>
    <scope>VARIANT HPA-1B PRO-59</scope>
    <scope>DESCRIPTION OF ALLOANTIGEN SYSTEM PL(A)</scope>
</reference>
<reference key="75">
    <citation type="journal article" date="1992" name="J. Clin. Invest.">
        <title>An amino acid polymorphism within the RGD binding domain of platelet membrane glycoprotein IIIa is responsible for the formation of the Pena/Penb alloantigen system.</title>
        <authorList>
            <person name="Wang R."/>
            <person name="Furihata K."/>
            <person name="McFarland J.G."/>
            <person name="Friedman K."/>
            <person name="Aster R.H."/>
            <person name="Newman P.J."/>
        </authorList>
    </citation>
    <scope>VARIANT HPA-4B GLN-169</scope>
    <scope>DESCRIPTION OF ALLOANTIGEN SYSTEM PEN</scope>
</reference>
<reference key="76">
    <citation type="journal article" date="1993" name="Blood">
        <title>Single point mutation in human glycoprotein IIIa is associated with a new platelet-specific alloantigen (Mo) involved in neonatal alloimmune thrombocytopenia.</title>
        <authorList>
            <person name="Kuijpers R.W.A.M."/>
            <person name="Simsek S."/>
            <person name="Faber N.M."/>
            <person name="Goldschmeding R."/>
            <person name="van Wermerkerken R.K.V."/>
            <person name="von Dem Borne A.E.G.K."/>
        </authorList>
    </citation>
    <scope>VARIANT MO(+) ALA-433</scope>
</reference>
<reference key="77">
    <citation type="journal article" date="1993" name="Blood">
        <title>Amino acid 489 is encoded by a mutational 'hot spot' on the beta 3 integrin chain: the CA/TU human platelet alloantigen system.</title>
        <authorList>
            <person name="Wang R."/>
            <person name="McFarland J.G."/>
            <person name="Kekomaki R."/>
            <person name="Newman P.J."/>
        </authorList>
    </citation>
    <scope>VARIANT CA(+)/TU(+) GLN-515</scope>
    <scope>DESCRIPTION OF ALLOANTIGEN SYSTEM CA/TU</scope>
</reference>
<reference key="78">
    <citation type="journal article" date="1994" name="J. Biol. Chem.">
        <title>A point mutation leads to an unpaired cysteine residue and a molecular weight polymorphism of a functional platelet beta 3 integrin subunit. The Sra alloantigen system of GPIIIa.</title>
        <authorList>
            <person name="Santoso S."/>
            <person name="Kalb R."/>
            <person name="Kroll H."/>
            <person name="Walka M."/>
            <person name="Kiefel V."/>
            <person name="Mueller-Eckhardt C."/>
            <person name="Newman P.J."/>
        </authorList>
    </citation>
    <scope>VARIANT SR(A) CYS-662</scope>
    <scope>DESCRIPTION OF ALLOANTIGEN SYSTEM SR(A)</scope>
</reference>
<reference key="79">
    <citation type="journal article" date="1990" name="Science">
        <title>A beta 3 integrin mutation abolishes ligand binding and alters divalent cation-dependent conformation.</title>
        <authorList>
            <person name="Loftus J.C."/>
            <person name="O'Toole T.E."/>
            <person name="Plow E.F."/>
            <person name="Glass A."/>
            <person name="Frelinger A.L. III"/>
            <person name="Ginsberg M.H."/>
        </authorList>
    </citation>
    <scope>VARIANT GT2 TYR-145</scope>
</reference>
<reference key="80">
    <citation type="journal article" date="1992" name="J. Biol. Chem.">
        <title>A spontaneous mutation of integrin alpha IIb beta 3 (platelet glycoprotein IIb-IIIa) helps define a ligand binding site.</title>
        <authorList>
            <person name="Bajt M.L."/>
            <person name="Ginsberg M.H."/>
            <person name="Frelinger A.L. III"/>
            <person name="Berndt M.C."/>
            <person name="Loftus J.C."/>
        </authorList>
    </citation>
    <scope>VARIANT GT2 GLN-240</scope>
</reference>
<reference key="81">
    <citation type="journal article" date="1992" name="J. Clin. Invest.">
        <title>A new variant of Glanzmann's thrombasthenia (Strasbourg I). Platelets with functionally defective glycoprotein IIb-IIIa complexes and a glycoprotein IIIa 214Arg--&gt;214Trp mutation.</title>
        <authorList>
            <person name="Lanza F."/>
            <person name="Stierle A."/>
            <person name="Fournier D."/>
            <person name="Morales M."/>
            <person name="Andre G."/>
            <person name="Nurden A.T."/>
            <person name="Cazenave J.-P."/>
        </authorList>
    </citation>
    <scope>VARIANT GT2 TRP-240</scope>
</reference>
<reference key="82">
    <citation type="journal article" date="1992" name="Proc. Natl. Acad. Sci. U.S.A.">
        <title>Ser-752--&gt;Pro mutation in the cytoplasmic domain of integrin beta 3 subunit and defective activation of platelet integrin alpha IIb beta 3 (glycoprotein IIb-IIIa) in a variant of Glanzmann thrombasthenia.</title>
        <authorList>
            <person name="Chen Y.-P."/>
            <person name="Djaffar I."/>
            <person name="Pidard D."/>
            <person name="Steiner B."/>
            <person name="Cieutat A.-M."/>
            <person name="Caen J.P."/>
            <person name="Rosa J.-P."/>
        </authorList>
    </citation>
    <scope>VARIANT GT2 PRO-778</scope>
</reference>
<reference key="83">
    <citation type="journal article" date="1996" name="Blood">
        <title>A Cys374Tyr homozygous mutation of platelet glycoprotein IIIa (beta 3) in a Chinese patient with Glanzmann's thrombasthenia.</title>
        <authorList>
            <person name="Grimaldi C.M."/>
            <person name="Chen F."/>
            <person name="Scudder L.E."/>
            <person name="Coller B.S."/>
            <person name="French D.L."/>
        </authorList>
    </citation>
    <scope>VARIANT GT2 TYR-400</scope>
</reference>
<reference key="84">
    <citation type="journal article" date="1997" name="Blood">
        <title>A Leu117--&gt;Trp mutation within the RGD-peptide cross-linking region of beta3 results in Glanzmann thrombasthenia by preventing alphaIIb beta3 export to the platelet surface.</title>
        <authorList>
            <person name="Basani R.B."/>
            <person name="Brown D.L."/>
            <person name="Vilaire G."/>
            <person name="Bennett J.S."/>
            <person name="Poncz M."/>
        </authorList>
    </citation>
    <scope>VARIANT GT2 TRP-143</scope>
</reference>
<reference key="85">
    <citation type="journal article" date="1997" name="Blood Cells Mol. Dis.">
        <title>Hematologically important mutations: Glanzmann thrombasthenia.</title>
        <authorList>
            <person name="French D.L."/>
            <person name="Coller B.S."/>
        </authorList>
    </citation>
    <scope>VARIANTS GT2 ASN-145; GLN-242 AND PRO-288</scope>
</reference>
<reference key="86">
    <citation type="journal article" date="1998" name="Biochem. Biophys. Res. Commun.">
        <title>Three novel integrin beta3 subunit missense mutations (H280P, C560F, and G579S) in thrombasthenia, including one (H280P) prevalent in Japanese patients.</title>
        <authorList>
            <person name="Ambo H."/>
            <person name="Kamata T."/>
            <person name="Handa M."/>
            <person name="Taki M."/>
            <person name="Kuwajima M."/>
            <person name="Kawai Y."/>
            <person name="Oda A."/>
            <person name="Murata M."/>
            <person name="Takada Y."/>
            <person name="Watanabe K."/>
            <person name="Ikeda Y."/>
        </authorList>
    </citation>
    <scope>VARIANTS GT2 PRO-306; PHE-586; SER-598 AND SER-605</scope>
</reference>
<reference key="87">
    <citation type="journal article" date="1998" name="Thromb. Haemost.">
        <title>A Ser162--&gt;Leu mutation within glycoprotein (GP) IIIa (integrin beta3) results in an unstable alphaIIbbeta3 complex that retains partial function in a novel form of type II Glanzmann thrombasthenia.</title>
        <authorList>
            <person name="Jackson D.E."/>
            <person name="White M.M."/>
            <person name="Jennings L.K."/>
            <person name="Newman P.J."/>
        </authorList>
    </citation>
    <scope>VARIANT GT2 LEU-188</scope>
</reference>
<reference key="88">
    <citation type="journal article" date="1999" name="Br. J. Haematol.">
        <title>Homozygous Cys542--&gt;Arg substitution in GPIIIa in a Swiss patient with type I Glanzmann's thrombasthenia.</title>
        <authorList>
            <person name="Ruan J."/>
            <person name="Schmugge M."/>
            <person name="Clemetson K.J."/>
            <person name="Cazes E."/>
            <person name="Combrie R."/>
            <person name="Bourre F."/>
            <person name="Nurden A.T."/>
        </authorList>
    </citation>
    <scope>VARIANT GT2 ARG-568</scope>
</reference>
<reference key="89">
    <citation type="journal article" date="1999" name="Nat. Genet.">
        <title>Characterization of single-nucleotide polymorphisms in coding regions of human genes.</title>
        <authorList>
            <person name="Cargill M."/>
            <person name="Altshuler D."/>
            <person name="Ireland J."/>
            <person name="Sklar P."/>
            <person name="Ardlie K."/>
            <person name="Patil N."/>
            <person name="Shaw N."/>
            <person name="Lane C.R."/>
            <person name="Lim E.P."/>
            <person name="Kalyanaraman N."/>
            <person name="Nemesh J."/>
            <person name="Ziaugra L."/>
            <person name="Friedland L."/>
            <person name="Rolfe A."/>
            <person name="Warrington J."/>
            <person name="Lipshutz R."/>
            <person name="Daley G.Q."/>
            <person name="Lander E.S."/>
        </authorList>
    </citation>
    <scope>VARIANTS PRO-59; GLN-169 AND ILE-453</scope>
</reference>
<reference key="90">
    <citation type="journal article" date="1999" name="Nat. Genet.">
        <authorList>
            <person name="Cargill M."/>
            <person name="Altshuler D."/>
            <person name="Ireland J."/>
            <person name="Sklar P."/>
            <person name="Ardlie K."/>
            <person name="Patil N."/>
            <person name="Shaw N."/>
            <person name="Lane C.R."/>
            <person name="Lim E.P."/>
            <person name="Kalyanaraman N."/>
            <person name="Nemesh J."/>
            <person name="Ziaugra L."/>
            <person name="Friedland L."/>
            <person name="Rolfe A."/>
            <person name="Warrington J."/>
            <person name="Lipshutz R."/>
            <person name="Daley G.Q."/>
            <person name="Lander E.S."/>
        </authorList>
    </citation>
    <scope>ERRATUM OF PUBMED:10391209</scope>
</reference>
<reference key="91">
    <citation type="journal article" date="2001" name="Blood">
        <title>A point mutation in the cysteine-rich domain of glycoprotein (GP) IIIa results in the expression of a GPIIb-IIIa (alphaIIbbeta3) integrin receptor locked in a high-affinity state and a Glanzmann thrombasthenia-like phenotype.</title>
        <authorList>
            <person name="Ruiz C."/>
            <person name="Liu C.-Y."/>
            <person name="Sun Q.-H."/>
            <person name="Sigaud-Fiks M."/>
            <person name="Fressinaud E."/>
            <person name="Muller J.-Y."/>
            <person name="Nurden P."/>
            <person name="Nurden A.T."/>
            <person name="Newman P.J."/>
            <person name="Valentin N."/>
        </authorList>
    </citation>
    <scope>VARIANT GT2 ARG-586</scope>
    <scope>CHARACTERIZATION OF VARIANT GT2 ARG-586</scope>
</reference>
<reference key="92">
    <citation type="journal article" date="2002" name="Blood">
        <title>A new platelet polymorphism Duv(a+), localized within the RGD binding domain of glycoprotein IIIa, is associated with neonatal thrombocytopenia.</title>
        <authorList>
            <person name="Jallu V."/>
            <person name="Meunier M."/>
            <person name="Brement M."/>
            <person name="Kaplan C."/>
        </authorList>
    </citation>
    <scope>VARIANT ILE-166</scope>
    <scope>CHARACTERIZATION OF VARIANT ILE-166</scope>
</reference>
<reference key="93">
    <citation type="journal article" date="2002" name="Platelets">
        <title>A novel 196Leu to Pro substitution in the beta3 subunit of the alphaIIbbeta3 integrin in a patient with a variant form of Glanzmann thrombasthenia.</title>
        <authorList>
            <person name="Nurden A.T."/>
            <person name="Ruan J."/>
            <person name="Pasquet J.-M."/>
            <person name="Gauthier B."/>
            <person name="Combrie R."/>
            <person name="Kunicki T."/>
            <person name="Nurden P."/>
        </authorList>
    </citation>
    <scope>VARIANT GT2 PRO-222</scope>
</reference>
<reference key="94">
    <citation type="journal article" date="2002" name="Thromb. Haemost.">
        <title>Glanzmann's thrombasthenia: identification of 19 new mutations in 30 patients.</title>
        <authorList>
            <person name="D'Andrea G."/>
            <person name="Colaizzo D."/>
            <person name="Vecchione G."/>
            <person name="Grandone E."/>
            <person name="Di Minno G."/>
            <person name="Margaglione M."/>
        </authorList>
    </citation>
    <scope>VARIANTS GT2 TRP-119; VAL-243 AND ARG-601</scope>
</reference>
<reference key="95">
    <citation type="journal article" date="2002" name="Thromb. Haemost.">
        <title>Two new beta3 integrin mutations in Indian patients with Glanzmann thrombasthenia: localization of mutations affecting cysteine residues in integrin beta3.</title>
        <authorList>
            <person name="Nair S."/>
            <person name="Li J."/>
            <person name="Mitchell W.B."/>
            <person name="Mohanty D."/>
            <person name="Coller B.S."/>
            <person name="French D.L."/>
        </authorList>
    </citation>
    <scope>VARIANT GT2 TYR-532</scope>
</reference>
<reference key="96">
    <citation type="journal article" date="2004" name="Thromb. Haemost.">
        <title>A variant thrombasthenic phenotype associated with compound heterozygosity of integrin beta3-subunit: (Met124Val)beta3 alters the subunit dimerization rendering a decreased number of constitutive active alphaIIbbeta3 receptors.</title>
        <authorList>
            <person name="Gonzalez-Manchon C."/>
            <person name="Butta N."/>
            <person name="Larrucea S."/>
            <person name="Arias-Salgado E.G."/>
            <person name="Alonso S."/>
            <person name="Lopez A."/>
            <person name="Parrilla R."/>
        </authorList>
    </citation>
    <scope>VARIANT GT2 VAL-150</scope>
    <scope>CHARACTERIZATION OF VARIANT GT2 VAL-150</scope>
</reference>
<reference key="97">
    <citation type="journal article" date="2005" name="J. Thromb. Haemost.">
        <title>Double heterozygosity for a novel missense mutation of Ile304 to Asn in addition to the missense mutation His280 to Pro in the integrin beta3 gene as a cause of the absence of platelet alphaIIbbeta3 in Glanzmann's thrombasthenia.</title>
        <authorList>
            <person name="Tanaka S."/>
            <person name="Hayashi T."/>
            <person name="Yoshimura K."/>
            <person name="Nakayama M."/>
            <person name="Fujita T."/>
            <person name="Amano T."/>
            <person name="Tani Y."/>
        </authorList>
    </citation>
    <scope>VARIANTS GT2 PRO-306 AND ASN-330</scope>
    <scope>CHARACTERIZATION OF VARIANT GT2 ASN-330</scope>
</reference>
<reference key="98">
    <citation type="journal article" date="2005" name="J. Thromb. Haemost.">
        <title>Mutations in GPIIIa molecule as a cause for Glanzmann thrombasthenia in Indian patients.</title>
        <authorList>
            <person name="Nair S."/>
            <person name="Ghosh K."/>
            <person name="Shetty S."/>
            <person name="Mohanty D."/>
        </authorList>
    </citation>
    <scope>VARIANTS GT2 CYS-141 AND LEU-321</scope>
</reference>
<reference key="99">
    <citation type="journal article" date="2008" name="Blood">
        <title>A nonsynonymous SNP in the ITGB3 gene disrupts the conserved membrane-proximal cytoplasmic salt bridge in the alphaIIbbeta3 integrin and cosegregates dominantly with abnormal proplatelet formation and macrothrombocytopenia.</title>
        <authorList>
            <person name="Ghevaert C."/>
            <person name="Salsmann A."/>
            <person name="Watkins N.A."/>
            <person name="Schaffner-Reckinger E."/>
            <person name="Rankin A."/>
            <person name="Garner S.F."/>
            <person name="Stephens J."/>
            <person name="Smith G.A."/>
            <person name="Debili N."/>
            <person name="Vainchenker W."/>
            <person name="de Groot P.G."/>
            <person name="Huntington J.A."/>
            <person name="Laffan M."/>
            <person name="Kieffer N."/>
            <person name="Ouwehand W.H."/>
        </authorList>
    </citation>
    <scope>VARIANT BDPLT24 HIS-749</scope>
    <scope>CHARACTERIZATION OF VARIANT BDPLT24 HIS-749</scope>
</reference>
<reference key="100">
    <citation type="journal article" date="2010" name="Hum. Mutat.">
        <title>AlphaIIbbeta3 integrin: new allelic variants in Glanzmann thrombasthenia, effects on ITGA2B and ITGB3 mRNA splicing, expression, and structure-function.</title>
        <authorList>
            <person name="Jallu V."/>
            <person name="Dusseaux M."/>
            <person name="Panzer S."/>
            <person name="Torchet M.F."/>
            <person name="Hezard N."/>
            <person name="Goudemand J."/>
            <person name="de Brevern A.G."/>
            <person name="Kaplan C."/>
        </authorList>
    </citation>
    <scope>VARIANTS GT2 TYR-64; ARG-144; PRO-222; ASP-247 AND MET-279</scope>
    <scope>CHARACTERIZATION OF VARIANTS TYR-64; PRO-222; ASP-247 AND MET-279</scope>
    <scope>SUBCELLULAR LOCATION</scope>
</reference>
<reference key="101">
    <citation type="journal article" date="2017" name="Blood Coagul. Fibrinolysis">
        <title>Molecular characterization of Glanzmann's thrombasthenia in Iran: identification of three novel mutations.</title>
        <authorList>
            <person name="Kazemi A."/>
            <person name="Abolghasemi H."/>
            <person name="Kazemzadeh S."/>
            <person name="Vahidi R."/>
            <person name="Faranoush M."/>
            <person name="Farsinejad A."/>
            <person name="Ala F."/>
        </authorList>
    </citation>
    <scope>VARIANT GT2 GLN-240</scope>
    <scope>VARIANT PRO-59</scope>
</reference>
<reference key="102">
    <citation type="journal article" date="2018" name="Ann. Hematol.">
        <title>A novel heterozygous ITGB3 p.T720del inducing spontaneous activation of integrin alphaIIbbeta3 in autosomal dominant macrothrombocytopenia with aggregation dysfunction.</title>
        <authorList>
            <person name="Miyashita N."/>
            <person name="Onozawa M."/>
            <person name="Hayasaka K."/>
            <person name="Yamada T."/>
            <person name="Migita O."/>
            <person name="Hata K."/>
            <person name="Okada K."/>
            <person name="Goto H."/>
            <person name="Nakagawa M."/>
            <person name="Hashimoto D."/>
            <person name="Kahata K."/>
            <person name="Kondo T."/>
            <person name="Kunishima S."/>
            <person name="Teshima T."/>
        </authorList>
    </citation>
    <scope>VARIANT BDPLT24 THR-746 DEL</scope>
    <scope>CHARACTERIZATION OF VARIANTS BDPLT24 THR-746 DEL AND HIS-749</scope>
</reference>
<accession>P05106</accession>
<accession>A0PJW2</accession>
<accession>D3DXJ8</accession>
<accession>O15495</accession>
<accession>Q12806</accession>
<accession>Q13413</accession>
<accession>Q14648</accession>
<accession>Q16499</accession>
<protein>
    <recommendedName>
        <fullName evidence="88">Integrin beta-3</fullName>
    </recommendedName>
    <alternativeName>
        <fullName evidence="88">Platelet membrane glycoprotein IIIa</fullName>
        <shortName evidence="88">GPIIIa</shortName>
    </alternativeName>
    <cdAntigenName>CD61</cdAntigenName>
</protein>
<sequence length="788" mass="87058">MRARPRPRPLWATVLALGALAGVGVGGPNICTTRGVSSCQQCLAVSPMCAWCSDEALPLGSPRCDLKENLLKDNCAPESIEFPVSEARVLEDRPLSDKGSGDSSQVTQVSPQRIALRLRPDDSKNFSIQVRQVEDYPVDIYYLMDLSYSMKDDLWSIQNLGTKLATQMRKLTSNLRIGFGAFVDKPVSPYMYISPPEALENPCYDMKTTCLPMFGYKHVLTLTDQVTRFNEEVKKQSVSRNRDAPEGGFDAIMQATVCDEKIGWRNDASHLLVFTTDAKTHIALDGRLAGIVQPNDGQCHVGSDNHYSASTTMDYPSLGLMTEKLSQKNINLIFAVTENVVNLYQNYSELIPGTTVGVLSMDSSNVLQLIVDAYGKIRSKVELEVRDLPEELSLSFNATCLNNEVIPGLKSCMGLKIGDTVSFSIEAKVRGCPQEKEKSFTIKPVGFKDSLIVQVTFDCDCACQAQAEPNSHRCNNGNGTFECGVCRCGPGWLGSQCECSEEDYRPSQQDECSPREGQPVCSQRGECLCGQCVCHSSDFGKITGKYCECDDFSCVRYKGEMCSGHGQCSCGDCLCDSDWTGYYCNCTTRTDTCMSSNGLLCSGRGKCECGSCVCIQPGSYGDTCEKCPTCPDACTFKKECVECKKFDRGALHDENTCNRYCRDEIESVKELKDTGKDAVNCTYKNEDDCVVRFQYYEDSSGKSILYVVEEPECPKGPDILVVLLSVMGAILLIGLAALLIWKLLITIHDRKEFAKFEEERARAKWDTANNPLYKEATSTFTNITYRGT</sequence>
<feature type="signal peptide" evidence="3">
    <location>
        <begin position="1"/>
        <end position="26"/>
    </location>
</feature>
<feature type="chain" id="PRO_0000016344" description="Integrin beta-3">
    <location>
        <begin position="27"/>
        <end position="788"/>
    </location>
</feature>
<feature type="topological domain" description="Extracellular" evidence="3">
    <location>
        <begin position="27"/>
        <end position="718"/>
    </location>
</feature>
<feature type="transmembrane region" description="Helical" evidence="3">
    <location>
        <begin position="719"/>
        <end position="741"/>
    </location>
</feature>
<feature type="topological domain" description="Cytoplasmic" evidence="3">
    <location>
        <begin position="742"/>
        <end position="788"/>
    </location>
</feature>
<feature type="domain" description="PSI" evidence="3">
    <location>
        <begin position="30"/>
        <end position="76"/>
    </location>
</feature>
<feature type="domain" description="VWFA" evidence="25 42">
    <location>
        <begin position="135"/>
        <end position="377"/>
    </location>
</feature>
<feature type="domain" description="I-EGF 1" evidence="4 42">
    <location>
        <begin position="463"/>
        <end position="498"/>
    </location>
</feature>
<feature type="domain" description="I-EGF 2" evidence="4 42">
    <location>
        <begin position="499"/>
        <end position="548"/>
    </location>
</feature>
<feature type="domain" description="I-EGF 3" evidence="4 42">
    <location>
        <begin position="549"/>
        <end position="585"/>
    </location>
</feature>
<feature type="domain" description="I-EGF 4" evidence="4 42">
    <location>
        <begin position="586"/>
        <end position="625"/>
    </location>
</feature>
<feature type="region of interest" description="Involved in CX3CL1-, NRG1-, FGF1- and IGF1-binding" evidence="40 45 49 52">
    <location>
        <begin position="203"/>
        <end position="210"/>
    </location>
</feature>
<feature type="region of interest" description="CX3CL1-binding" evidence="56">
    <location>
        <begin position="293"/>
        <end position="313"/>
    </location>
</feature>
<feature type="short sequence motif" description="LIR" evidence="89 90">
    <location>
        <begin position="777"/>
        <end position="783"/>
    </location>
</feature>
<feature type="binding site" description="in MIDAS binding site" evidence="25 42 93 95 96">
    <location>
        <position position="147"/>
    </location>
    <ligand>
        <name>Mg(2+)</name>
        <dbReference type="ChEBI" id="CHEBI:18420"/>
    </ligand>
</feature>
<feature type="binding site" description="in ADMIDAS binding site" evidence="11 25 42 46 92 93 95 96 97">
    <location>
        <position position="149"/>
    </location>
    <ligand>
        <name>Ca(2+)</name>
        <dbReference type="ChEBI" id="CHEBI:29108"/>
        <label>1</label>
    </ligand>
</feature>
<feature type="binding site" description="in MIDAS binding site" evidence="25 42 93 96">
    <location>
        <position position="149"/>
    </location>
    <ligand>
        <name>Mg(2+)</name>
        <dbReference type="ChEBI" id="CHEBI:18420"/>
    </ligand>
</feature>
<feature type="binding site" description="in ADMIDAS binding site" evidence="11 25 42 46 92 93 95 96 97">
    <location>
        <position position="152"/>
    </location>
    <ligand>
        <name>Ca(2+)</name>
        <dbReference type="ChEBI" id="CHEBI:29108"/>
        <label>1</label>
    </ligand>
</feature>
<feature type="binding site" description="in ADMIDAS binding site" evidence="11 25 42 46 92 93 95 96 97">
    <location>
        <position position="153"/>
    </location>
    <ligand>
        <name>Ca(2+)</name>
        <dbReference type="ChEBI" id="CHEBI:29108"/>
        <label>1</label>
    </ligand>
</feature>
<feature type="binding site" description="in LIMBS binding site" evidence="25 42 93 95 96">
    <location>
        <position position="184"/>
    </location>
    <ligand>
        <name>Ca(2+)</name>
        <dbReference type="ChEBI" id="CHEBI:29108"/>
        <label>2</label>
    </ligand>
</feature>
<feature type="binding site" description="in LIMBS binding site" evidence="25 42 93 95 96">
    <location>
        <position position="241"/>
    </location>
    <ligand>
        <name>Ca(2+)</name>
        <dbReference type="ChEBI" id="CHEBI:29108"/>
        <label>2</label>
    </ligand>
</feature>
<feature type="binding site" description="in LIMBS binding site" evidence="25 42 93 95 96">
    <location>
        <position position="243"/>
    </location>
    <ligand>
        <name>Ca(2+)</name>
        <dbReference type="ChEBI" id="CHEBI:29108"/>
        <label>2</label>
    </ligand>
</feature>
<feature type="binding site" description="in LIMBS binding site" evidence="25 42 93 95 96">
    <location>
        <position position="245"/>
    </location>
    <ligand>
        <name>Ca(2+)</name>
        <dbReference type="ChEBI" id="CHEBI:29108"/>
        <label>2</label>
    </ligand>
</feature>
<feature type="binding site" description="in LIMBS binding site" evidence="25 42 93 95 96">
    <location>
        <position position="246"/>
    </location>
    <ligand>
        <name>Ca(2+)</name>
        <dbReference type="ChEBI" id="CHEBI:29108"/>
        <label>2</label>
    </ligand>
</feature>
<feature type="binding site" description="in MIDAS binding site" evidence="25 42 93 95 96">
    <location>
        <position position="246"/>
    </location>
    <ligand>
        <name>Mg(2+)</name>
        <dbReference type="ChEBI" id="CHEBI:18420"/>
    </ligand>
</feature>
<feature type="binding site" description="in ADMIDAS binding site and liganded-open conformation" evidence="25 42 93 96">
    <location>
        <position position="277"/>
    </location>
    <ligand>
        <name>Ca(2+)</name>
        <dbReference type="ChEBI" id="CHEBI:29108"/>
        <label>1</label>
    </ligand>
</feature>
<feature type="binding site" description="in LIMBS binding site" evidence="98">
    <location>
        <position position="277"/>
    </location>
    <ligand>
        <name>Ca(2+)</name>
        <dbReference type="ChEBI" id="CHEBI:29108"/>
        <label>2</label>
    </ligand>
</feature>
<feature type="binding site" description="in ADMIDAS binding site and unliganded-closed conformation" evidence="11 42 46 92 95 97">
    <location>
        <position position="361"/>
    </location>
    <ligand>
        <name>Ca(2+)</name>
        <dbReference type="ChEBI" id="CHEBI:29108"/>
        <label>1</label>
    </ligand>
</feature>
<feature type="modified residue" description="Phosphothreonine" evidence="1">
    <location>
        <position position="767"/>
    </location>
</feature>
<feature type="modified residue" description="Phosphotyrosine" evidence="43 99">
    <location>
        <position position="773"/>
    </location>
</feature>
<feature type="modified residue" description="Phosphothreonine; by PDPK1 and PKB/AKT1; in vitro" evidence="9">
    <location>
        <position position="779"/>
    </location>
</feature>
<feature type="modified residue" description="Phosphotyrosine" evidence="74">
    <location>
        <position position="785"/>
    </location>
</feature>
<feature type="glycosylation site" description="N-linked (GlcNAc...) asparagine" evidence="25 34 35 42 46 93 97">
    <location>
        <position position="125"/>
    </location>
</feature>
<feature type="glycosylation site" description="N-linked (GlcNAc...) asparagine" evidence="11 25 42 46 92 93 97">
    <location>
        <position position="346"/>
    </location>
</feature>
<feature type="glycosylation site" description="N-linked (GlcNAc...) asparagine" evidence="11 25 42 46 92 93 97">
    <location>
        <position position="397"/>
    </location>
</feature>
<feature type="glycosylation site" description="N-linked (GlcNAc...) asparagine" evidence="42 46 97">
    <location>
        <position position="478"/>
    </location>
</feature>
<feature type="glycosylation site" description="N-linked (GlcNAc...) asparagine" evidence="11 42 46 92 97">
    <location>
        <position position="585"/>
    </location>
</feature>
<feature type="glycosylation site" description="N-linked (GlcNAc...) asparagine" evidence="11 44 92">
    <location>
        <position position="680"/>
    </location>
</feature>
<feature type="disulfide bond" evidence="25 42 46 93 95 96 97">
    <location>
        <begin position="31"/>
        <end position="49"/>
    </location>
</feature>
<feature type="disulfide bond" evidence="25 42 46 93 95 96 97">
    <location>
        <begin position="39"/>
        <end position="461"/>
    </location>
</feature>
<feature type="disulfide bond" evidence="25 42 46 93 95 96 97">
    <location>
        <begin position="42"/>
        <end position="64"/>
    </location>
</feature>
<feature type="disulfide bond" evidence="25 42 46 93 95 96 97">
    <location>
        <begin position="52"/>
        <end position="75"/>
    </location>
</feature>
<feature type="disulfide bond" evidence="11 25 42 46 47 92 93 95 96 97">
    <location>
        <begin position="203"/>
        <end position="210"/>
    </location>
</feature>
<feature type="disulfide bond" evidence="11 25 42 46 47 92 93 95 96 97">
    <location>
        <begin position="258"/>
        <end position="299"/>
    </location>
</feature>
<feature type="disulfide bond" evidence="11 25 42 46 47 92 93 95 96 97">
    <location>
        <begin position="400"/>
        <end position="412"/>
    </location>
</feature>
<feature type="disulfide bond" evidence="11 25 42 46 92 93 95 96 97">
    <location>
        <begin position="432"/>
        <end position="459"/>
    </location>
</feature>
<feature type="disulfide bond" evidence="4 42 46 95 96 97">
    <location>
        <begin position="463"/>
        <end position="483"/>
    </location>
</feature>
<feature type="disulfide bond" evidence="4 42 46 95 96 97">
    <location>
        <begin position="474"/>
        <end position="486"/>
    </location>
</feature>
<feature type="disulfide bond" evidence="4 42 46 95 97">
    <location>
        <begin position="488"/>
        <end position="497"/>
    </location>
</feature>
<feature type="disulfide bond" evidence="4 42 46 95 97">
    <location>
        <begin position="499"/>
        <end position="529"/>
    </location>
</feature>
<feature type="disulfide bond" evidence="4 42 46 95 97">
    <location>
        <begin position="512"/>
        <end position="527"/>
    </location>
</feature>
<feature type="disulfide bond" evidence="4 42 46 95 97">
    <location>
        <begin position="521"/>
        <end position="532"/>
    </location>
</feature>
<feature type="disulfide bond" evidence="4 42 46 95 97">
    <location>
        <begin position="534"/>
        <end position="547"/>
    </location>
</feature>
<feature type="disulfide bond" evidence="4 42 46 95 97">
    <location>
        <begin position="549"/>
        <end position="570"/>
    </location>
</feature>
<feature type="disulfide bond" evidence="4 42 46 95 97">
    <location>
        <begin position="554"/>
        <end position="568"/>
    </location>
</feature>
<feature type="disulfide bond" evidence="4 42 46 95 97">
    <location>
        <begin position="562"/>
        <end position="573"/>
    </location>
</feature>
<feature type="disulfide bond" evidence="4 11 42 46 92 95 97">
    <location>
        <begin position="575"/>
        <end position="584"/>
    </location>
</feature>
<feature type="disulfide bond" evidence="4 11 42 46 92 95 97">
    <location>
        <begin position="586"/>
        <end position="609"/>
    </location>
</feature>
<feature type="disulfide bond" evidence="4 11 42 46 92 95 97">
    <location>
        <begin position="593"/>
        <end position="607"/>
    </location>
</feature>
<feature type="disulfide bond" evidence="4 11 42 46 92 95 97">
    <location>
        <begin position="601"/>
        <end position="612"/>
    </location>
</feature>
<feature type="disulfide bond" evidence="4 11 42 46 92 95 97">
    <location>
        <begin position="614"/>
        <end position="624"/>
    </location>
</feature>
<feature type="disulfide bond" evidence="11 42 46 92 95 97">
    <location>
        <begin position="627"/>
        <end position="630"/>
    </location>
</feature>
<feature type="disulfide bond" evidence="11 42 46 92 95 97">
    <location>
        <begin position="634"/>
        <end position="681"/>
    </location>
</feature>
<feature type="disulfide bond" evidence="11 42 46 92 95 97">
    <location>
        <begin position="640"/>
        <end position="661"/>
    </location>
</feature>
<feature type="disulfide bond" evidence="11 42 46 92 95 97">
    <location>
        <begin position="643"/>
        <end position="657"/>
    </location>
</feature>
<feature type="disulfide bond" evidence="11 42 46 92 95 97">
    <location>
        <begin position="689"/>
        <end position="713"/>
    </location>
</feature>
<feature type="splice variant" id="VSP_002745" description="In isoform Beta-3B." evidence="86">
    <original>ANNPLYKEATSTFTNITYRGT</original>
    <variation>VRDGAGRFLKSLV</variation>
    <location>
        <begin position="768"/>
        <end position="788"/>
    </location>
</feature>
<feature type="splice variant" id="VSP_002746" description="In isoform Beta-3C." evidence="87">
    <original>ANNPLYKEATSTFTNITYRGT</original>
    <variation>HYAQSLRKWNQPVSIDG</variation>
    <location>
        <begin position="768"/>
        <end position="788"/>
    </location>
</feature>
<feature type="sequence variant" id="VAR_003993" description="In alloantigen HPA-1B; dbSNP:rs5918." evidence="6 58 63 83">
    <original>L</original>
    <variation>P</variation>
    <location>
        <position position="59"/>
    </location>
</feature>
<feature type="sequence variant" id="VAR_069920" description="In GT2; uncertain significance; severe type 1 phenotype; the mutation prevents normal ITGA2B/ITGB3 complex expression; dbSNP:rs74554539." evidence="48">
    <original>C</original>
    <variation>Y</variation>
    <location>
        <position position="64"/>
    </location>
</feature>
<feature type="sequence variant" id="VAR_049633" description="In dbSNP:rs36080296." evidence="83">
    <original>L</original>
    <variation>R</variation>
    <location>
        <position position="66"/>
    </location>
</feature>
<feature type="sequence variant" id="VAR_030473" description="In GT2; uncertain significance; dbSNP:rs781062792." evidence="17">
    <original>R</original>
    <variation>W</variation>
    <location>
        <position position="119"/>
    </location>
</feature>
<feature type="sequence variant" id="VAR_030474" description="In GT2; dbSNP:rs1739770567." evidence="29">
    <original>Y</original>
    <variation>C</variation>
    <location>
        <position position="141"/>
    </location>
</feature>
<feature type="sequence variant" id="VAR_010649" description="In GT2; dbSNP:rs121918452." evidence="79">
    <original>L</original>
    <variation>W</variation>
    <location>
        <position position="143"/>
    </location>
</feature>
<feature type="sequence variant" id="VAR_069921" description="In GT2; severe type 1 phenotype; the mutation prevented normal ITGA2B/ITGB3 complex expression on the cell surface; dbSNP:rs77963874." evidence="48">
    <original>M</original>
    <variation>R</variation>
    <location>
        <position position="144"/>
    </location>
</feature>
<feature type="sequence variant" id="VAR_030475" description="In GT2; dbSNP:rs121918445." evidence="78">
    <original>D</original>
    <variation>N</variation>
    <location>
        <position position="145"/>
    </location>
</feature>
<feature type="sequence variant" id="VAR_003998" description="In GT2; type B; dbSNP:rs121918445." evidence="54">
    <original>D</original>
    <variation>Y</variation>
    <location>
        <position position="145"/>
    </location>
</feature>
<feature type="sequence variant" id="VAR_030476" description="In GT2; may confer constitutive activity to the alpha-IIb/(mutated)beta-3 receptor; dbSNP:rs767548512." evidence="27">
    <original>M</original>
    <variation>V</variation>
    <location>
        <position position="150"/>
    </location>
</feature>
<feature type="sequence variant" id="VAR_030477" description="Probable risk factor for neonatal thrombocytopenia; alloantigen Duv(a+); does not affect significantly the integrin function; dbSNP:rs74708909." evidence="16">
    <original>T</original>
    <variation>I</variation>
    <location>
        <position position="166"/>
    </location>
</feature>
<feature type="sequence variant" id="VAR_003994" description="In alloantigen HPA-4B; dbSNP:rs5917." evidence="6 22">
    <original>R</original>
    <variation>Q</variation>
    <location>
        <position position="169"/>
    </location>
</feature>
<feature type="sequence variant" id="VAR_010651" description="In GT2; type II; dbSNP:rs143146734." evidence="81">
    <original>S</original>
    <variation>L</variation>
    <location>
        <position position="188"/>
    </location>
</feature>
<feature type="sequence variant" id="VAR_030478" description="In GT2; variant form; dbSNP:rs79208797." evidence="14 48">
    <original>L</original>
    <variation>P</variation>
    <location>
        <position position="222"/>
    </location>
</feature>
<feature type="sequence variant" id="VAR_003999" description="In GT2; type B; dbSNP:rs121918444." evidence="21 63">
    <original>R</original>
    <variation>Q</variation>
    <location>
        <position position="240"/>
    </location>
</feature>
<feature type="sequence variant" id="VAR_004000" description="In GT2; variant Strasbourg-1; dbSNP:rs121918446." evidence="31">
    <original>R</original>
    <variation>W</variation>
    <location>
        <position position="240"/>
    </location>
</feature>
<feature type="sequence variant" id="VAR_030479" description="In GT2; dbSNP:rs377162158." evidence="78">
    <original>R</original>
    <variation>Q</variation>
    <location>
        <position position="242"/>
    </location>
</feature>
<feature type="sequence variant" id="VAR_030480" description="In GT2; dbSNP:rs2143097053." evidence="17">
    <original>D</original>
    <variation>V</variation>
    <location>
        <position position="243"/>
    </location>
</feature>
<feature type="sequence variant" id="VAR_069922" description="In GT2; uncertain significance; severe type 1 phenotype; the mutation prevents normal ITGA2B/ITGB3 complex expression on the cell surface; the mutation may interfere with correct folding of the protein; dbSNP:rs79560904." evidence="48">
    <original>G</original>
    <variation>D</variation>
    <location>
        <position position="247"/>
    </location>
</feature>
<feature type="sequence variant" id="VAR_069923" description="In GT2; uncertain significance; severe type 1 phenotype; the mutation prevents normal ITGA2B/ITGB3 complex expression on the cell surface; the mutation interupts the interaction of the ITGA2B/ITGB3 complex; dbSNP:rs79775494." evidence="48">
    <original>K</original>
    <variation>M</variation>
    <location>
        <position position="279"/>
    </location>
</feature>
<feature type="sequence variant" id="VAR_030481" description="In GT2." evidence="78">
    <original>L</original>
    <variation>P</variation>
    <location>
        <position position="288"/>
    </location>
</feature>
<feature type="sequence variant" id="VAR_004001" description="In GT2; dbSNP:rs13306476." evidence="28 82">
    <original>H</original>
    <variation>P</variation>
    <location>
        <position position="306"/>
    </location>
</feature>
<feature type="sequence variant" id="VAR_030482" description="In GT2; uncertain significance." evidence="29">
    <original>M</original>
    <variation>L</variation>
    <location>
        <position position="321"/>
    </location>
</feature>
<feature type="sequence variant" id="VAR_030483" description="In GT2; not expressed on the surface and absent inside the transfected cells; dbSNP:rs2143105830." evidence="28">
    <original>I</original>
    <variation>N</variation>
    <location>
        <position position="330"/>
    </location>
</feature>
<feature type="sequence variant" id="VAR_004002" description="In GT2; dbSNP:rs121918449." evidence="75">
    <original>C</original>
    <variation>Y</variation>
    <location>
        <position position="400"/>
    </location>
</feature>
<feature type="sequence variant" id="VAR_003995" description="In alloantigen MO(+); in a case of neonatal alloimmune thrombocytopenia; dbSNP:rs121918448." evidence="72">
    <original>P</original>
    <variation>A</variation>
    <location>
        <position position="433"/>
    </location>
</feature>
<feature type="sequence variant" id="VAR_014178" description="In dbSNP:rs5921." evidence="6">
    <original>V</original>
    <variation>I</variation>
    <location>
        <position position="453"/>
    </location>
</feature>
<feature type="sequence variant" id="VAR_003996" description="In alloantigen CA(+)/TU(+); dbSNP:rs13306487." evidence="71">
    <original>R</original>
    <variation>Q</variation>
    <location>
        <position position="515"/>
    </location>
</feature>
<feature type="sequence variant" id="VAR_030484" description="In GT2; dbSNP:rs2065130922." evidence="18">
    <original>C</original>
    <variation>Y</variation>
    <location>
        <position position="532"/>
    </location>
</feature>
<feature type="sequence variant" id="VAR_010671" description="In GT2; type I; dbSNP:rs2065157102." evidence="5">
    <original>C</original>
    <variation>R</variation>
    <location>
        <position position="568"/>
    </location>
</feature>
<feature type="sequence variant" id="VAR_004003" description="In GT2; uncertain significance; dbSNP:rs2143129874." evidence="82">
    <original>C</original>
    <variation>F</variation>
    <location>
        <position position="586"/>
    </location>
</feature>
<feature type="sequence variant" id="VAR_030485" description="In GT2; gain-of-function mutation; constitutively binds ligand-induced binding sites antibodies and the fibrinogen-mimetic antibody PAC-1." evidence="12">
    <original>C</original>
    <variation>R</variation>
    <location>
        <position position="586"/>
    </location>
</feature>
<feature type="sequence variant" id="VAR_004004" description="In GT2." evidence="82">
    <original>G</original>
    <variation>S</variation>
    <location>
        <position position="598"/>
    </location>
</feature>
<feature type="sequence variant" id="VAR_030486" description="In GT2; dbSNP:rs747534508." evidence="17">
    <original>C</original>
    <variation>R</variation>
    <location>
        <position position="601"/>
    </location>
</feature>
<feature type="sequence variant" id="VAR_010672" description="In GT2; type II; dbSNP:rs144884023." evidence="82">
    <original>G</original>
    <variation>S</variation>
    <location>
        <position position="605"/>
    </location>
</feature>
<feature type="sequence variant" id="VAR_003997" description="In alloantigen SR(A); dbSNP:rs151219882." evidence="73">
    <original>R</original>
    <variation>C</variation>
    <location>
        <position position="662"/>
    </location>
</feature>
<feature type="sequence variant" id="VAR_081732" description="In BDPLT24; the mutant protein is constitutively active; decreased platelet surface expression; spontaneous FAK phosphosphorylation; abnormal cell shape." evidence="65">
    <location>
        <position position="746"/>
    </location>
</feature>
<feature type="sequence variant" id="VAR_069924" description="In BDPLT24; the mutant protein is constitutively active; spontaneous FAK phosphosphorylation; abnormal cell shape; dbSNP:rs398122372." evidence="39 65">
    <original>D</original>
    <variation>H</variation>
    <location>
        <position position="749"/>
    </location>
</feature>
<feature type="sequence variant" id="VAR_004005" description="In GT2; uncertain significance; variant Strasbourg-1; dbSNP:rs121918447." evidence="23">
    <original>S</original>
    <variation>P</variation>
    <location>
        <position position="778"/>
    </location>
</feature>
<feature type="mutagenesis site" description="Increases ligand-binding activity." evidence="46">
    <location>
        <begin position="502"/>
        <end position="508"/>
    </location>
</feature>
<feature type="mutagenesis site" description="Slight increase in ligand-binding activity; when associated with 698-D--K-702 del." evidence="46">
    <original>R</original>
    <variation>A</variation>
    <location>
        <position position="659"/>
    </location>
</feature>
<feature type="mutagenesis site" description="Slight increase in ligand-binding activity; when associated with A-659." evidence="46">
    <location>
        <begin position="698"/>
        <end position="702"/>
    </location>
</feature>
<feature type="mutagenesis site" description="No effect on cell surface location but impairs interaction with TNS3 and PEAK1." evidence="67">
    <original>Y</original>
    <variation>A</variation>
    <location>
        <position position="773"/>
    </location>
</feature>
<feature type="mutagenesis site" description="No effect on cell surface location but impairs interaction with TNS3 and PEAK1." evidence="67">
    <original>Y</original>
    <variation>A</variation>
    <location>
        <position position="785"/>
    </location>
</feature>
<feature type="sequence conflict" description="In Ref. 1; AAA52589 and 3; AAA35927." evidence="88" ref="1 3">
    <original>A</original>
    <variation>V</variation>
    <location>
        <position position="12"/>
    </location>
</feature>
<feature type="sequence conflict" description="In Ref. 11; AAA67537 and 14; AAB23689." evidence="88" ref="11 14">
    <original>K</original>
    <variation>P</variation>
    <location>
        <position position="151"/>
    </location>
</feature>
<feature type="sequence conflict" description="In Ref. 11; AAA67537." evidence="88" ref="11">
    <original>D</original>
    <variation>EY</variation>
    <location>
        <position position="205"/>
    </location>
</feature>
<feature type="sequence conflict" description="In Ref. 1; AAA52589, 2; AAA60122 and 4; AAB71380." evidence="88" ref="1 2 4">
    <original>GALHD</original>
    <variation>EPYMT</variation>
    <location>
        <begin position="649"/>
        <end position="653"/>
    </location>
</feature>
<feature type="sequence conflict" description="In Ref. 8." evidence="88" ref="8">
    <original>G</original>
    <variation>H</variation>
    <location>
        <position position="716"/>
    </location>
</feature>
<feature type="sequence conflict" description="In Ref. 11; AAA67537." evidence="88" ref="11">
    <original>ALLIW</original>
    <variation>PCSSG</variation>
    <location>
        <begin position="737"/>
        <end position="741"/>
    </location>
</feature>
<feature type="helix" evidence="117">
    <location>
        <begin position="30"/>
        <end position="33"/>
    </location>
</feature>
<feature type="helix" evidence="112">
    <location>
        <begin position="35"/>
        <end position="37"/>
    </location>
</feature>
<feature type="helix" evidence="117">
    <location>
        <begin position="39"/>
        <end position="45"/>
    </location>
</feature>
<feature type="strand" evidence="117">
    <location>
        <begin position="49"/>
        <end position="52"/>
    </location>
</feature>
<feature type="strand" evidence="114">
    <location>
        <begin position="55"/>
        <end position="57"/>
    </location>
</feature>
<feature type="strand" evidence="117">
    <location>
        <begin position="59"/>
        <end position="61"/>
    </location>
</feature>
<feature type="strand" evidence="117">
    <location>
        <begin position="63"/>
        <end position="66"/>
    </location>
</feature>
<feature type="helix" evidence="117">
    <location>
        <begin position="67"/>
        <end position="72"/>
    </location>
</feature>
<feature type="helix" evidence="117">
    <location>
        <begin position="77"/>
        <end position="79"/>
    </location>
</feature>
<feature type="strand" evidence="117">
    <location>
        <begin position="86"/>
        <end position="91"/>
    </location>
</feature>
<feature type="strand" evidence="117">
    <location>
        <begin position="97"/>
        <end position="101"/>
    </location>
</feature>
<feature type="helix" evidence="110">
    <location>
        <begin position="103"/>
        <end position="105"/>
    </location>
</feature>
<feature type="strand" evidence="109">
    <location>
        <begin position="109"/>
        <end position="111"/>
    </location>
</feature>
<feature type="strand" evidence="117">
    <location>
        <begin position="112"/>
        <end position="118"/>
    </location>
</feature>
<feature type="strand" evidence="117">
    <location>
        <begin position="123"/>
        <end position="131"/>
    </location>
</feature>
<feature type="strand" evidence="117">
    <location>
        <begin position="138"/>
        <end position="145"/>
    </location>
</feature>
<feature type="helix" evidence="117">
    <location>
        <begin position="148"/>
        <end position="150"/>
    </location>
</feature>
<feature type="helix" evidence="117">
    <location>
        <begin position="151"/>
        <end position="156"/>
    </location>
</feature>
<feature type="turn" evidence="117">
    <location>
        <begin position="157"/>
        <end position="159"/>
    </location>
</feature>
<feature type="helix" evidence="117">
    <location>
        <begin position="160"/>
        <end position="168"/>
    </location>
</feature>
<feature type="turn" evidence="117">
    <location>
        <begin position="169"/>
        <end position="171"/>
    </location>
</feature>
<feature type="strand" evidence="117">
    <location>
        <begin position="175"/>
        <end position="182"/>
    </location>
</feature>
<feature type="turn" evidence="117">
    <location>
        <begin position="188"/>
        <end position="190"/>
    </location>
</feature>
<feature type="helix" evidence="117">
    <location>
        <begin position="196"/>
        <end position="200"/>
    </location>
</feature>
<feature type="turn" evidence="117">
    <location>
        <begin position="202"/>
        <end position="207"/>
    </location>
</feature>
<feature type="strand" evidence="117">
    <location>
        <begin position="215"/>
        <end position="224"/>
    </location>
</feature>
<feature type="helix" evidence="117">
    <location>
        <begin position="226"/>
        <end position="235"/>
    </location>
</feature>
<feature type="strand" evidence="117">
    <location>
        <begin position="242"/>
        <end position="246"/>
    </location>
</feature>
<feature type="helix" evidence="117">
    <location>
        <begin position="248"/>
        <end position="257"/>
    </location>
</feature>
<feature type="helix" evidence="117">
    <location>
        <begin position="259"/>
        <end position="262"/>
    </location>
</feature>
<feature type="strand" evidence="117">
    <location>
        <begin position="268"/>
        <end position="278"/>
    </location>
</feature>
<feature type="helix" evidence="117">
    <location>
        <begin position="285"/>
        <end position="289"/>
    </location>
</feature>
<feature type="strand" evidence="113">
    <location>
        <begin position="305"/>
        <end position="307"/>
    </location>
</feature>
<feature type="turn" evidence="117">
    <location>
        <begin position="308"/>
        <end position="312"/>
    </location>
</feature>
<feature type="helix" evidence="117">
    <location>
        <begin position="318"/>
        <end position="327"/>
    </location>
</feature>
<feature type="strand" evidence="117">
    <location>
        <begin position="330"/>
        <end position="336"/>
    </location>
</feature>
<feature type="helix" evidence="117">
    <location>
        <begin position="338"/>
        <end position="340"/>
    </location>
</feature>
<feature type="helix" evidence="117">
    <location>
        <begin position="341"/>
        <end position="350"/>
    </location>
</feature>
<feature type="strand" evidence="117">
    <location>
        <begin position="355"/>
        <end position="358"/>
    </location>
</feature>
<feature type="turn" evidence="110">
    <location>
        <begin position="361"/>
        <end position="363"/>
    </location>
</feature>
<feature type="helix" evidence="117">
    <location>
        <begin position="366"/>
        <end position="377"/>
    </location>
</feature>
<feature type="strand" evidence="117">
    <location>
        <begin position="381"/>
        <end position="387"/>
    </location>
</feature>
<feature type="strand" evidence="117">
    <location>
        <begin position="392"/>
        <end position="400"/>
    </location>
</feature>
<feature type="turn" evidence="117">
    <location>
        <begin position="401"/>
        <end position="403"/>
    </location>
</feature>
<feature type="strand" evidence="117">
    <location>
        <begin position="404"/>
        <end position="407"/>
    </location>
</feature>
<feature type="strand" evidence="114">
    <location>
        <begin position="410"/>
        <end position="414"/>
    </location>
</feature>
<feature type="strand" evidence="117">
    <location>
        <begin position="420"/>
        <end position="429"/>
    </location>
</feature>
<feature type="strand" evidence="117">
    <location>
        <begin position="434"/>
        <end position="444"/>
    </location>
</feature>
<feature type="strand" evidence="117">
    <location>
        <begin position="451"/>
        <end position="457"/>
    </location>
</feature>
<feature type="helix" evidence="117">
    <location>
        <begin position="462"/>
        <end position="466"/>
    </location>
</feature>
<feature type="strand" evidence="115">
    <location>
        <begin position="468"/>
        <end position="470"/>
    </location>
</feature>
<feature type="turn" evidence="110">
    <location>
        <begin position="472"/>
        <end position="474"/>
    </location>
</feature>
<feature type="turn" evidence="117">
    <location>
        <begin position="475"/>
        <end position="478"/>
    </location>
</feature>
<feature type="strand" evidence="117">
    <location>
        <begin position="479"/>
        <end position="482"/>
    </location>
</feature>
<feature type="strand" evidence="117">
    <location>
        <begin position="485"/>
        <end position="488"/>
    </location>
</feature>
<feature type="strand" evidence="108">
    <location>
        <begin position="489"/>
        <end position="491"/>
    </location>
</feature>
<feature type="turn" evidence="114">
    <location>
        <begin position="494"/>
        <end position="498"/>
    </location>
</feature>
<feature type="strand" evidence="108">
    <location>
        <begin position="500"/>
        <end position="504"/>
    </location>
</feature>
<feature type="strand" evidence="116">
    <location>
        <begin position="505"/>
        <end position="508"/>
    </location>
</feature>
<feature type="helix" evidence="114">
    <location>
        <begin position="509"/>
        <end position="511"/>
    </location>
</feature>
<feature type="strand" evidence="115">
    <location>
        <begin position="512"/>
        <end position="518"/>
    </location>
</feature>
<feature type="helix" evidence="115">
    <location>
        <begin position="520"/>
        <end position="523"/>
    </location>
</feature>
<feature type="strand" evidence="115">
    <location>
        <begin position="524"/>
        <end position="528"/>
    </location>
</feature>
<feature type="strand" evidence="115">
    <location>
        <begin position="531"/>
        <end position="534"/>
    </location>
</feature>
<feature type="strand" evidence="115">
    <location>
        <begin position="538"/>
        <end position="540"/>
    </location>
</feature>
<feature type="strand" evidence="115">
    <location>
        <begin position="542"/>
        <end position="544"/>
    </location>
</feature>
<feature type="strand" evidence="115">
    <location>
        <begin position="549"/>
        <end position="552"/>
    </location>
</feature>
<feature type="strand" evidence="107">
    <location>
        <begin position="556"/>
        <end position="561"/>
    </location>
</feature>
<feature type="helix" evidence="115">
    <location>
        <begin position="562"/>
        <end position="564"/>
    </location>
</feature>
<feature type="strand" evidence="115">
    <location>
        <begin position="565"/>
        <end position="569"/>
    </location>
</feature>
<feature type="strand" evidence="115">
    <location>
        <begin position="572"/>
        <end position="575"/>
    </location>
</feature>
<feature type="strand" evidence="115">
    <location>
        <begin position="579"/>
        <end position="581"/>
    </location>
</feature>
<feature type="helix" evidence="115">
    <location>
        <begin position="591"/>
        <end position="593"/>
    </location>
</feature>
<feature type="strand" evidence="115">
    <location>
        <begin position="598"/>
        <end position="600"/>
    </location>
</feature>
<feature type="helix" evidence="115">
    <location>
        <begin position="601"/>
        <end position="603"/>
    </location>
</feature>
<feature type="strand" evidence="115">
    <location>
        <begin position="604"/>
        <end position="608"/>
    </location>
</feature>
<feature type="strand" evidence="115">
    <location>
        <begin position="611"/>
        <end position="614"/>
    </location>
</feature>
<feature type="turn" evidence="108">
    <location>
        <begin position="616"/>
        <end position="618"/>
    </location>
</feature>
<feature type="strand" evidence="104">
    <location>
        <begin position="620"/>
        <end position="624"/>
    </location>
</feature>
<feature type="strand" evidence="111">
    <location>
        <begin position="628"/>
        <end position="630"/>
    </location>
</feature>
<feature type="helix" evidence="115">
    <location>
        <begin position="633"/>
        <end position="645"/>
    </location>
</feature>
<feature type="helix" evidence="115">
    <location>
        <begin position="650"/>
        <end position="653"/>
    </location>
</feature>
<feature type="helix" evidence="115">
    <location>
        <begin position="657"/>
        <end position="660"/>
    </location>
</feature>
<feature type="strand" evidence="115">
    <location>
        <begin position="663"/>
        <end position="670"/>
    </location>
</feature>
<feature type="strand" evidence="115">
    <location>
        <begin position="676"/>
        <end position="684"/>
    </location>
</feature>
<feature type="turn" evidence="101">
    <location>
        <begin position="686"/>
        <end position="688"/>
    </location>
</feature>
<feature type="strand" evidence="115">
    <location>
        <begin position="690"/>
        <end position="697"/>
    </location>
</feature>
<feature type="strand" evidence="107">
    <location>
        <begin position="698"/>
        <end position="700"/>
    </location>
</feature>
<feature type="strand" evidence="115">
    <location>
        <begin position="703"/>
        <end position="710"/>
    </location>
</feature>
<feature type="strand" evidence="105">
    <location>
        <begin position="715"/>
        <end position="717"/>
    </location>
</feature>
<feature type="helix" evidence="118">
    <location>
        <begin position="720"/>
        <end position="737"/>
    </location>
</feature>
<feature type="turn" evidence="100">
    <location>
        <begin position="743"/>
        <end position="759"/>
    </location>
</feature>
<feature type="turn" evidence="100">
    <location>
        <begin position="761"/>
        <end position="765"/>
    </location>
</feature>
<feature type="strand" evidence="103">
    <location>
        <begin position="767"/>
        <end position="770"/>
    </location>
</feature>
<feature type="helix" evidence="102">
    <location>
        <begin position="771"/>
        <end position="774"/>
    </location>
</feature>
<feature type="helix" evidence="106">
    <location>
        <begin position="776"/>
        <end position="779"/>
    </location>
</feature>
<feature type="turn" evidence="103">
    <location>
        <begin position="782"/>
        <end position="786"/>
    </location>
</feature>
<comment type="function">
    <text evidence="1 8 20 40 41 45 49 52 56 57 60 61 62 66 76 77 84 85">Integrin alpha-V/beta-3 (ITGAV:ITGB3) is a receptor for cytotactin, fibronectin, laminin, matrix metalloproteinase-2, osteopontin, osteomodulin, prothrombin, thrombospondin, vitronectin and von Willebrand factor. Integrin alpha-IIb/beta-3 (ITGA2B:ITGB3) is a receptor for fibronectin, fibrinogen, plasminogen, prothrombin, thrombospondin and vitronectin. Integrins alpha-IIb/beta-3 and alpha-V/beta-3 recognize the sequence R-G-D in a wide array of ligands. Integrin alpha-IIb/beta-3 recognizes the sequence H-H-L-G-G-G-A-K-Q-A-G-D-V in fibrinogen gamma chain (By similarity). Following activation integrin alpha-IIb/beta-3 brings about platelet/platelet interaction through binding of soluble fibrinogen (PubMed:9111081). This step leads to rapid platelet aggregation which physically plugs ruptured endothelial surface. Fibrinogen binding enhances SELP expression in activated platelets (By similarity). ITGAV:ITGB3 binds to fractalkine (CX3CL1) and acts as its coreceptor in CX3CR1-dependent fractalkine signaling (PubMed:23125415, PubMed:24789099). ITGAV:ITGB3 binds to NRG1 (via EGF domain) and this binding is essential for NRG1-ERBB signaling (PubMed:20682778). ITGAV:ITGB3 binds to FGF1 and this binding is essential for FGF1 signaling (PubMed:18441324). ITGAV:ITGB3 binds to FGF2 and this binding is essential for FGF2 signaling (PubMed:28302677). ITGAV:ITGB3 binds to IGF1 and this binding is essential for IGF1 signaling (PubMed:19578119). ITGAV:ITGB3 binds to IGF2 and this binding is essential for IGF2 signaling (PubMed:28873464). ITGAV:ITGB3 binds to IL1B and this binding is essential for IL1B signaling (PubMed:29030430). ITGAV:ITGB3 binds to PLA2G2A via a site (site 2) which is distinct from the classical ligand-binding site (site 1) and this induces integrin conformational changes and enhanced ligand binding to site 1 (PubMed:18635536, PubMed:25398877). ITGAV:ITGB3 acts as a receptor for fibrillin-1 (FBN1) and mediates R-G-D-dependent cell adhesion to FBN1 (PubMed:12807887). In brain, plays a role in synaptic transmission and plasticity. Involved in the regulation of the serotonin neurotransmission, is required to localize to specific compartments within the synapse the serotonin receptor SLC6A4 and for an appropriate reuptake of serotonin. Controls excitatory synaptic strength by regulating GRIA2-containing AMPAR endocytosis, which affects AMPAR abundance and composition (By similarity). ITGAV:ITGB3 act as a receptor for CD40LG (PubMed:31331973). ITGAV:ITGB3 acts as a receptor for IBSP and promotes cell adhesion and migration to IBSP (PubMed:10640428).</text>
</comment>
<comment type="function">
    <text evidence="38">(Microbial infection) Integrin ITGAV:ITGB3 acts as a receptor for Herpes virus 8/HHV-8.</text>
</comment>
<comment type="function">
    <text evidence="70">(Microbial infection) Integrin ITGAV:ITGB3 acts as a receptor for Coxsackievirus A9.</text>
</comment>
<comment type="function">
    <text evidence="80">(Microbial infection) Acts as a receptor for Hantaan virus.</text>
</comment>
<comment type="function">
    <text evidence="30">(Microbial infection) Integrin ITGAV:ITGB3 acts as a receptor for Cytomegalovirus/HHV-5.</text>
</comment>
<comment type="function">
    <text evidence="55">(Microbial infection) Integrin ITGA5:ITGB3 acts as a receptor for Human metapneumovirus.</text>
</comment>
<comment type="function">
    <text evidence="10">(Microbial infection) Integrin ITGAV:ITGB3 acts aP05556s a receptor for Human parechovirus 1.</text>
</comment>
<comment type="function">
    <text evidence="53">(Microbial infection) Integrin ITGAV:ITGB3 acts as a receptor for West nile virus.</text>
</comment>
<comment type="function">
    <text evidence="7">(Microbial infection) In case of HIV-1 infection, the interaction with extracellular viral Tat protein seems to enhance angiogenesis in Kaposi's sarcoma lesions.</text>
</comment>
<comment type="subunit">
    <text evidence="1 2 13 15 19 20 24 26 32 33 37 40 43 45 49 50 51 52 59 60 61 62 64 67 68 69">Heterodimer of an alpha and a beta subunit. Beta-3 (ITGB3) associates with either alpha-IIb (ITGA2B) or alpha-V (ITGAV). Isoform Beta-3C interacts with FLNB. Interacts with COMP. Interacts with PDIA6 following platelet stimulation. Interacts with SYK; upon activation by ITGB3 promotes platelet adhesion. Interacts with MYO10. Interacts with DAB2. Interacts with FERMT2. Interacts with EMP2; regulates the levels of the heterodimer ITGA5:ITGB3 integrin expression on the plasma membrane (PubMed:16216233). Integrin ITGAV:ITGB3 interacts with FBLN5 (via N-terminus) (By similarity). ITGAV:ITGB3 interacts with CCN3 (PubMed:12695522). ITGAV:ITGB3 and ITGA2B:ITGB3 interact with SELP (via C-type lectin domain); the interaction mediates cell-cell interaction and adhesion (PubMed:37184585). ITGAV:ITGB3 is found in a ternary complex with CX3CR1 and CX3CL1 (PubMed:23125415). ITGAV:ITGB3 is found in a ternary complex with NRG1 and ERBB3 (PubMed:20682778). ITGAV:ITGB3 is found in a ternary complex with FGF1 and FGFR1 (PubMed:18441324). ITGAV:ITGB3 interacts with FGF2; it is likely that FGF2 can simultaneously bind ITGAV:ITGB3 and FGF receptors (PubMed:28302677). ITGAV:ITGB3 binds to IL1B (PubMed:29030430). ITGAV:ITGB3 is found in a ternary complex with IGF1 and IGF1R (PubMed:19578119). ITGAV:ITGB3 interacts with IGF2 (PubMed:28873464). ITGAV:ITGB3 interacts with FBN1 (PubMed:12807887). ITGAV:ITGB3 interacts with CD9, CD81 and CD151 (via second extracellular domain) (PubMed:27993971). Interacts (via the allosteric site (site 2)) with CXCL12 in a CXCR4-independent manner (PubMed:29301984). Interacts with MXRA8/DICAM; the interaction inhibits ITGAV:ITGB3 heterodimer formation (PubMed:22492581). ITGAV:ITGB3 interacts with PTN (PubMed:19141530). Forms a complex with PTPRZ1 and PTN that stimulates endothelial cell migration through ITGB3 Tyr-773 phosphorylation (PubMed:19141530). ITGAV:ITGB3 interacts with SLC6A4. Interacts with SLC6A4 (via C-terminus); this interaction regulates SLC6A4 trafficking (By similarity). ITGA2B:ITGB3 interacts with PPIA/CYPA; the interaction is ROS and PPIase activity-dependent and is increased in the presence of thrombin (By similarity). Interacts with tensin TNS3; TNS3 also interacts with PEAK1, thus acting as an adapter molecule to bridge the association of PEAK1 with ITGB3 (PubMed:35687021). Interacts with TM4SF19 (PubMed:38016540).</text>
</comment>
<comment type="subunit">
    <text evidence="38">(Microbial infection) Integrin ITGAV:ITGB3 interacts with herpes virus 8/HHV-8 glycoprotein B.</text>
</comment>
<comment type="subunit">
    <text evidence="70">(Microbial infection) Integrin ITGAV:ITGB3 interacts with coxsackievirus A9 capsid proteins.</text>
</comment>
<comment type="subunit">
    <text evidence="80">(Microbial infection) Interacts with Hantaan virus glycoprotein G.</text>
</comment>
<comment type="subunit">
    <text evidence="30">(Microbial infection) Integrin ITGAV:ITGB3 interacts with cytomegalovirus/HHV-5 gH:gL proteins.</text>
</comment>
<comment type="subunit">
    <text evidence="55">(Microbial infection) Integrin ITGA5:ITGB3 interacts with human metapneumovirus fusion protein.</text>
</comment>
<comment type="subunit">
    <text evidence="10">(Microbial infection) Integrin ITGAV:ITGB3 interacts with human parechovirus 1 capsid proteins.</text>
</comment>
<comment type="subunit">
    <text evidence="53">(Microbial infection) Integrin ITGAV:ITGB3 interacts with west nile virus envelope protein E.</text>
</comment>
<comment type="subunit">
    <text evidence="7 36">(Microbial infection) Interacts with HIV-1 Tat (PubMed:10397733). ITGAV:ITGB3 interacts with AGRA2 (PubMed:16982628).</text>
</comment>
<comment type="interaction">
    <interactant intactId="EBI-702847">
        <id>P05106</id>
    </interactant>
    <interactant intactId="EBI-15188013">
        <id>P78423</id>
        <label>CX3CL1</label>
    </interactant>
    <organismsDiffer>false</organismsDiffer>
    <experiments>6</experiments>
</comment>
<comment type="interaction">
    <interactant intactId="EBI-702847">
        <id>P05106</id>
    </interactant>
    <interactant intactId="EBI-350432">
        <id>P21333</id>
        <label>FLNA</label>
    </interactant>
    <organismsDiffer>false</organismsDiffer>
    <experiments>3</experiments>
</comment>
<comment type="interaction">
    <interactant intactId="EBI-702847">
        <id>P05106</id>
    </interactant>
    <interactant intactId="EBI-702693">
        <id>P08514</id>
        <label>ITGA2B</label>
    </interactant>
    <organismsDiffer>false</organismsDiffer>
    <experiments>12</experiments>
</comment>
<comment type="interaction">
    <interactant intactId="EBI-702847">
        <id>P05106</id>
    </interactant>
    <interactant intactId="EBI-15805658">
        <id>P08514-1</id>
        <label>ITGA2B</label>
    </interactant>
    <organismsDiffer>false</organismsDiffer>
    <experiments>4</experiments>
</comment>
<comment type="interaction">
    <interactant intactId="EBI-702847">
        <id>P05106</id>
    </interactant>
    <interactant intactId="EBI-298282">
        <id>P06756</id>
        <label>ITGAV</label>
    </interactant>
    <organismsDiffer>false</organismsDiffer>
    <experiments>13</experiments>
</comment>
<comment type="interaction">
    <interactant intactId="EBI-702847">
        <id>P05106</id>
    </interactant>
    <interactant intactId="EBI-702847">
        <id>P05106</id>
        <label>ITGB3</label>
    </interactant>
    <organismsDiffer>false</organismsDiffer>
    <experiments>5</experiments>
</comment>
<comment type="interaction">
    <interactant intactId="EBI-702847">
        <id>P05106</id>
    </interactant>
    <interactant intactId="EBI-968788">
        <id>P18031</id>
        <label>PTPN1</label>
    </interactant>
    <organismsDiffer>false</organismsDiffer>
    <experiments>4</experiments>
</comment>
<comment type="interaction">
    <interactant intactId="EBI-702847">
        <id>P05106</id>
    </interactant>
    <interactant intactId="EBI-2462036">
        <id>Q9Y490</id>
        <label>TLN1</label>
    </interactant>
    <organismsDiffer>false</organismsDiffer>
    <experiments>5</experiments>
</comment>
<comment type="interaction">
    <interactant intactId="EBI-702847">
        <id>P05106</id>
    </interactant>
    <interactant intactId="EBI-5847257">
        <id>P05094</id>
        <label>ACTN1</label>
    </interactant>
    <organismsDiffer>true</organismsDiffer>
    <experiments>2</experiments>
</comment>
<comment type="interaction">
    <interactant intactId="EBI-702847">
        <id>P05106</id>
    </interactant>
    <interactant intactId="EBI-9027696">
        <id>F5HB81</id>
        <label>gB</label>
    </interactant>
    <organismsDiffer>true</organismsDiffer>
    <experiments>2</experiments>
</comment>
<comment type="interaction">
    <interactant intactId="EBI-702847">
        <id>P05106</id>
    </interactant>
    <interactant intactId="EBI-6903636">
        <id>Q62101</id>
        <label>Prkd1</label>
    </interactant>
    <organismsDiffer>true</organismsDiffer>
    <experiments>2</experiments>
</comment>
<comment type="interaction">
    <interactant intactId="EBI-702847">
        <id>P05106</id>
    </interactant>
    <interactant intactId="EBI-26656723">
        <id>P05480-2</id>
        <label>Src</label>
    </interactant>
    <organismsDiffer>true</organismsDiffer>
    <experiments>4</experiments>
</comment>
<comment type="interaction">
    <interactant intactId="EBI-702847">
        <id>P05106</id>
    </interactant>
    <interactant intactId="EBI-1039593">
        <id>P26039</id>
        <label>Tln1</label>
    </interactant>
    <organismsDiffer>true</organismsDiffer>
    <experiments>7</experiments>
</comment>
<comment type="interaction">
    <interactant intactId="EBI-702847">
        <id>P05106</id>
    </interactant>
    <interactant intactId="EBI-1035421">
        <id>P54939</id>
        <label>TLN1</label>
    </interactant>
    <organismsDiffer>true</organismsDiffer>
    <experiments>2</experiments>
</comment>
<comment type="interaction">
    <interactant intactId="EBI-702847">
        <id>P05106</id>
    </interactant>
    <interactant intactId="EBI-981051">
        <id>P06935</id>
    </interactant>
    <organismsDiffer>true</organismsDiffer>
    <experiments>4</experiments>
</comment>
<comment type="subcellular location">
    <subcellularLocation>
        <location evidence="48 50 77">Cell membrane</location>
        <topology evidence="48 50 77">Single-pass type I membrane protein</topology>
    </subcellularLocation>
    <subcellularLocation>
        <location evidence="50">Cell projection</location>
        <location evidence="50">Lamellipodium membrane</location>
    </subcellularLocation>
    <subcellularLocation>
        <location evidence="50 67">Cell junction</location>
        <location evidence="50 67">Focal adhesion</location>
    </subcellularLocation>
    <subcellularLocation>
        <location evidence="1">Postsynaptic cell membrane</location>
        <topology evidence="1">Single-pass type I membrane protein</topology>
    </subcellularLocation>
    <subcellularLocation>
        <location evidence="1">Synapse</location>
    </subcellularLocation>
</comment>
<comment type="alternative products">
    <event type="alternative splicing"/>
    <isoform>
        <id>P05106-1</id>
        <name>Beta-3A</name>
        <sequence type="displayed"/>
    </isoform>
    <isoform>
        <id>P05106-2</id>
        <name>Beta-3B</name>
        <sequence type="described" ref="VSP_002745"/>
    </isoform>
    <isoform>
        <id>P05106-3</id>
        <name>Beta-3C</name>
        <sequence type="described" ref="VSP_002746"/>
    </isoform>
</comment>
<comment type="tissue specificity">
    <text>Isoform beta-3A and isoform beta-3C are widely expressed. Isoform beta-3A is specifically expressed in osteoblast cells; isoform beta-3C is specifically expressed in prostate and testis.</text>
</comment>
<comment type="domain">
    <text evidence="25 42">The VWFA domain (or beta I domain) contains three cation-binding sites: the ligand-associated metal ion-binding site (LIMBS or SyMBS), the metal ion-dependent adhesion site (MIDAS), and the adjacent MIDAS site (ADMIDAS). This domain is also part of the ligand-binding site.</text>
</comment>
<comment type="PTM">
    <text evidence="9">Phosphorylated on tyrosine residues in response to thrombin-induced platelet aggregation. Probably involved in outside-in signaling. A peptide (AA 740-762) is capable of binding GRB2 only when both Tyr-773 and Tyr-785 are phosphorylated. Phosphorylation of Thr-779 inhibits SHC binding.</text>
</comment>
<comment type="polymorphism">
    <text>Position 59 is associated with platelet-specific alloantigen HPA-1 (ZW or PL(A)). HPA-1A/ZW(A)/PL(A1) has Leu-59 and HPA-1B/ZW(B)/PL(A2) has Pro-59. HPA-1A is involved in fetal-maternal alloimmune thromobocytopenia (FMAIT) as well as in neonatal alloimmune thrombocytopenia (NAIT).</text>
</comment>
<comment type="polymorphism">
    <text>Position 169 is associated with platelet-specific alloantigen HPA-4 (PEN or YUK). HPA-4A/PEN(A)/YUK(A) has Arg-169 and HPA-4B/PEN(B)/YUK(B) has Gln-169. HPA-4B is involved in neonatal alloimmune thrombocytopenia (NAIT or NATP).</text>
</comment>
<comment type="polymorphism">
    <text>Position 433 is associated with platelet-specific alloantigen MO. MO(-) has Pro-433 and MO(+) has Ala-433. MO(+) is involved in NAIT.</text>
</comment>
<comment type="polymorphism">
    <text>Position 515 is associated with platelet-specific alloantigen CA/TU. CA(-)/TU(-) has Arg-515 and CA(+)/TU(+) has Gln-515. CA(+) is involved in NAIT.</text>
</comment>
<comment type="polymorphism">
    <text>Position 662 is associated with platelet-specific alloantigen SR(A). SR(A)(-) has Arg-662 and SR(A)(+) has Cys-662.</text>
</comment>
<comment type="disease" evidence="5 12 14 17 18 21 23 27 28 29 31 48 54 63 75 78 79 81 82">
    <disease id="DI-06076">
        <name>Glanzmann thrombasthenia 2</name>
        <acronym>GT2</acronym>
        <description>A form of Glanzmann thrombasthenia, a disorder characterized by failure of platelet aggregation, absent or diminished clot retraction, and mucocutaneous bleeding of mild-to-moderate severity. Glanzmann thrombasthenia has been classified into clinical types I and II. In type I, platelets show absence of glycoprotein IIb-IIIa complexes at their surface and lack fibrinogen and clot retraction capability. In type II, the platelets express glycoprotein IIb-IIIa complexes at reduced levels, have detectable amounts of fibrinogen, and have low or moderate clot retraction capability.</description>
        <dbReference type="MIM" id="619267"/>
    </disease>
    <text>The disease is caused by variants affecting the gene represented in this entry.</text>
</comment>
<comment type="disease" evidence="39 65">
    <disease id="DI-06077">
        <name>Bleeding disorder, platelet-type, 24</name>
        <acronym>BDPLT24</acronym>
        <description>An autosomal dominant disorder of platelet production characterized by congenital macrothrombocytopenia and platelet anisocytosis. Affected individuals may have no or only mildly increased bleeding tendency.</description>
        <dbReference type="MIM" id="619271"/>
    </disease>
    <text>The disease is caused by variants affecting the gene represented in this entry.</text>
</comment>
<comment type="miscellaneous">
    <text evidence="8">The constitutive activation of ITGAV:ITGB3 on neoplastic cells may contribute to tumor growth and metastatic potential.</text>
</comment>
<comment type="similarity">
    <text evidence="88">Belongs to the integrin beta chain family.</text>
</comment>
<proteinExistence type="evidence at protein level"/>
<name>ITB3_HUMAN</name>
<dbReference type="EMBL" id="J02703">
    <property type="protein sequence ID" value="AAA52589.1"/>
    <property type="molecule type" value="mRNA"/>
</dbReference>
<dbReference type="EMBL" id="M20311">
    <property type="protein sequence ID" value="AAA60122.1"/>
    <property type="molecule type" value="mRNA"/>
</dbReference>
<dbReference type="EMBL" id="M35999">
    <property type="protein sequence ID" value="AAA35927.1"/>
    <property type="molecule type" value="mRNA"/>
</dbReference>
<dbReference type="EMBL" id="U95204">
    <property type="protein sequence ID" value="AAB71380.1"/>
    <property type="molecule type" value="mRNA"/>
</dbReference>
<dbReference type="EMBL" id="CH471231">
    <property type="protein sequence ID" value="EAW57682.1"/>
    <property type="molecule type" value="Genomic_DNA"/>
</dbReference>
<dbReference type="EMBL" id="BC127666">
    <property type="protein sequence ID" value="AAI27667.1"/>
    <property type="molecule type" value="mRNA"/>
</dbReference>
<dbReference type="EMBL" id="BC127667">
    <property type="protein sequence ID" value="AAI27668.1"/>
    <property type="molecule type" value="mRNA"/>
</dbReference>
<dbReference type="EMBL" id="L28832">
    <property type="protein sequence ID" value="AAA20880.2"/>
    <property type="molecule type" value="Genomic_DNA"/>
</dbReference>
<dbReference type="EMBL" id="M32686">
    <property type="protein sequence ID" value="AAA67537.1"/>
    <property type="molecule type" value="Genomic_DNA"/>
</dbReference>
<dbReference type="EMBL" id="M32667">
    <property type="protein sequence ID" value="AAA67537.1"/>
    <property type="status" value="JOINED"/>
    <property type="molecule type" value="Genomic_DNA"/>
</dbReference>
<dbReference type="EMBL" id="M32672">
    <property type="protein sequence ID" value="AAA67537.1"/>
    <property type="status" value="JOINED"/>
    <property type="molecule type" value="Genomic_DNA"/>
</dbReference>
<dbReference type="EMBL" id="M32673">
    <property type="protein sequence ID" value="AAA67537.1"/>
    <property type="status" value="JOINED"/>
    <property type="molecule type" value="Genomic_DNA"/>
</dbReference>
<dbReference type="EMBL" id="M32674">
    <property type="protein sequence ID" value="AAA67537.1"/>
    <property type="status" value="JOINED"/>
    <property type="molecule type" value="Genomic_DNA"/>
</dbReference>
<dbReference type="EMBL" id="M32675">
    <property type="protein sequence ID" value="AAA67537.1"/>
    <property type="status" value="JOINED"/>
    <property type="molecule type" value="Genomic_DNA"/>
</dbReference>
<dbReference type="EMBL" id="M32680">
    <property type="protein sequence ID" value="AAA67537.1"/>
    <property type="status" value="JOINED"/>
    <property type="molecule type" value="Genomic_DNA"/>
</dbReference>
<dbReference type="EMBL" id="M32681">
    <property type="protein sequence ID" value="AAA67537.1"/>
    <property type="status" value="JOINED"/>
    <property type="molecule type" value="Genomic_DNA"/>
</dbReference>
<dbReference type="EMBL" id="M32682">
    <property type="protein sequence ID" value="AAA67537.1"/>
    <property type="status" value="JOINED"/>
    <property type="molecule type" value="Genomic_DNA"/>
</dbReference>
<dbReference type="EMBL" id="M32685">
    <property type="protein sequence ID" value="AAA67537.1"/>
    <property type="status" value="JOINED"/>
    <property type="molecule type" value="Genomic_DNA"/>
</dbReference>
<dbReference type="EMBL" id="M57494">
    <property type="protein sequence ID" value="AAA52600.1"/>
    <property type="molecule type" value="Genomic_DNA"/>
</dbReference>
<dbReference type="EMBL" id="M57481">
    <property type="protein sequence ID" value="AAA52600.1"/>
    <property type="status" value="JOINED"/>
    <property type="molecule type" value="Genomic_DNA"/>
</dbReference>
<dbReference type="EMBL" id="M57482">
    <property type="protein sequence ID" value="AAA52600.1"/>
    <property type="status" value="JOINED"/>
    <property type="molecule type" value="Genomic_DNA"/>
</dbReference>
<dbReference type="EMBL" id="M57483">
    <property type="protein sequence ID" value="AAA52600.1"/>
    <property type="status" value="JOINED"/>
    <property type="molecule type" value="Genomic_DNA"/>
</dbReference>
<dbReference type="EMBL" id="M57484">
    <property type="protein sequence ID" value="AAA52600.1"/>
    <property type="status" value="JOINED"/>
    <property type="molecule type" value="Genomic_DNA"/>
</dbReference>
<dbReference type="EMBL" id="M57485">
    <property type="protein sequence ID" value="AAA52600.1"/>
    <property type="status" value="JOINED"/>
    <property type="molecule type" value="Genomic_DNA"/>
</dbReference>
<dbReference type="EMBL" id="M57486">
    <property type="protein sequence ID" value="AAA52600.1"/>
    <property type="status" value="JOINED"/>
    <property type="molecule type" value="Genomic_DNA"/>
</dbReference>
<dbReference type="EMBL" id="M57487">
    <property type="protein sequence ID" value="AAA52600.1"/>
    <property type="status" value="JOINED"/>
    <property type="molecule type" value="Genomic_DNA"/>
</dbReference>
<dbReference type="EMBL" id="M57488">
    <property type="protein sequence ID" value="AAA52600.1"/>
    <property type="status" value="JOINED"/>
    <property type="molecule type" value="Genomic_DNA"/>
</dbReference>
<dbReference type="EMBL" id="M57489">
    <property type="protein sequence ID" value="AAA52600.1"/>
    <property type="status" value="JOINED"/>
    <property type="molecule type" value="Genomic_DNA"/>
</dbReference>
<dbReference type="EMBL" id="M57490">
    <property type="protein sequence ID" value="AAA52600.1"/>
    <property type="status" value="JOINED"/>
    <property type="molecule type" value="Genomic_DNA"/>
</dbReference>
<dbReference type="EMBL" id="M57491">
    <property type="protein sequence ID" value="AAA52600.1"/>
    <property type="status" value="JOINED"/>
    <property type="molecule type" value="Genomic_DNA"/>
</dbReference>
<dbReference type="EMBL" id="M57492">
    <property type="protein sequence ID" value="AAA52600.1"/>
    <property type="status" value="JOINED"/>
    <property type="molecule type" value="Genomic_DNA"/>
</dbReference>
<dbReference type="EMBL" id="M57493">
    <property type="protein sequence ID" value="AAA52600.1"/>
    <property type="status" value="JOINED"/>
    <property type="molecule type" value="Genomic_DNA"/>
</dbReference>
<dbReference type="EMBL" id="U03881">
    <property type="protein sequence ID" value="AAA16076.1"/>
    <property type="molecule type" value="Genomic_DNA"/>
</dbReference>
<dbReference type="EMBL" id="S49379">
    <property type="protein sequence ID" value="AAB23689.2"/>
    <property type="molecule type" value="Genomic_DNA"/>
</dbReference>
<dbReference type="EMBL" id="M25108">
    <property type="protein sequence ID" value="AAA36121.1"/>
    <property type="molecule type" value="mRNA"/>
</dbReference>
<dbReference type="CCDS" id="CCDS11511.1">
    <molecule id="P05106-1"/>
</dbReference>
<dbReference type="PIR" id="A26547">
    <property type="entry name" value="A26547"/>
</dbReference>
<dbReference type="PIR" id="A60798">
    <property type="entry name" value="A60798"/>
</dbReference>
<dbReference type="PIR" id="B36268">
    <property type="entry name" value="B36268"/>
</dbReference>
<dbReference type="PIR" id="I77349">
    <property type="entry name" value="I77349"/>
</dbReference>
<dbReference type="PIR" id="S14324">
    <property type="entry name" value="S14324"/>
</dbReference>
<dbReference type="RefSeq" id="NP_000203.2">
    <molecule id="P05106-1"/>
    <property type="nucleotide sequence ID" value="NM_000212.2"/>
</dbReference>
<dbReference type="PDB" id="1JV2">
    <property type="method" value="X-ray"/>
    <property type="resolution" value="3.10 A"/>
    <property type="chains" value="B=27-718"/>
</dbReference>
<dbReference type="PDB" id="1KUP">
    <property type="method" value="NMR"/>
    <property type="chains" value="B=742-766"/>
</dbReference>
<dbReference type="PDB" id="1KUZ">
    <property type="method" value="NMR"/>
    <property type="chains" value="B=742-766"/>
</dbReference>
<dbReference type="PDB" id="1L5G">
    <property type="method" value="X-ray"/>
    <property type="resolution" value="3.20 A"/>
    <property type="chains" value="B=27-718"/>
</dbReference>
<dbReference type="PDB" id="1M1X">
    <property type="method" value="X-ray"/>
    <property type="resolution" value="3.30 A"/>
    <property type="chains" value="B=27-718"/>
</dbReference>
<dbReference type="PDB" id="1M8O">
    <property type="method" value="NMR"/>
    <property type="chains" value="B=742-788"/>
</dbReference>
<dbReference type="PDB" id="1MIZ">
    <property type="method" value="X-ray"/>
    <property type="resolution" value="1.90 A"/>
    <property type="chains" value="A=765-769"/>
</dbReference>
<dbReference type="PDB" id="1MK7">
    <property type="method" value="X-ray"/>
    <property type="resolution" value="2.20 A"/>
    <property type="chains" value="A/C=765-775"/>
</dbReference>
<dbReference type="PDB" id="1MK9">
    <property type="method" value="X-ray"/>
    <property type="resolution" value="2.80 A"/>
    <property type="chains" value="A/C/E/G=765-776"/>
</dbReference>
<dbReference type="PDB" id="1S4X">
    <property type="method" value="NMR"/>
    <property type="chains" value="A=742-788"/>
</dbReference>
<dbReference type="PDB" id="1TYE">
    <property type="method" value="X-ray"/>
    <property type="resolution" value="2.90 A"/>
    <property type="chains" value="B/D/F=27-466"/>
</dbReference>
<dbReference type="PDB" id="1U8C">
    <property type="method" value="X-ray"/>
    <property type="resolution" value="3.10 A"/>
    <property type="chains" value="B=27-718"/>
</dbReference>
<dbReference type="PDB" id="2K9J">
    <property type="method" value="NMR"/>
    <property type="chains" value="B=711-753"/>
</dbReference>
<dbReference type="PDB" id="2KNC">
    <property type="method" value="NMR"/>
    <property type="chains" value="B=715-788"/>
</dbReference>
<dbReference type="PDB" id="2KV9">
    <property type="method" value="NMR"/>
    <property type="chains" value="B=739-788"/>
</dbReference>
<dbReference type="PDB" id="2L1C">
    <property type="method" value="NMR"/>
    <property type="chains" value="B=762-788"/>
</dbReference>
<dbReference type="PDB" id="2L91">
    <property type="method" value="NMR"/>
    <property type="chains" value="A=711-753"/>
</dbReference>
<dbReference type="PDB" id="2LJD">
    <property type="method" value="NMR"/>
    <property type="chains" value="A=742-788"/>
</dbReference>
<dbReference type="PDB" id="2LJE">
    <property type="method" value="NMR"/>
    <property type="chains" value="A=742-788"/>
</dbReference>
<dbReference type="PDB" id="2LJF">
    <property type="method" value="NMR"/>
    <property type="chains" value="A=742-788"/>
</dbReference>
<dbReference type="PDB" id="2MTP">
    <property type="method" value="NMR"/>
    <property type="chains" value="C=742-788"/>
</dbReference>
<dbReference type="PDB" id="2N9Y">
    <property type="method" value="NMR"/>
    <property type="chains" value="B=712-753"/>
</dbReference>
<dbReference type="PDB" id="2Q6W">
    <property type="method" value="X-ray"/>
    <property type="resolution" value="2.25 A"/>
    <property type="chains" value="C/F=50-61"/>
</dbReference>
<dbReference type="PDB" id="2RMZ">
    <property type="method" value="NMR"/>
    <property type="chains" value="A=711-753"/>
</dbReference>
<dbReference type="PDB" id="2RN0">
    <property type="method" value="NMR"/>
    <property type="chains" value="A=711-753"/>
</dbReference>
<dbReference type="PDB" id="2VC2">
    <property type="method" value="X-ray"/>
    <property type="resolution" value="3.10 A"/>
    <property type="chains" value="B=27-487"/>
</dbReference>
<dbReference type="PDB" id="2VDK">
    <property type="method" value="X-ray"/>
    <property type="resolution" value="2.80 A"/>
    <property type="chains" value="B=27-487"/>
</dbReference>
<dbReference type="PDB" id="2VDL">
    <property type="method" value="X-ray"/>
    <property type="resolution" value="2.75 A"/>
    <property type="chains" value="B=27-487"/>
</dbReference>
<dbReference type="PDB" id="2VDM">
    <property type="method" value="X-ray"/>
    <property type="resolution" value="2.90 A"/>
    <property type="chains" value="B=27-487"/>
</dbReference>
<dbReference type="PDB" id="2VDN">
    <property type="method" value="X-ray"/>
    <property type="resolution" value="2.90 A"/>
    <property type="chains" value="B=27-487"/>
</dbReference>
<dbReference type="PDB" id="2VDO">
    <property type="method" value="X-ray"/>
    <property type="resolution" value="2.51 A"/>
    <property type="chains" value="B=27-487"/>
</dbReference>
<dbReference type="PDB" id="2VDP">
    <property type="method" value="X-ray"/>
    <property type="resolution" value="2.80 A"/>
    <property type="chains" value="B=27-487"/>
</dbReference>
<dbReference type="PDB" id="2VDQ">
    <property type="method" value="X-ray"/>
    <property type="resolution" value="2.59 A"/>
    <property type="chains" value="B=27-487"/>
</dbReference>
<dbReference type="PDB" id="2VDR">
    <property type="method" value="X-ray"/>
    <property type="resolution" value="2.40 A"/>
    <property type="chains" value="B=27-487"/>
</dbReference>
<dbReference type="PDB" id="3FCS">
    <property type="method" value="X-ray"/>
    <property type="resolution" value="2.55 A"/>
    <property type="chains" value="B/D=27-716"/>
</dbReference>
<dbReference type="PDB" id="3FCU">
    <property type="method" value="X-ray"/>
    <property type="resolution" value="2.90 A"/>
    <property type="chains" value="B/D/F=27-487"/>
</dbReference>
<dbReference type="PDB" id="3IJE">
    <property type="method" value="X-ray"/>
    <property type="resolution" value="2.90 A"/>
    <property type="chains" value="B=27-721"/>
</dbReference>
<dbReference type="PDB" id="3NID">
    <property type="method" value="X-ray"/>
    <property type="resolution" value="2.30 A"/>
    <property type="chains" value="B/D=27-497"/>
</dbReference>
<dbReference type="PDB" id="3NIF">
    <property type="method" value="X-ray"/>
    <property type="resolution" value="2.40 A"/>
    <property type="chains" value="B/D=27-497"/>
</dbReference>
<dbReference type="PDB" id="3NIG">
    <property type="method" value="X-ray"/>
    <property type="resolution" value="2.25 A"/>
    <property type="chains" value="B/D=27-497"/>
</dbReference>
<dbReference type="PDB" id="3T3M">
    <property type="method" value="X-ray"/>
    <property type="resolution" value="2.60 A"/>
    <property type="chains" value="B/D=27-498"/>
</dbReference>
<dbReference type="PDB" id="3T3P">
    <property type="method" value="X-ray"/>
    <property type="resolution" value="2.20 A"/>
    <property type="chains" value="B/D=27-498"/>
</dbReference>
<dbReference type="PDB" id="3ZDX">
    <property type="method" value="X-ray"/>
    <property type="resolution" value="2.45 A"/>
    <property type="chains" value="B/D=27-498"/>
</dbReference>
<dbReference type="PDB" id="3ZDY">
    <property type="method" value="X-ray"/>
    <property type="resolution" value="2.45 A"/>
    <property type="chains" value="B/D=27-498"/>
</dbReference>
<dbReference type="PDB" id="3ZDZ">
    <property type="method" value="X-ray"/>
    <property type="resolution" value="2.75 A"/>
    <property type="chains" value="B/D=27-498"/>
</dbReference>
<dbReference type="PDB" id="3ZE0">
    <property type="method" value="X-ray"/>
    <property type="resolution" value="2.95 A"/>
    <property type="chains" value="B/D=27-498"/>
</dbReference>
<dbReference type="PDB" id="3ZE1">
    <property type="method" value="X-ray"/>
    <property type="resolution" value="3.00 A"/>
    <property type="chains" value="B/D=27-498"/>
</dbReference>
<dbReference type="PDB" id="3ZE2">
    <property type="method" value="X-ray"/>
    <property type="resolution" value="2.35 A"/>
    <property type="chains" value="B/D=27-498"/>
</dbReference>
<dbReference type="PDB" id="4CAK">
    <property type="method" value="EM"/>
    <property type="resolution" value="20.50 A"/>
    <property type="chains" value="B=27-716"/>
</dbReference>
<dbReference type="PDB" id="4G1E">
    <property type="method" value="X-ray"/>
    <property type="resolution" value="3.00 A"/>
    <property type="chains" value="B=27-717"/>
</dbReference>
<dbReference type="PDB" id="4G1M">
    <property type="method" value="X-ray"/>
    <property type="resolution" value="2.90 A"/>
    <property type="chains" value="B=27-718"/>
</dbReference>
<dbReference type="PDB" id="4MMX">
    <property type="method" value="X-ray"/>
    <property type="resolution" value="3.32 A"/>
    <property type="chains" value="B=27-718"/>
</dbReference>
<dbReference type="PDB" id="4MMY">
    <property type="method" value="X-ray"/>
    <property type="resolution" value="3.18 A"/>
    <property type="chains" value="B=27-718"/>
</dbReference>
<dbReference type="PDB" id="4MMZ">
    <property type="method" value="X-ray"/>
    <property type="resolution" value="3.10 A"/>
    <property type="chains" value="B=27-718"/>
</dbReference>
<dbReference type="PDB" id="4O02">
    <property type="method" value="X-ray"/>
    <property type="resolution" value="3.60 A"/>
    <property type="chains" value="B=27-718"/>
</dbReference>
<dbReference type="PDB" id="4Z7N">
    <property type="method" value="X-ray"/>
    <property type="resolution" value="2.60 A"/>
    <property type="chains" value="B/D=29-497"/>
</dbReference>
<dbReference type="PDB" id="4Z7O">
    <property type="method" value="X-ray"/>
    <property type="resolution" value="2.85 A"/>
    <property type="chains" value="B/D=29-497"/>
</dbReference>
<dbReference type="PDB" id="4Z7Q">
    <property type="method" value="X-ray"/>
    <property type="resolution" value="2.70 A"/>
    <property type="chains" value="B/D=27-497"/>
</dbReference>
<dbReference type="PDB" id="5HDB">
    <property type="method" value="X-ray"/>
    <property type="resolution" value="2.70 A"/>
    <property type="chains" value="B/D=27-497"/>
</dbReference>
<dbReference type="PDB" id="6AVQ">
    <property type="method" value="EM"/>
    <property type="resolution" value="35.00 A"/>
    <property type="chains" value="B=27-718"/>
</dbReference>
<dbReference type="PDB" id="6AVR">
    <property type="method" value="EM"/>
    <property type="resolution" value="35.00 A"/>
    <property type="chains" value="B=27-718"/>
</dbReference>
<dbReference type="PDB" id="6AVU">
    <property type="method" value="EM"/>
    <property type="resolution" value="35.00 A"/>
    <property type="chains" value="B=27-718"/>
</dbReference>
<dbReference type="PDB" id="6BXB">
    <property type="method" value="X-ray"/>
    <property type="resolution" value="2.39 A"/>
    <property type="chains" value="A/B=27-135, A/B=378-548"/>
</dbReference>
<dbReference type="PDB" id="6BXF">
    <property type="method" value="X-ray"/>
    <property type="resolution" value="3.20 A"/>
    <property type="chains" value="A/B=27-135, A/B=378-548"/>
</dbReference>
<dbReference type="PDB" id="6BXJ">
    <property type="method" value="X-ray"/>
    <property type="resolution" value="2.09 A"/>
    <property type="chains" value="A=27-135, A=378-714"/>
</dbReference>
<dbReference type="PDB" id="6CKB">
    <property type="method" value="X-ray"/>
    <property type="resolution" value="2.80 A"/>
    <property type="chains" value="A/B=27-135, A/B=378-548"/>
</dbReference>
<dbReference type="PDB" id="6MK0">
    <property type="method" value="X-ray"/>
    <property type="resolution" value="3.00 A"/>
    <property type="chains" value="B=30-716"/>
</dbReference>
<dbReference type="PDB" id="6MSL">
    <property type="method" value="X-ray"/>
    <property type="resolution" value="3.10 A"/>
    <property type="chains" value="B=27-721"/>
</dbReference>
<dbReference type="PDB" id="6MSU">
    <property type="method" value="X-ray"/>
    <property type="resolution" value="3.11 A"/>
    <property type="chains" value="B=27-721"/>
</dbReference>
<dbReference type="PDB" id="6NAJ">
    <property type="method" value="X-ray"/>
    <property type="resolution" value="3.10 A"/>
    <property type="chains" value="B=27-716"/>
</dbReference>
<dbReference type="PDB" id="6V4P">
    <property type="method" value="EM"/>
    <property type="resolution" value="2.80 A"/>
    <property type="chains" value="B=1-690"/>
</dbReference>
<dbReference type="PDB" id="7KN0">
    <property type="method" value="NMR"/>
    <property type="chains" value="B=712-753"/>
</dbReference>
<dbReference type="PDB" id="7L8P">
    <property type="method" value="X-ray"/>
    <property type="resolution" value="2.35 A"/>
    <property type="chains" value="B/D=27-498"/>
</dbReference>
<dbReference type="PDB" id="7LA4">
    <property type="method" value="EM"/>
    <property type="resolution" value="3.30 A"/>
    <property type="chains" value="B=1-788"/>
</dbReference>
<dbReference type="PDB" id="7TCT">
    <property type="method" value="X-ray"/>
    <property type="resolution" value="2.50 A"/>
    <property type="chains" value="B/D=27-498"/>
</dbReference>
<dbReference type="PDB" id="7TD8">
    <property type="method" value="X-ray"/>
    <property type="resolution" value="2.60 A"/>
    <property type="chains" value="B/D=27-497"/>
</dbReference>
<dbReference type="PDB" id="7THO">
    <property type="method" value="X-ray"/>
    <property type="resolution" value="2.75 A"/>
    <property type="chains" value="B/D=27-497"/>
</dbReference>
<dbReference type="PDB" id="7TMZ">
    <property type="method" value="X-ray"/>
    <property type="resolution" value="2.20 A"/>
    <property type="chains" value="B/D=27-497"/>
</dbReference>
<dbReference type="PDB" id="7TPD">
    <property type="method" value="X-ray"/>
    <property type="resolution" value="2.60 A"/>
    <property type="chains" value="B/D=27-497"/>
</dbReference>
<dbReference type="PDB" id="7U60">
    <property type="method" value="X-ray"/>
    <property type="resolution" value="2.55 A"/>
    <property type="chains" value="B/D=27-497"/>
</dbReference>
<dbReference type="PDB" id="7U9F">
    <property type="method" value="X-ray"/>
    <property type="resolution" value="2.70 A"/>
    <property type="chains" value="B/D=27-497"/>
</dbReference>
<dbReference type="PDB" id="7U9V">
    <property type="method" value="X-ray"/>
    <property type="resolution" value="2.25 A"/>
    <property type="chains" value="B/D=27-497"/>
</dbReference>
<dbReference type="PDB" id="7UBR">
    <property type="method" value="X-ray"/>
    <property type="resolution" value="2.05 A"/>
    <property type="chains" value="B/D=27-498"/>
</dbReference>
<dbReference type="PDB" id="7UCY">
    <property type="method" value="X-ray"/>
    <property type="resolution" value="2.35 A"/>
    <property type="chains" value="B/D=27-498"/>
</dbReference>
<dbReference type="PDB" id="7UDG">
    <property type="method" value="X-ray"/>
    <property type="resolution" value="2.80 A"/>
    <property type="chains" value="B/D=27-498"/>
</dbReference>
<dbReference type="PDB" id="7UDH">
    <property type="method" value="X-ray"/>
    <property type="resolution" value="2.00 A"/>
    <property type="chains" value="B/D=27-498"/>
</dbReference>
<dbReference type="PDB" id="7UE0">
    <property type="method" value="X-ray"/>
    <property type="resolution" value="2.74 A"/>
    <property type="chains" value="B/D=27-498"/>
</dbReference>
<dbReference type="PDB" id="7UFH">
    <property type="method" value="X-ray"/>
    <property type="resolution" value="3.00 A"/>
    <property type="chains" value="B/D=27-498"/>
</dbReference>
<dbReference type="PDB" id="7UH8">
    <property type="method" value="X-ray"/>
    <property type="resolution" value="2.75 A"/>
    <property type="chains" value="B/D=27-498"/>
</dbReference>
<dbReference type="PDB" id="7UJE">
    <property type="method" value="X-ray"/>
    <property type="resolution" value="2.50 A"/>
    <property type="chains" value="B/D=27-497"/>
</dbReference>
<dbReference type="PDB" id="7UJK">
    <property type="method" value="X-ray"/>
    <property type="resolution" value="2.43 A"/>
    <property type="chains" value="B/D=27-498"/>
</dbReference>
<dbReference type="PDB" id="7UK9">
    <property type="method" value="X-ray"/>
    <property type="resolution" value="2.60 A"/>
    <property type="chains" value="B/D=27-498"/>
</dbReference>
<dbReference type="PDB" id="7UKO">
    <property type="method" value="X-ray"/>
    <property type="resolution" value="2.60 A"/>
    <property type="chains" value="B/D=27-498"/>
</dbReference>
<dbReference type="PDB" id="7UKP">
    <property type="method" value="X-ray"/>
    <property type="resolution" value="2.80 A"/>
    <property type="chains" value="B/D=27-498"/>
</dbReference>
<dbReference type="PDB" id="7UKT">
    <property type="method" value="X-ray"/>
    <property type="resolution" value="2.37 A"/>
    <property type="chains" value="B/D=27-498"/>
</dbReference>
<dbReference type="PDB" id="8GCD">
    <property type="method" value="EM"/>
    <property type="resolution" value="2.97 A"/>
    <property type="chains" value="B=1-788"/>
</dbReference>
<dbReference type="PDB" id="8GCE">
    <property type="method" value="EM"/>
    <property type="resolution" value="3.12 A"/>
    <property type="chains" value="B=1-788"/>
</dbReference>
<dbReference type="PDB" id="8IJ5">
    <property type="method" value="EM"/>
    <property type="resolution" value="3.00 A"/>
    <property type="chains" value="B=31-497"/>
</dbReference>
<dbReference type="PDB" id="8T2U">
    <property type="method" value="EM"/>
    <property type="resolution" value="3.10 A"/>
    <property type="chains" value="B=27-788"/>
</dbReference>
<dbReference type="PDB" id="8T2V">
    <property type="method" value="EM"/>
    <property type="resolution" value="3.40 A"/>
    <property type="chains" value="B=27-788"/>
</dbReference>
<dbReference type="PDB" id="8XEI">
    <property type="method" value="EM"/>
    <property type="resolution" value="2.90 A"/>
    <property type="chains" value="B=1-788"/>
</dbReference>
<dbReference type="PDB" id="8XEK">
    <property type="method" value="EM"/>
    <property type="resolution" value="2.90 A"/>
    <property type="chains" value="B=1-788"/>
</dbReference>
<dbReference type="PDB" id="8XEL">
    <property type="method" value="EM"/>
    <property type="resolution" value="2.80 A"/>
    <property type="chains" value="B=1-788"/>
</dbReference>
<dbReference type="PDB" id="8XEN">
    <property type="method" value="EM"/>
    <property type="resolution" value="3.20 A"/>
    <property type="chains" value="B=1-788"/>
</dbReference>
<dbReference type="PDB" id="8XER">
    <property type="method" value="EM"/>
    <property type="resolution" value="3.00 A"/>
    <property type="chains" value="B=1-788"/>
</dbReference>
<dbReference type="PDB" id="8XEZ">
    <property type="method" value="EM"/>
    <property type="resolution" value="3.15 A"/>
    <property type="chains" value="B=1-788"/>
</dbReference>
<dbReference type="PDB" id="8XF6">
    <property type="method" value="EM"/>
    <property type="resolution" value="3.10 A"/>
    <property type="chains" value="B=1-788"/>
</dbReference>
<dbReference type="PDB" id="8XFG">
    <property type="method" value="EM"/>
    <property type="resolution" value="2.80 A"/>
    <property type="chains" value="B=1-788"/>
</dbReference>
<dbReference type="PDB" id="8XFO">
    <property type="method" value="EM"/>
    <property type="resolution" value="3.00 A"/>
    <property type="chains" value="B=1-788"/>
</dbReference>
<dbReference type="PDB" id="9AXL">
    <property type="method" value="EM"/>
    <property type="resolution" value="3.30 A"/>
    <property type="chains" value="B=1-788"/>
</dbReference>
<dbReference type="PDB" id="9DEQ">
    <property type="method" value="EM"/>
    <property type="resolution" value="4.10 A"/>
    <property type="chains" value="B=27-788"/>
</dbReference>
<dbReference type="PDB" id="9DER">
    <property type="method" value="EM"/>
    <property type="resolution" value="3.90 A"/>
    <property type="chains" value="B=27-788"/>
</dbReference>
<dbReference type="PDBsum" id="1JV2"/>
<dbReference type="PDBsum" id="1KUP"/>
<dbReference type="PDBsum" id="1KUZ"/>
<dbReference type="PDBsum" id="1L5G"/>
<dbReference type="PDBsum" id="1M1X"/>
<dbReference type="PDBsum" id="1M8O"/>
<dbReference type="PDBsum" id="1MIZ"/>
<dbReference type="PDBsum" id="1MK7"/>
<dbReference type="PDBsum" id="1MK9"/>
<dbReference type="PDBsum" id="1S4X"/>
<dbReference type="PDBsum" id="1TYE"/>
<dbReference type="PDBsum" id="1U8C"/>
<dbReference type="PDBsum" id="2K9J"/>
<dbReference type="PDBsum" id="2KNC"/>
<dbReference type="PDBsum" id="2KV9"/>
<dbReference type="PDBsum" id="2L1C"/>
<dbReference type="PDBsum" id="2L91"/>
<dbReference type="PDBsum" id="2LJD"/>
<dbReference type="PDBsum" id="2LJE"/>
<dbReference type="PDBsum" id="2LJF"/>
<dbReference type="PDBsum" id="2MTP"/>
<dbReference type="PDBsum" id="2N9Y"/>
<dbReference type="PDBsum" id="2Q6W"/>
<dbReference type="PDBsum" id="2RMZ"/>
<dbReference type="PDBsum" id="2RN0"/>
<dbReference type="PDBsum" id="2VC2"/>
<dbReference type="PDBsum" id="2VDK"/>
<dbReference type="PDBsum" id="2VDL"/>
<dbReference type="PDBsum" id="2VDM"/>
<dbReference type="PDBsum" id="2VDN"/>
<dbReference type="PDBsum" id="2VDO"/>
<dbReference type="PDBsum" id="2VDP"/>
<dbReference type="PDBsum" id="2VDQ"/>
<dbReference type="PDBsum" id="2VDR"/>
<dbReference type="PDBsum" id="3FCS"/>
<dbReference type="PDBsum" id="3FCU"/>
<dbReference type="PDBsum" id="3IJE"/>
<dbReference type="PDBsum" id="3NID"/>
<dbReference type="PDBsum" id="3NIF"/>
<dbReference type="PDBsum" id="3NIG"/>
<dbReference type="PDBsum" id="3T3M"/>
<dbReference type="PDBsum" id="3T3P"/>
<dbReference type="PDBsum" id="3ZDX"/>
<dbReference type="PDBsum" id="3ZDY"/>
<dbReference type="PDBsum" id="3ZDZ"/>
<dbReference type="PDBsum" id="3ZE0"/>
<dbReference type="PDBsum" id="3ZE1"/>
<dbReference type="PDBsum" id="3ZE2"/>
<dbReference type="PDBsum" id="4CAK"/>
<dbReference type="PDBsum" id="4G1E"/>
<dbReference type="PDBsum" id="4G1M"/>
<dbReference type="PDBsum" id="4MMX"/>
<dbReference type="PDBsum" id="4MMY"/>
<dbReference type="PDBsum" id="4MMZ"/>
<dbReference type="PDBsum" id="4O02"/>
<dbReference type="PDBsum" id="4Z7N"/>
<dbReference type="PDBsum" id="4Z7O"/>
<dbReference type="PDBsum" id="4Z7Q"/>
<dbReference type="PDBsum" id="5HDB"/>
<dbReference type="PDBsum" id="6AVQ"/>
<dbReference type="PDBsum" id="6AVR"/>
<dbReference type="PDBsum" id="6AVU"/>
<dbReference type="PDBsum" id="6BXB"/>
<dbReference type="PDBsum" id="6BXF"/>
<dbReference type="PDBsum" id="6BXJ"/>
<dbReference type="PDBsum" id="6CKB"/>
<dbReference type="PDBsum" id="6MK0"/>
<dbReference type="PDBsum" id="6MSL"/>
<dbReference type="PDBsum" id="6MSU"/>
<dbReference type="PDBsum" id="6NAJ"/>
<dbReference type="PDBsum" id="6V4P"/>
<dbReference type="PDBsum" id="7KN0"/>
<dbReference type="PDBsum" id="7L8P"/>
<dbReference type="PDBsum" id="7LA4"/>
<dbReference type="PDBsum" id="7TCT"/>
<dbReference type="PDBsum" id="7TD8"/>
<dbReference type="PDBsum" id="7THO"/>
<dbReference type="PDBsum" id="7TMZ"/>
<dbReference type="PDBsum" id="7TPD"/>
<dbReference type="PDBsum" id="7U60"/>
<dbReference type="PDBsum" id="7U9F"/>
<dbReference type="PDBsum" id="7U9V"/>
<dbReference type="PDBsum" id="7UBR"/>
<dbReference type="PDBsum" id="7UCY"/>
<dbReference type="PDBsum" id="7UDG"/>
<dbReference type="PDBsum" id="7UDH"/>
<dbReference type="PDBsum" id="7UE0"/>
<dbReference type="PDBsum" id="7UFH"/>
<dbReference type="PDBsum" id="7UH8"/>
<dbReference type="PDBsum" id="7UJE"/>
<dbReference type="PDBsum" id="7UJK"/>
<dbReference type="PDBsum" id="7UK9"/>
<dbReference type="PDBsum" id="7UKO"/>
<dbReference type="PDBsum" id="7UKP"/>
<dbReference type="PDBsum" id="7UKT"/>
<dbReference type="PDBsum" id="8GCD"/>
<dbReference type="PDBsum" id="8GCE"/>
<dbReference type="PDBsum" id="8IJ5"/>
<dbReference type="PDBsum" id="8T2U"/>
<dbReference type="PDBsum" id="8T2V"/>
<dbReference type="PDBsum" id="8XEI"/>
<dbReference type="PDBsum" id="8XEK"/>
<dbReference type="PDBsum" id="8XEL"/>
<dbReference type="PDBsum" id="8XEN"/>
<dbReference type="PDBsum" id="8XER"/>
<dbReference type="PDBsum" id="8XEZ"/>
<dbReference type="PDBsum" id="8XF6"/>
<dbReference type="PDBsum" id="8XFG"/>
<dbReference type="PDBsum" id="8XFO"/>
<dbReference type="PDBsum" id="9AXL"/>
<dbReference type="PDBsum" id="9DEQ"/>
<dbReference type="PDBsum" id="9DER"/>
<dbReference type="BMRB" id="P05106"/>
<dbReference type="EMDB" id="EMD-21044"/>
<dbReference type="EMDB" id="EMD-2281"/>
<dbReference type="EMDB" id="EMD-23245"/>
<dbReference type="EMDB" id="EMD-29931"/>
<dbReference type="EMDB" id="EMD-29932"/>
<dbReference type="EMDB" id="EMD-35465"/>
<dbReference type="EMDB" id="EMD-38290"/>
<dbReference type="EMDB" id="EMD-38292"/>
<dbReference type="EMDB" id="EMD-38293"/>
<dbReference type="EMDB" id="EMD-38294"/>
<dbReference type="EMDB" id="EMD-38296"/>
<dbReference type="EMDB" id="EMD-38298"/>
<dbReference type="EMDB" id="EMD-38299"/>
<dbReference type="EMDB" id="EMD-38304"/>
<dbReference type="EMDB" id="EMD-38306"/>
<dbReference type="EMDB" id="EMD-40988"/>
<dbReference type="EMDB" id="EMD-40989"/>
<dbReference type="EMDB" id="EMD-43046"/>
<dbReference type="EMDB" id="EMD-43969"/>
<dbReference type="EMDB" id="EMD-43983"/>
<dbReference type="EMDB" id="EMD-46793"/>
<dbReference type="EMDB" id="EMD-46794"/>
<dbReference type="EMDB" id="EMD-7011"/>
<dbReference type="EMDB" id="EMD-7012"/>
<dbReference type="EMDB" id="EMD-7013"/>
<dbReference type="SMR" id="P05106"/>
<dbReference type="BioGRID" id="109896">
    <property type="interactions" value="56"/>
</dbReference>
<dbReference type="ComplexPortal" id="CPX-1795">
    <property type="entry name" value="Integrin alphav-beta3 complex"/>
</dbReference>
<dbReference type="ComplexPortal" id="CPX-1799">
    <property type="entry name" value="Integrin alphaIIb-beta3 complex"/>
</dbReference>
<dbReference type="ComplexPortal" id="CPX-8572">
    <property type="entry name" value="Integrin alpha3-beta3 complex"/>
</dbReference>
<dbReference type="CORUM" id="P05106"/>
<dbReference type="DIP" id="DIP-304N"/>
<dbReference type="ELM" id="P05106"/>
<dbReference type="FunCoup" id="P05106">
    <property type="interactions" value="1262"/>
</dbReference>
<dbReference type="IntAct" id="P05106">
    <property type="interactions" value="39"/>
</dbReference>
<dbReference type="MINT" id="P05106"/>
<dbReference type="STRING" id="9606.ENSP00000452786"/>
<dbReference type="BindingDB" id="P05106"/>
<dbReference type="ChEMBL" id="CHEMBL1907598"/>
<dbReference type="ChEMBL" id="CHEMBL2093869"/>
<dbReference type="ChEMBL" id="CHEMBL2111461"/>
<dbReference type="ChEMBL" id="CHEMBL4106150"/>
<dbReference type="DrugBank" id="DB00054">
    <property type="generic name" value="Abciximab"/>
</dbReference>
<dbReference type="DrugBank" id="DB00098">
    <property type="generic name" value="Antithymocyte immunoglobulin (rabbit)"/>
</dbReference>
<dbReference type="DrugBank" id="DB00063">
    <property type="generic name" value="Eptifibatide"/>
</dbReference>
<dbReference type="DrugBank" id="DB13949">
    <property type="generic name" value="Ferric cation"/>
</dbReference>
<dbReference type="DrugBank" id="DB15598">
    <property type="generic name" value="Ferric maltol"/>
</dbReference>
<dbReference type="DrugBank" id="DB06472">
    <property type="generic name" value="Fradafiban"/>
</dbReference>
<dbReference type="DrugBank" id="DB09526">
    <property type="generic name" value="Hydroquinone"/>
</dbReference>
<dbReference type="DrugBank" id="DB04863">
    <property type="generic name" value="Lefradafiban"/>
</dbReference>
<dbReference type="DrugBank" id="DB00451">
    <property type="generic name" value="Levothyroxine"/>
</dbReference>
<dbReference type="DrugBank" id="DB05787">
    <property type="generic name" value="LM-609"/>
</dbReference>
<dbReference type="DrugBank" id="DB02709">
    <property type="generic name" value="Resveratrol"/>
</dbReference>
<dbReference type="DrugBank" id="DB14520">
    <property type="generic name" value="Tetraferric tricitrate decahydrate"/>
</dbReference>
<dbReference type="DrugBank" id="DB00775">
    <property type="generic name" value="Tirofiban"/>
</dbReference>
<dbReference type="DrugCentral" id="P05106"/>
<dbReference type="GuidetoPHARMACOLOGY" id="2457"/>
<dbReference type="GlyConnect" id="1416">
    <property type="glycosylation" value="5 N-Linked glycans (2 sites)"/>
</dbReference>
<dbReference type="GlyCosmos" id="P05106">
    <property type="glycosylation" value="6 sites, 7 glycans"/>
</dbReference>
<dbReference type="GlyGen" id="P05106">
    <property type="glycosylation" value="7 sites, 25 N-linked glycans (4 sites), 1 O-linked glycan (1 site)"/>
</dbReference>
<dbReference type="iPTMnet" id="P05106"/>
<dbReference type="PhosphoSitePlus" id="P05106"/>
<dbReference type="BioMuta" id="ITGB3"/>
<dbReference type="DMDM" id="125987835"/>
<dbReference type="jPOST" id="P05106"/>
<dbReference type="MassIVE" id="P05106"/>
<dbReference type="PaxDb" id="9606-ENSP00000452786"/>
<dbReference type="PeptideAtlas" id="P05106"/>
<dbReference type="ProteomicsDB" id="51790">
    <molecule id="P05106-1"/>
</dbReference>
<dbReference type="ProteomicsDB" id="51791">
    <molecule id="P05106-2"/>
</dbReference>
<dbReference type="ProteomicsDB" id="51792">
    <molecule id="P05106-3"/>
</dbReference>
<dbReference type="Pumba" id="P05106"/>
<dbReference type="ABCD" id="P05106">
    <property type="antibodies" value="39 sequenced antibodies"/>
</dbReference>
<dbReference type="Antibodypedia" id="55106">
    <property type="antibodies" value="2488 antibodies from 52 providers"/>
</dbReference>
<dbReference type="DNASU" id="3690"/>
<dbReference type="Ensembl" id="ENST00000559488.7">
    <molecule id="P05106-1"/>
    <property type="protein sequence ID" value="ENSP00000452786.2"/>
    <property type="gene ID" value="ENSG00000259207.10"/>
</dbReference>
<dbReference type="Ensembl" id="ENST00000696963.1">
    <molecule id="P05106-2"/>
    <property type="protein sequence ID" value="ENSP00000513002.1"/>
    <property type="gene ID" value="ENSG00000259207.10"/>
</dbReference>
<dbReference type="GeneID" id="3690"/>
<dbReference type="KEGG" id="hsa:3690"/>
<dbReference type="MANE-Select" id="ENST00000559488.7">
    <property type="protein sequence ID" value="ENSP00000452786.2"/>
    <property type="RefSeq nucleotide sequence ID" value="NM_000212.3"/>
    <property type="RefSeq protein sequence ID" value="NP_000203.2"/>
</dbReference>
<dbReference type="UCSC" id="uc002ilj.4">
    <molecule id="P05106-1"/>
    <property type="organism name" value="human"/>
</dbReference>
<dbReference type="AGR" id="HGNC:6156"/>
<dbReference type="CTD" id="3690"/>
<dbReference type="DisGeNET" id="3690"/>
<dbReference type="GeneCards" id="ITGB3"/>
<dbReference type="HGNC" id="HGNC:6156">
    <property type="gene designation" value="ITGB3"/>
</dbReference>
<dbReference type="HPA" id="ENSG00000259207">
    <property type="expression patterns" value="Tissue enhanced (thyroid)"/>
</dbReference>
<dbReference type="MalaCards" id="ITGB3"/>
<dbReference type="MIM" id="173470">
    <property type="type" value="gene"/>
</dbReference>
<dbReference type="MIM" id="619267">
    <property type="type" value="phenotype"/>
</dbReference>
<dbReference type="MIM" id="619271">
    <property type="type" value="phenotype"/>
</dbReference>
<dbReference type="neXtProt" id="NX_P05106"/>
<dbReference type="OpenTargets" id="ENSG00000259207"/>
<dbReference type="Orphanet" id="140957">
    <property type="disease" value="Autosomal dominant macrothrombocytopenia"/>
</dbReference>
<dbReference type="Orphanet" id="853">
    <property type="disease" value="Fetal and neonatal alloimmune thrombocytopenia"/>
</dbReference>
<dbReference type="Orphanet" id="849">
    <property type="disease" value="Glanzmann thrombasthenia"/>
</dbReference>
<dbReference type="PharmGKB" id="PA205"/>
<dbReference type="VEuPathDB" id="HostDB:ENSG00000259207"/>
<dbReference type="eggNOG" id="KOG1226">
    <property type="taxonomic scope" value="Eukaryota"/>
</dbReference>
<dbReference type="GeneTree" id="ENSGT01110000267169"/>
<dbReference type="HOGENOM" id="CLU_011772_0_1_1"/>
<dbReference type="InParanoid" id="P05106"/>
<dbReference type="OMA" id="AKWDTTH"/>
<dbReference type="OrthoDB" id="410592at2759"/>
<dbReference type="PAN-GO" id="P05106">
    <property type="GO annotations" value="10 GO annotations based on evolutionary models"/>
</dbReference>
<dbReference type="PhylomeDB" id="P05106"/>
<dbReference type="TreeFam" id="TF105392"/>
<dbReference type="PathwayCommons" id="P05106"/>
<dbReference type="Reactome" id="R-HSA-114608">
    <property type="pathway name" value="Platelet degranulation"/>
</dbReference>
<dbReference type="Reactome" id="R-HSA-1566948">
    <property type="pathway name" value="Elastic fibre formation"/>
</dbReference>
<dbReference type="Reactome" id="R-HSA-210990">
    <property type="pathway name" value="PECAM1 interactions"/>
</dbReference>
<dbReference type="Reactome" id="R-HSA-2129379">
    <property type="pathway name" value="Molecules associated with elastic fibres"/>
</dbReference>
<dbReference type="Reactome" id="R-HSA-216083">
    <property type="pathway name" value="Integrin cell surface interactions"/>
</dbReference>
<dbReference type="Reactome" id="R-HSA-2173789">
    <property type="pathway name" value="TGF-beta receptor signaling activates SMADs"/>
</dbReference>
<dbReference type="Reactome" id="R-HSA-3000170">
    <property type="pathway name" value="Syndecan interactions"/>
</dbReference>
<dbReference type="Reactome" id="R-HSA-3000178">
    <property type="pathway name" value="ECM proteoglycans"/>
</dbReference>
<dbReference type="Reactome" id="R-HSA-354192">
    <property type="pathway name" value="Integrin signaling"/>
</dbReference>
<dbReference type="Reactome" id="R-HSA-354194">
    <property type="pathway name" value="GRB2:SOS provides linkage to MAPK signaling for Integrins"/>
</dbReference>
<dbReference type="Reactome" id="R-HSA-372708">
    <property type="pathway name" value="p130Cas linkage to MAPK signaling for integrins"/>
</dbReference>
<dbReference type="Reactome" id="R-HSA-4420097">
    <property type="pathway name" value="VEGFA-VEGFR2 Pathway"/>
</dbReference>
<dbReference type="Reactome" id="R-HSA-445144">
    <property type="pathway name" value="Signal transduction by L1"/>
</dbReference>
<dbReference type="Reactome" id="R-HSA-5674135">
    <property type="pathway name" value="MAP2K and MAPK activation"/>
</dbReference>
<dbReference type="Reactome" id="R-HSA-6802946">
    <property type="pathway name" value="Signaling by moderate kinase activity BRAF mutants"/>
</dbReference>
<dbReference type="Reactome" id="R-HSA-6802948">
    <property type="pathway name" value="Signaling by high-kinase activity BRAF mutants"/>
</dbReference>
<dbReference type="Reactome" id="R-HSA-6802952">
    <property type="pathway name" value="Signaling by BRAF and RAF1 fusions"/>
</dbReference>
<dbReference type="Reactome" id="R-HSA-6802955">
    <property type="pathway name" value="Paradoxical activation of RAF signaling by kinase inactive BRAF"/>
</dbReference>
<dbReference type="Reactome" id="R-HSA-9649948">
    <property type="pathway name" value="Signaling downstream of RAS mutants"/>
</dbReference>
<dbReference type="Reactome" id="R-HSA-9656223">
    <property type="pathway name" value="Signaling by RAF1 mutants"/>
</dbReference>
<dbReference type="Reactome" id="R-HSA-9856532">
    <property type="pathway name" value="Mechanical load activates signaling by PIEZO1 and integrins in osteocytes"/>
</dbReference>
<dbReference type="Reactome" id="R-HSA-9860927">
    <property type="pathway name" value="Turbulent (oscillatory, disturbed) flow shear stress activates signaling by PIEZO1 and integrins in endothelial cells"/>
</dbReference>
<dbReference type="SignaLink" id="P05106"/>
<dbReference type="SIGNOR" id="P05106"/>
<dbReference type="BioGRID-ORCS" id="3690">
    <property type="hits" value="30 hits in 1167 CRISPR screens"/>
</dbReference>
<dbReference type="ChiTaRS" id="ITGB3">
    <property type="organism name" value="human"/>
</dbReference>
<dbReference type="EvolutionaryTrace" id="P05106"/>
<dbReference type="GeneWiki" id="CD61"/>
<dbReference type="GenomeRNAi" id="3690"/>
<dbReference type="Pharos" id="P05106">
    <property type="development level" value="Tclin"/>
</dbReference>
<dbReference type="PRO" id="PR:P05106"/>
<dbReference type="Proteomes" id="UP000005640">
    <property type="component" value="Chromosome 17"/>
</dbReference>
<dbReference type="RNAct" id="P05106">
    <property type="molecule type" value="protein"/>
</dbReference>
<dbReference type="Bgee" id="ENSG00000259207">
    <property type="expression patterns" value="Expressed in monocyte and 141 other cell types or tissues"/>
</dbReference>
<dbReference type="ExpressionAtlas" id="P05106">
    <property type="expression patterns" value="baseline and differential"/>
</dbReference>
<dbReference type="GO" id="GO:0071133">
    <property type="term" value="C:alpha9-beta1 integrin-ADAM8 complex"/>
    <property type="evidence" value="ECO:0007669"/>
    <property type="project" value="Ensembl"/>
</dbReference>
<dbReference type="GO" id="GO:0035868">
    <property type="term" value="C:alphav-beta3 integrin-HMGB1 complex"/>
    <property type="evidence" value="ECO:0000314"/>
    <property type="project" value="BHF-UCL"/>
</dbReference>
<dbReference type="GO" id="GO:0035867">
    <property type="term" value="C:alphav-beta3 integrin-IGF-1-IGF1R complex"/>
    <property type="evidence" value="ECO:0000314"/>
    <property type="project" value="UniProtKB"/>
</dbReference>
<dbReference type="GO" id="GO:0035866">
    <property type="term" value="C:alphav-beta3 integrin-PKCalpha complex"/>
    <property type="evidence" value="ECO:0000314"/>
    <property type="project" value="BHF-UCL"/>
</dbReference>
<dbReference type="GO" id="GO:0071062">
    <property type="term" value="C:alphav-beta3 integrin-vitronectin complex"/>
    <property type="evidence" value="ECO:0000304"/>
    <property type="project" value="BHF-UCL"/>
</dbReference>
<dbReference type="GO" id="GO:0016324">
    <property type="term" value="C:apical plasma membrane"/>
    <property type="evidence" value="ECO:0007669"/>
    <property type="project" value="Ensembl"/>
</dbReference>
<dbReference type="GO" id="GO:0009986">
    <property type="term" value="C:cell surface"/>
    <property type="evidence" value="ECO:0000314"/>
    <property type="project" value="UniProtKB"/>
</dbReference>
<dbReference type="GO" id="GO:0005911">
    <property type="term" value="C:cell-cell junction"/>
    <property type="evidence" value="ECO:0000314"/>
    <property type="project" value="ARUK-UCL"/>
</dbReference>
<dbReference type="GO" id="GO:0009897">
    <property type="term" value="C:external side of plasma membrane"/>
    <property type="evidence" value="ECO:0007669"/>
    <property type="project" value="Ensembl"/>
</dbReference>
<dbReference type="GO" id="GO:0070062">
    <property type="term" value="C:extracellular exosome"/>
    <property type="evidence" value="ECO:0007005"/>
    <property type="project" value="UniProtKB"/>
</dbReference>
<dbReference type="GO" id="GO:0031527">
    <property type="term" value="C:filopodium membrane"/>
    <property type="evidence" value="ECO:0000314"/>
    <property type="project" value="UniProtKB"/>
</dbReference>
<dbReference type="GO" id="GO:0005925">
    <property type="term" value="C:focal adhesion"/>
    <property type="evidence" value="ECO:0000314"/>
    <property type="project" value="UniProtKB"/>
</dbReference>
<dbReference type="GO" id="GO:0098978">
    <property type="term" value="C:glutamatergic synapse"/>
    <property type="evidence" value="ECO:0000314"/>
    <property type="project" value="SynGO"/>
</dbReference>
<dbReference type="GO" id="GO:0098690">
    <property type="term" value="C:glycinergic synapse"/>
    <property type="evidence" value="ECO:0007669"/>
    <property type="project" value="Ensembl"/>
</dbReference>
<dbReference type="GO" id="GO:0070442">
    <property type="term" value="C:integrin alphaIIb-beta3 complex"/>
    <property type="evidence" value="ECO:0000353"/>
    <property type="project" value="ComplexPortal"/>
</dbReference>
<dbReference type="GO" id="GO:0034683">
    <property type="term" value="C:integrin alphav-beta3 complex"/>
    <property type="evidence" value="ECO:0000314"/>
    <property type="project" value="UniProtKB"/>
</dbReference>
<dbReference type="GO" id="GO:0008305">
    <property type="term" value="C:integrin complex"/>
    <property type="evidence" value="ECO:0000314"/>
    <property type="project" value="BHF-UCL"/>
</dbReference>
<dbReference type="GO" id="GO:0031258">
    <property type="term" value="C:lamellipodium membrane"/>
    <property type="evidence" value="ECO:0000314"/>
    <property type="project" value="UniProtKB"/>
</dbReference>
<dbReference type="GO" id="GO:0042470">
    <property type="term" value="C:melanosome"/>
    <property type="evidence" value="ECO:0000314"/>
    <property type="project" value="UniProtKB"/>
</dbReference>
<dbReference type="GO" id="GO:0031528">
    <property type="term" value="C:microvillus membrane"/>
    <property type="evidence" value="ECO:0000314"/>
    <property type="project" value="UniProtKB"/>
</dbReference>
<dbReference type="GO" id="GO:0005654">
    <property type="term" value="C:nucleoplasm"/>
    <property type="evidence" value="ECO:0000314"/>
    <property type="project" value="HPA"/>
</dbReference>
<dbReference type="GO" id="GO:0005634">
    <property type="term" value="C:nucleus"/>
    <property type="evidence" value="ECO:0000314"/>
    <property type="project" value="MGI"/>
</dbReference>
<dbReference type="GO" id="GO:0005886">
    <property type="term" value="C:plasma membrane"/>
    <property type="evidence" value="ECO:0000314"/>
    <property type="project" value="HPA"/>
</dbReference>
<dbReference type="GO" id="GO:0031092">
    <property type="term" value="C:platelet alpha granule membrane"/>
    <property type="evidence" value="ECO:0000304"/>
    <property type="project" value="Reactome"/>
</dbReference>
<dbReference type="GO" id="GO:0045211">
    <property type="term" value="C:postsynaptic membrane"/>
    <property type="evidence" value="ECO:0007669"/>
    <property type="project" value="UniProtKB-SubCell"/>
</dbReference>
<dbReference type="GO" id="GO:0032991">
    <property type="term" value="C:protein-containing complex"/>
    <property type="evidence" value="ECO:0000314"/>
    <property type="project" value="ARUK-UCL"/>
</dbReference>
<dbReference type="GO" id="GO:0043235">
    <property type="term" value="C:receptor complex"/>
    <property type="evidence" value="ECO:0000314"/>
    <property type="project" value="MGI"/>
</dbReference>
<dbReference type="GO" id="GO:0032587">
    <property type="term" value="C:ruffle membrane"/>
    <property type="evidence" value="ECO:0000314"/>
    <property type="project" value="UniProtKB"/>
</dbReference>
<dbReference type="GO" id="GO:0045202">
    <property type="term" value="C:synapse"/>
    <property type="evidence" value="ECO:0000250"/>
    <property type="project" value="UniProtKB"/>
</dbReference>
<dbReference type="GO" id="GO:0050839">
    <property type="term" value="F:cell adhesion molecule binding"/>
    <property type="evidence" value="ECO:0000353"/>
    <property type="project" value="BHF-UCL"/>
</dbReference>
<dbReference type="GO" id="GO:0015026">
    <property type="term" value="F:coreceptor activity"/>
    <property type="evidence" value="ECO:0000304"/>
    <property type="project" value="UniProtKB"/>
</dbReference>
<dbReference type="GO" id="GO:0019899">
    <property type="term" value="F:enzyme binding"/>
    <property type="evidence" value="ECO:0000353"/>
    <property type="project" value="UniProtKB"/>
</dbReference>
<dbReference type="GO" id="GO:0050840">
    <property type="term" value="F:extracellular matrix binding"/>
    <property type="evidence" value="ECO:0000314"/>
    <property type="project" value="UniProtKB"/>
</dbReference>
<dbReference type="GO" id="GO:0070051">
    <property type="term" value="F:fibrinogen binding"/>
    <property type="evidence" value="ECO:0007669"/>
    <property type="project" value="Ensembl"/>
</dbReference>
<dbReference type="GO" id="GO:0001968">
    <property type="term" value="F:fibronectin binding"/>
    <property type="evidence" value="ECO:0000315"/>
    <property type="project" value="UniProtKB"/>
</dbReference>
<dbReference type="GO" id="GO:0042802">
    <property type="term" value="F:identical protein binding"/>
    <property type="evidence" value="ECO:0000353"/>
    <property type="project" value="IntAct"/>
</dbReference>
<dbReference type="GO" id="GO:0005178">
    <property type="term" value="F:integrin binding"/>
    <property type="evidence" value="ECO:0000353"/>
    <property type="project" value="BHF-UCL"/>
</dbReference>
<dbReference type="GO" id="GO:0046872">
    <property type="term" value="F:metal ion binding"/>
    <property type="evidence" value="ECO:0007669"/>
    <property type="project" value="UniProtKB-KW"/>
</dbReference>
<dbReference type="GO" id="GO:0005161">
    <property type="term" value="F:platelet-derived growth factor receptor binding"/>
    <property type="evidence" value="ECO:0000304"/>
    <property type="project" value="BHF-UCL"/>
</dbReference>
<dbReference type="GO" id="GO:0002020">
    <property type="term" value="F:protease binding"/>
    <property type="evidence" value="ECO:0000314"/>
    <property type="project" value="UniProtKB"/>
</dbReference>
<dbReference type="GO" id="GO:0003756">
    <property type="term" value="F:protein disulfide isomerase activity"/>
    <property type="evidence" value="ECO:0000314"/>
    <property type="project" value="UniProtKB"/>
</dbReference>
<dbReference type="GO" id="GO:0005080">
    <property type="term" value="F:protein kinase C binding"/>
    <property type="evidence" value="ECO:0007669"/>
    <property type="project" value="Ensembl"/>
</dbReference>
<dbReference type="GO" id="GO:0043184">
    <property type="term" value="F:vascular endothelial growth factor receptor 2 binding"/>
    <property type="evidence" value="ECO:0000353"/>
    <property type="project" value="BHF-UCL"/>
</dbReference>
<dbReference type="GO" id="GO:0001618">
    <property type="term" value="F:virus receptor activity"/>
    <property type="evidence" value="ECO:0007669"/>
    <property type="project" value="UniProtKB-KW"/>
</dbReference>
<dbReference type="GO" id="GO:0060055">
    <property type="term" value="P:angiogenesis involved in wound healing"/>
    <property type="evidence" value="ECO:0000304"/>
    <property type="project" value="BHF-UCL"/>
</dbReference>
<dbReference type="GO" id="GO:0038027">
    <property type="term" value="P:apolipoprotein A-I-mediated signaling pathway"/>
    <property type="evidence" value="ECO:0000315"/>
    <property type="project" value="UniProtKB"/>
</dbReference>
<dbReference type="GO" id="GO:0043277">
    <property type="term" value="P:apoptotic cell clearance"/>
    <property type="evidence" value="ECO:0000316"/>
    <property type="project" value="BHF-UCL"/>
</dbReference>
<dbReference type="GO" id="GO:0007596">
    <property type="term" value="P:blood coagulation"/>
    <property type="evidence" value="ECO:0000304"/>
    <property type="project" value="ProtInc"/>
</dbReference>
<dbReference type="GO" id="GO:0072378">
    <property type="term" value="P:blood coagulation, fibrin clot formation"/>
    <property type="evidence" value="ECO:0007669"/>
    <property type="project" value="Ensembl"/>
</dbReference>
<dbReference type="GO" id="GO:0007155">
    <property type="term" value="P:cell adhesion"/>
    <property type="evidence" value="ECO:0000304"/>
    <property type="project" value="ProtInc"/>
</dbReference>
<dbReference type="GO" id="GO:0033627">
    <property type="term" value="P:cell adhesion mediated by integrin"/>
    <property type="evidence" value="ECO:0000314"/>
    <property type="project" value="UniProtKB"/>
</dbReference>
<dbReference type="GO" id="GO:0016477">
    <property type="term" value="P:cell migration"/>
    <property type="evidence" value="ECO:0000318"/>
    <property type="project" value="GO_Central"/>
</dbReference>
<dbReference type="GO" id="GO:0007160">
    <property type="term" value="P:cell-matrix adhesion"/>
    <property type="evidence" value="ECO:0000315"/>
    <property type="project" value="UniProtKB"/>
</dbReference>
<dbReference type="GO" id="GO:0031589">
    <property type="term" value="P:cell-substrate adhesion"/>
    <property type="evidence" value="ECO:0000315"/>
    <property type="project" value="UniProtKB"/>
</dbReference>
<dbReference type="GO" id="GO:0007044">
    <property type="term" value="P:cell-substrate junction assembly"/>
    <property type="evidence" value="ECO:0007669"/>
    <property type="project" value="Ensembl"/>
</dbReference>
<dbReference type="GO" id="GO:1990314">
    <property type="term" value="P:cellular response to insulin-like growth factor stimulus"/>
    <property type="evidence" value="ECO:0007669"/>
    <property type="project" value="Ensembl"/>
</dbReference>
<dbReference type="GO" id="GO:0071260">
    <property type="term" value="P:cellular response to mechanical stimulus"/>
    <property type="evidence" value="ECO:0007669"/>
    <property type="project" value="Ensembl"/>
</dbReference>
<dbReference type="GO" id="GO:0036120">
    <property type="term" value="P:cellular response to platelet-derived growth factor stimulus"/>
    <property type="evidence" value="ECO:0007669"/>
    <property type="project" value="Ensembl"/>
</dbReference>
<dbReference type="GO" id="GO:0071466">
    <property type="term" value="P:cellular response to xenobiotic stimulus"/>
    <property type="evidence" value="ECO:0007669"/>
    <property type="project" value="Ensembl"/>
</dbReference>
<dbReference type="GO" id="GO:0007566">
    <property type="term" value="P:embryo implantation"/>
    <property type="evidence" value="ECO:0007669"/>
    <property type="project" value="Ensembl"/>
</dbReference>
<dbReference type="GO" id="GO:0034113">
    <property type="term" value="P:heterotypic cell-cell adhesion"/>
    <property type="evidence" value="ECO:0000315"/>
    <property type="project" value="UniProtKB"/>
</dbReference>
<dbReference type="GO" id="GO:0007229">
    <property type="term" value="P:integrin-mediated signaling pathway"/>
    <property type="evidence" value="ECO:0000315"/>
    <property type="project" value="BHF-UCL"/>
</dbReference>
<dbReference type="GO" id="GO:0098880">
    <property type="term" value="P:maintenance of postsynaptic specialization structure"/>
    <property type="evidence" value="ECO:0007669"/>
    <property type="project" value="Ensembl"/>
</dbReference>
<dbReference type="GO" id="GO:0048333">
    <property type="term" value="P:mesodermal cell differentiation"/>
    <property type="evidence" value="ECO:0000270"/>
    <property type="project" value="UniProtKB"/>
</dbReference>
<dbReference type="GO" id="GO:0050919">
    <property type="term" value="P:negative chemotaxis"/>
    <property type="evidence" value="ECO:0000315"/>
    <property type="project" value="UniProtKB"/>
</dbReference>
<dbReference type="GO" id="GO:2000352">
    <property type="term" value="P:negative regulation of endothelial cell apoptotic process"/>
    <property type="evidence" value="ECO:0007669"/>
    <property type="project" value="Ensembl"/>
</dbReference>
<dbReference type="GO" id="GO:0010888">
    <property type="term" value="P:negative regulation of lipid storage"/>
    <property type="evidence" value="ECO:0000315"/>
    <property type="project" value="BHF-UCL"/>
</dbReference>
<dbReference type="GO" id="GO:0032369">
    <property type="term" value="P:negative regulation of lipid transport"/>
    <property type="evidence" value="ECO:0000315"/>
    <property type="project" value="BHF-UCL"/>
</dbReference>
<dbReference type="GO" id="GO:0050748">
    <property type="term" value="P:negative regulation of lipoprotein metabolic process"/>
    <property type="evidence" value="ECO:0000315"/>
    <property type="project" value="BHF-UCL"/>
</dbReference>
<dbReference type="GO" id="GO:0010989">
    <property type="term" value="P:negative regulation of low-density lipoprotein particle clearance"/>
    <property type="evidence" value="ECO:0000315"/>
    <property type="project" value="BHF-UCL"/>
</dbReference>
<dbReference type="GO" id="GO:0010745">
    <property type="term" value="P:negative regulation of macrophage derived foam cell differentiation"/>
    <property type="evidence" value="ECO:0000315"/>
    <property type="project" value="BHF-UCL"/>
</dbReference>
<dbReference type="GO" id="GO:0030168">
    <property type="term" value="P:platelet activation"/>
    <property type="evidence" value="ECO:0000315"/>
    <property type="project" value="UniProtKB"/>
</dbReference>
<dbReference type="GO" id="GO:0070527">
    <property type="term" value="P:platelet aggregation"/>
    <property type="evidence" value="ECO:0000315"/>
    <property type="project" value="UniProtKB"/>
</dbReference>
<dbReference type="GO" id="GO:0048008">
    <property type="term" value="P:platelet-derived growth factor receptor signaling pathway"/>
    <property type="evidence" value="ECO:0007669"/>
    <property type="project" value="Ensembl"/>
</dbReference>
<dbReference type="GO" id="GO:1900731">
    <property type="term" value="P:positive regulation of adenylate cyclase-inhibiting opioid receptor signaling pathway"/>
    <property type="evidence" value="ECO:0007669"/>
    <property type="project" value="Ensembl"/>
</dbReference>
<dbReference type="GO" id="GO:0045766">
    <property type="term" value="P:positive regulation of angiogenesis"/>
    <property type="evidence" value="ECO:0007669"/>
    <property type="project" value="Ensembl"/>
</dbReference>
<dbReference type="GO" id="GO:0045780">
    <property type="term" value="P:positive regulation of bone resorption"/>
    <property type="evidence" value="ECO:0007669"/>
    <property type="project" value="Ensembl"/>
</dbReference>
<dbReference type="GO" id="GO:0033630">
    <property type="term" value="P:positive regulation of cell adhesion mediated by integrin"/>
    <property type="evidence" value="ECO:0007669"/>
    <property type="project" value="Ensembl"/>
</dbReference>
<dbReference type="GO" id="GO:0001954">
    <property type="term" value="P:positive regulation of cell-matrix adhesion"/>
    <property type="evidence" value="ECO:0007669"/>
    <property type="project" value="Ensembl"/>
</dbReference>
<dbReference type="GO" id="GO:0010595">
    <property type="term" value="P:positive regulation of endothelial cell migration"/>
    <property type="evidence" value="ECO:0000315"/>
    <property type="project" value="BHF-UCL"/>
</dbReference>
<dbReference type="GO" id="GO:0001938">
    <property type="term" value="P:positive regulation of endothelial cell proliferation"/>
    <property type="evidence" value="ECO:0000315"/>
    <property type="project" value="BHF-UCL"/>
</dbReference>
<dbReference type="GO" id="GO:0070374">
    <property type="term" value="P:positive regulation of ERK1 and ERK2 cascade"/>
    <property type="evidence" value="ECO:0007669"/>
    <property type="project" value="Ensembl"/>
</dbReference>
<dbReference type="GO" id="GO:0010763">
    <property type="term" value="P:positive regulation of fibroblast migration"/>
    <property type="evidence" value="ECO:0007669"/>
    <property type="project" value="Ensembl"/>
</dbReference>
<dbReference type="GO" id="GO:0048146">
    <property type="term" value="P:positive regulation of fibroblast proliferation"/>
    <property type="evidence" value="ECO:0007669"/>
    <property type="project" value="Ensembl"/>
</dbReference>
<dbReference type="GO" id="GO:0010628">
    <property type="term" value="P:positive regulation of gene expression"/>
    <property type="evidence" value="ECO:0007669"/>
    <property type="project" value="Ensembl"/>
</dbReference>
<dbReference type="GO" id="GO:0072126">
    <property type="term" value="P:positive regulation of glomerular mesangial cell proliferation"/>
    <property type="evidence" value="ECO:0007669"/>
    <property type="project" value="Ensembl"/>
</dbReference>
<dbReference type="GO" id="GO:0033690">
    <property type="term" value="P:positive regulation of osteoblast proliferation"/>
    <property type="evidence" value="ECO:0007669"/>
    <property type="project" value="Ensembl"/>
</dbReference>
<dbReference type="GO" id="GO:0014911">
    <property type="term" value="P:positive regulation of smooth muscle cell migration"/>
    <property type="evidence" value="ECO:0007669"/>
    <property type="project" value="Ensembl"/>
</dbReference>
<dbReference type="GO" id="GO:0048661">
    <property type="term" value="P:positive regulation of smooth muscle cell proliferation"/>
    <property type="evidence" value="ECO:0007669"/>
    <property type="project" value="Ensembl"/>
</dbReference>
<dbReference type="GO" id="GO:1900026">
    <property type="term" value="P:positive regulation of substrate adhesion-dependent cell spreading"/>
    <property type="evidence" value="ECO:0007669"/>
    <property type="project" value="Ensembl"/>
</dbReference>
<dbReference type="GO" id="GO:2000406">
    <property type="term" value="P:positive regulation of T cell migration"/>
    <property type="evidence" value="ECO:0007669"/>
    <property type="project" value="Ensembl"/>
</dbReference>
<dbReference type="GO" id="GO:0030949">
    <property type="term" value="P:positive regulation of vascular endothelial growth factor receptor signaling pathway"/>
    <property type="evidence" value="ECO:0000304"/>
    <property type="project" value="BHF-UCL"/>
</dbReference>
<dbReference type="GO" id="GO:1900748">
    <property type="term" value="P:positive regulation of vascular endothelial growth factor signaling pathway"/>
    <property type="evidence" value="ECO:0000315"/>
    <property type="project" value="BHF-UCL"/>
</dbReference>
<dbReference type="GO" id="GO:0032956">
    <property type="term" value="P:regulation of actin cytoskeleton organization"/>
    <property type="evidence" value="ECO:0007669"/>
    <property type="project" value="Ensembl"/>
</dbReference>
<dbReference type="GO" id="GO:0045124">
    <property type="term" value="P:regulation of bone resorption"/>
    <property type="evidence" value="ECO:0000304"/>
    <property type="project" value="BHF-UCL"/>
</dbReference>
<dbReference type="GO" id="GO:1903053">
    <property type="term" value="P:regulation of extracellular matrix organization"/>
    <property type="evidence" value="ECO:0007669"/>
    <property type="project" value="Ensembl"/>
</dbReference>
<dbReference type="GO" id="GO:0150054">
    <property type="term" value="P:regulation of postsynaptic neurotransmitter receptor diffusion trapping"/>
    <property type="evidence" value="ECO:0007669"/>
    <property type="project" value="Ensembl"/>
</dbReference>
<dbReference type="GO" id="GO:0099149">
    <property type="term" value="P:regulation of postsynaptic neurotransmitter receptor internalization"/>
    <property type="evidence" value="ECO:0000314"/>
    <property type="project" value="SynGO"/>
</dbReference>
<dbReference type="GO" id="GO:0032880">
    <property type="term" value="P:regulation of protein localization"/>
    <property type="evidence" value="ECO:0000250"/>
    <property type="project" value="UniProtKB"/>
</dbReference>
<dbReference type="GO" id="GO:0051279">
    <property type="term" value="P:regulation of release of sequestered calcium ion into cytosol"/>
    <property type="evidence" value="ECO:0007669"/>
    <property type="project" value="Ensembl"/>
</dbReference>
<dbReference type="GO" id="GO:0051611">
    <property type="term" value="P:regulation of serotonin uptake"/>
    <property type="evidence" value="ECO:0000250"/>
    <property type="project" value="UniProtKB"/>
</dbReference>
<dbReference type="GO" id="GO:1901163">
    <property type="term" value="P:regulation of trophoblast cell migration"/>
    <property type="evidence" value="ECO:0007669"/>
    <property type="project" value="Ensembl"/>
</dbReference>
<dbReference type="GO" id="GO:0014823">
    <property type="term" value="P:response to activity"/>
    <property type="evidence" value="ECO:0007669"/>
    <property type="project" value="Ensembl"/>
</dbReference>
<dbReference type="GO" id="GO:0014909">
    <property type="term" value="P:smooth muscle cell migration"/>
    <property type="evidence" value="ECO:0000315"/>
    <property type="project" value="BHF-UCL"/>
</dbReference>
<dbReference type="GO" id="GO:0034446">
    <property type="term" value="P:substrate adhesion-dependent cell spreading"/>
    <property type="evidence" value="ECO:0000314"/>
    <property type="project" value="UniProtKB"/>
</dbReference>
<dbReference type="GO" id="GO:0046718">
    <property type="term" value="P:symbiont entry into host cell"/>
    <property type="evidence" value="ECO:0000315"/>
    <property type="project" value="UniProtKB"/>
</dbReference>
<dbReference type="GO" id="GO:0035295">
    <property type="term" value="P:tube development"/>
    <property type="evidence" value="ECO:0000304"/>
    <property type="project" value="BHF-UCL"/>
</dbReference>
<dbReference type="GO" id="GO:0042060">
    <property type="term" value="P:wound healing"/>
    <property type="evidence" value="ECO:0000305"/>
    <property type="project" value="BHF-UCL"/>
</dbReference>
<dbReference type="GO" id="GO:0035313">
    <property type="term" value="P:wound healing, spreading of epidermal cells"/>
    <property type="evidence" value="ECO:0000303"/>
    <property type="project" value="ComplexPortal"/>
</dbReference>
<dbReference type="DisProt" id="DP01842"/>
<dbReference type="FunFam" id="1.20.5.100:FF:000002">
    <property type="entry name" value="Integrin beta"/>
    <property type="match status" value="1"/>
</dbReference>
<dbReference type="FunFam" id="2.10.25.10:FF:000036">
    <property type="entry name" value="Integrin beta"/>
    <property type="match status" value="1"/>
</dbReference>
<dbReference type="FunFam" id="2.10.25.10:FF:000075">
    <property type="entry name" value="Integrin beta"/>
    <property type="match status" value="1"/>
</dbReference>
<dbReference type="FunFam" id="2.60.40.1510:FF:000004">
    <property type="entry name" value="Integrin beta"/>
    <property type="match status" value="1"/>
</dbReference>
<dbReference type="FunFam" id="3.30.1680.10:FF:000002">
    <property type="entry name" value="Integrin beta"/>
    <property type="match status" value="1"/>
</dbReference>
<dbReference type="FunFam" id="3.40.50.410:FF:000002">
    <property type="entry name" value="Integrin beta"/>
    <property type="match status" value="1"/>
</dbReference>
<dbReference type="FunFam" id="4.10.1240.30:FF:000001">
    <property type="entry name" value="Integrin beta"/>
    <property type="match status" value="1"/>
</dbReference>
<dbReference type="Gene3D" id="4.10.1240.30">
    <property type="match status" value="1"/>
</dbReference>
<dbReference type="Gene3D" id="1.20.5.100">
    <property type="entry name" value="Cytochrome c1, transmembrane anchor, C-terminal"/>
    <property type="match status" value="1"/>
</dbReference>
<dbReference type="Gene3D" id="2.10.25.10">
    <property type="entry name" value="Laminin"/>
    <property type="match status" value="3"/>
</dbReference>
<dbReference type="Gene3D" id="3.30.1680.10">
    <property type="entry name" value="ligand-binding face of the semaphorins, domain 2"/>
    <property type="match status" value="1"/>
</dbReference>
<dbReference type="Gene3D" id="2.60.40.1510">
    <property type="entry name" value="ntegrin, alpha v. Chain A, domain 3"/>
    <property type="match status" value="1"/>
</dbReference>
<dbReference type="Gene3D" id="3.40.50.410">
    <property type="entry name" value="von Willebrand factor, type A domain"/>
    <property type="match status" value="1"/>
</dbReference>
<dbReference type="InterPro" id="IPR013111">
    <property type="entry name" value="EGF_extracell"/>
</dbReference>
<dbReference type="InterPro" id="IPR040622">
    <property type="entry name" value="I-EGF_1"/>
</dbReference>
<dbReference type="InterPro" id="IPR033760">
    <property type="entry name" value="Integrin_beta_N"/>
</dbReference>
<dbReference type="InterPro" id="IPR015812">
    <property type="entry name" value="Integrin_bsu"/>
</dbReference>
<dbReference type="InterPro" id="IPR014836">
    <property type="entry name" value="Integrin_bsu_cyt_dom"/>
</dbReference>
<dbReference type="InterPro" id="IPR012896">
    <property type="entry name" value="Integrin_bsu_tail"/>
</dbReference>
<dbReference type="InterPro" id="IPR036349">
    <property type="entry name" value="Integrin_bsu_tail_dom_sf"/>
</dbReference>
<dbReference type="InterPro" id="IPR002369">
    <property type="entry name" value="Integrin_bsu_VWA"/>
</dbReference>
<dbReference type="InterPro" id="IPR032695">
    <property type="entry name" value="Integrin_dom_sf"/>
</dbReference>
<dbReference type="InterPro" id="IPR016201">
    <property type="entry name" value="PSI"/>
</dbReference>
<dbReference type="InterPro" id="IPR036465">
    <property type="entry name" value="vWFA_dom_sf"/>
</dbReference>
<dbReference type="PANTHER" id="PTHR10082">
    <property type="entry name" value="INTEGRIN BETA SUBUNIT"/>
    <property type="match status" value="1"/>
</dbReference>
<dbReference type="PANTHER" id="PTHR10082:SF25">
    <property type="entry name" value="INTEGRIN BETA-3"/>
    <property type="match status" value="1"/>
</dbReference>
<dbReference type="Pfam" id="PF07974">
    <property type="entry name" value="EGF_2"/>
    <property type="match status" value="1"/>
</dbReference>
<dbReference type="Pfam" id="PF23105">
    <property type="entry name" value="EGF_integrin"/>
    <property type="match status" value="1"/>
</dbReference>
<dbReference type="Pfam" id="PF18372">
    <property type="entry name" value="I-EGF_1"/>
    <property type="match status" value="1"/>
</dbReference>
<dbReference type="Pfam" id="PF08725">
    <property type="entry name" value="Integrin_b_cyt"/>
    <property type="match status" value="1"/>
</dbReference>
<dbReference type="Pfam" id="PF07965">
    <property type="entry name" value="Integrin_B_tail"/>
    <property type="match status" value="1"/>
</dbReference>
<dbReference type="Pfam" id="PF00362">
    <property type="entry name" value="Integrin_beta"/>
    <property type="match status" value="1"/>
</dbReference>
<dbReference type="Pfam" id="PF17205">
    <property type="entry name" value="PSI_integrin"/>
    <property type="match status" value="1"/>
</dbReference>
<dbReference type="PIRSF" id="PIRSF002512">
    <property type="entry name" value="Integrin_B"/>
    <property type="match status" value="1"/>
</dbReference>
<dbReference type="PRINTS" id="PR01186">
    <property type="entry name" value="INTEGRINB"/>
</dbReference>
<dbReference type="SMART" id="SM00187">
    <property type="entry name" value="INB"/>
    <property type="match status" value="1"/>
</dbReference>
<dbReference type="SMART" id="SM01241">
    <property type="entry name" value="Integrin_b_cyt"/>
    <property type="match status" value="1"/>
</dbReference>
<dbReference type="SMART" id="SM01242">
    <property type="entry name" value="Integrin_B_tail"/>
    <property type="match status" value="1"/>
</dbReference>
<dbReference type="SMART" id="SM00423">
    <property type="entry name" value="PSI"/>
    <property type="match status" value="1"/>
</dbReference>
<dbReference type="SUPFAM" id="SSF57196">
    <property type="entry name" value="EGF/Laminin"/>
    <property type="match status" value="2"/>
</dbReference>
<dbReference type="SUPFAM" id="SSF69687">
    <property type="entry name" value="Integrin beta tail domain"/>
    <property type="match status" value="1"/>
</dbReference>
<dbReference type="SUPFAM" id="SSF69179">
    <property type="entry name" value="Integrin domains"/>
    <property type="match status" value="1"/>
</dbReference>
<dbReference type="SUPFAM" id="SSF103575">
    <property type="entry name" value="Plexin repeat"/>
    <property type="match status" value="1"/>
</dbReference>
<dbReference type="SUPFAM" id="SSF53300">
    <property type="entry name" value="vWA-like"/>
    <property type="match status" value="1"/>
</dbReference>
<dbReference type="PROSITE" id="PS00022">
    <property type="entry name" value="EGF_1"/>
    <property type="match status" value="2"/>
</dbReference>
<dbReference type="PROSITE" id="PS01186">
    <property type="entry name" value="EGF_2"/>
    <property type="match status" value="1"/>
</dbReference>
<dbReference type="PROSITE" id="PS00243">
    <property type="entry name" value="I_EGF_1"/>
    <property type="match status" value="3"/>
</dbReference>
<dbReference type="PROSITE" id="PS52047">
    <property type="entry name" value="I_EGF_2"/>
    <property type="match status" value="4"/>
</dbReference>
<evidence type="ECO:0000250" key="1">
    <source>
        <dbReference type="UniProtKB" id="O54890"/>
    </source>
</evidence>
<evidence type="ECO:0000250" key="2">
    <source>
        <dbReference type="UniProtKB" id="Q8R2H2"/>
    </source>
</evidence>
<evidence type="ECO:0000255" key="3"/>
<evidence type="ECO:0000255" key="4">
    <source>
        <dbReference type="PROSITE-ProRule" id="PRU01392"/>
    </source>
</evidence>
<evidence type="ECO:0000269" key="5">
    <source>
    </source>
</evidence>
<evidence type="ECO:0000269" key="6">
    <source>
    </source>
</evidence>
<evidence type="ECO:0000269" key="7">
    <source>
    </source>
</evidence>
<evidence type="ECO:0000269" key="8">
    <source>
    </source>
</evidence>
<evidence type="ECO:0000269" key="9">
    <source>
    </source>
</evidence>
<evidence type="ECO:0000269" key="10">
    <source>
    </source>
</evidence>
<evidence type="ECO:0000269" key="11">
    <source>
    </source>
</evidence>
<evidence type="ECO:0000269" key="12">
    <source>
    </source>
</evidence>
<evidence type="ECO:0000269" key="13">
    <source>
    </source>
</evidence>
<evidence type="ECO:0000269" key="14">
    <source>
    </source>
</evidence>
<evidence type="ECO:0000269" key="15">
    <source>
    </source>
</evidence>
<evidence type="ECO:0000269" key="16">
    <source>
    </source>
</evidence>
<evidence type="ECO:0000269" key="17">
    <source>
    </source>
</evidence>
<evidence type="ECO:0000269" key="18">
    <source>
    </source>
</evidence>
<evidence type="ECO:0000269" key="19">
    <source>
    </source>
</evidence>
<evidence type="ECO:0000269" key="20">
    <source>
    </source>
</evidence>
<evidence type="ECO:0000269" key="21">
    <source>
    </source>
</evidence>
<evidence type="ECO:0000269" key="22">
    <source>
    </source>
</evidence>
<evidence type="ECO:0000269" key="23">
    <source>
    </source>
</evidence>
<evidence type="ECO:0000269" key="24">
    <source>
    </source>
</evidence>
<evidence type="ECO:0000269" key="25">
    <source>
    </source>
</evidence>
<evidence type="ECO:0000269" key="26">
    <source>
    </source>
</evidence>
<evidence type="ECO:0000269" key="27">
    <source>
    </source>
</evidence>
<evidence type="ECO:0000269" key="28">
    <source>
    </source>
</evidence>
<evidence type="ECO:0000269" key="29">
    <source>
    </source>
</evidence>
<evidence type="ECO:0000269" key="30">
    <source>
    </source>
</evidence>
<evidence type="ECO:0000269" key="31">
    <source>
    </source>
</evidence>
<evidence type="ECO:0000269" key="32">
    <source>
    </source>
</evidence>
<evidence type="ECO:0000269" key="33">
    <source>
    </source>
</evidence>
<evidence type="ECO:0000269" key="34">
    <source>
    </source>
</evidence>
<evidence type="ECO:0000269" key="35">
    <source>
    </source>
</evidence>
<evidence type="ECO:0000269" key="36">
    <source>
    </source>
</evidence>
<evidence type="ECO:0000269" key="37">
    <source>
    </source>
</evidence>
<evidence type="ECO:0000269" key="38">
    <source>
    </source>
</evidence>
<evidence type="ECO:0000269" key="39">
    <source>
    </source>
</evidence>
<evidence type="ECO:0000269" key="40">
    <source>
    </source>
</evidence>
<evidence type="ECO:0000269" key="41">
    <source>
    </source>
</evidence>
<evidence type="ECO:0000269" key="42">
    <source>
    </source>
</evidence>
<evidence type="ECO:0000269" key="43">
    <source>
    </source>
</evidence>
<evidence type="ECO:0000269" key="44">
    <source>
    </source>
</evidence>
<evidence type="ECO:0000269" key="45">
    <source>
    </source>
</evidence>
<evidence type="ECO:0000269" key="46">
    <source>
    </source>
</evidence>
<evidence type="ECO:0000269" key="47">
    <source>
    </source>
</evidence>
<evidence type="ECO:0000269" key="48">
    <source>
    </source>
</evidence>
<evidence type="ECO:0000269" key="49">
    <source>
    </source>
</evidence>
<evidence type="ECO:0000269" key="50">
    <source>
    </source>
</evidence>
<evidence type="ECO:0000269" key="51">
    <source>
    </source>
</evidence>
<evidence type="ECO:0000269" key="52">
    <source>
    </source>
</evidence>
<evidence type="ECO:0000269" key="53">
    <source>
    </source>
</evidence>
<evidence type="ECO:0000269" key="54">
    <source>
    </source>
</evidence>
<evidence type="ECO:0000269" key="55">
    <source>
    </source>
</evidence>
<evidence type="ECO:0000269" key="56">
    <source>
    </source>
</evidence>
<evidence type="ECO:0000269" key="57">
    <source>
    </source>
</evidence>
<evidence type="ECO:0000269" key="58">
    <source>
    </source>
</evidence>
<evidence type="ECO:0000269" key="59">
    <source>
    </source>
</evidence>
<evidence type="ECO:0000269" key="60">
    <source>
    </source>
</evidence>
<evidence type="ECO:0000269" key="61">
    <source>
    </source>
</evidence>
<evidence type="ECO:0000269" key="62">
    <source>
    </source>
</evidence>
<evidence type="ECO:0000269" key="63">
    <source>
    </source>
</evidence>
<evidence type="ECO:0000269" key="64">
    <source>
    </source>
</evidence>
<evidence type="ECO:0000269" key="65">
    <source>
    </source>
</evidence>
<evidence type="ECO:0000269" key="66">
    <source>
    </source>
</evidence>
<evidence type="ECO:0000269" key="67">
    <source>
    </source>
</evidence>
<evidence type="ECO:0000269" key="68">
    <source>
    </source>
</evidence>
<evidence type="ECO:0000269" key="69">
    <source>
    </source>
</evidence>
<evidence type="ECO:0000269" key="70">
    <source>
    </source>
</evidence>
<evidence type="ECO:0000269" key="71">
    <source>
    </source>
</evidence>
<evidence type="ECO:0000269" key="72">
    <source>
    </source>
</evidence>
<evidence type="ECO:0000269" key="73">
    <source>
    </source>
</evidence>
<evidence type="ECO:0000269" key="74">
    <source>
    </source>
</evidence>
<evidence type="ECO:0000269" key="75">
    <source>
    </source>
</evidence>
<evidence type="ECO:0000269" key="76">
    <source>
    </source>
</evidence>
<evidence type="ECO:0000269" key="77">
    <source>
    </source>
</evidence>
<evidence type="ECO:0000269" key="78">
    <source>
    </source>
</evidence>
<evidence type="ECO:0000269" key="79">
    <source>
    </source>
</evidence>
<evidence type="ECO:0000269" key="80">
    <source>
    </source>
</evidence>
<evidence type="ECO:0000269" key="81">
    <source>
    </source>
</evidence>
<evidence type="ECO:0000269" key="82">
    <source>
    </source>
</evidence>
<evidence type="ECO:0000269" key="83">
    <source ref="13"/>
</evidence>
<evidence type="ECO:0000303" key="84">
    <source>
    </source>
</evidence>
<evidence type="ECO:0000303" key="85">
    <source>
    </source>
</evidence>
<evidence type="ECO:0000303" key="86">
    <source>
    </source>
</evidence>
<evidence type="ECO:0000303" key="87">
    <source>
    </source>
</evidence>
<evidence type="ECO:0000305" key="88"/>
<evidence type="ECO:0000305" key="89">
    <source>
    </source>
</evidence>
<evidence type="ECO:0000305" key="90">
    <source>
    </source>
</evidence>
<evidence type="ECO:0000312" key="91">
    <source>
        <dbReference type="HGNC" id="HGNC:6156"/>
    </source>
</evidence>
<evidence type="ECO:0007744" key="92">
    <source>
        <dbReference type="PDB" id="1JV2"/>
    </source>
</evidence>
<evidence type="ECO:0007744" key="93">
    <source>
        <dbReference type="PDB" id="1TYE"/>
    </source>
</evidence>
<evidence type="ECO:0007744" key="94">
    <source>
        <dbReference type="PDB" id="2Q6W"/>
    </source>
</evidence>
<evidence type="ECO:0007744" key="95">
    <source>
        <dbReference type="PDB" id="3FCS"/>
    </source>
</evidence>
<evidence type="ECO:0007744" key="96">
    <source>
        <dbReference type="PDB" id="3FCU"/>
    </source>
</evidence>
<evidence type="ECO:0007744" key="97">
    <source>
        <dbReference type="PDB" id="3IJE"/>
    </source>
</evidence>
<evidence type="ECO:0007744" key="98">
    <source>
        <dbReference type="PDB" id="4G1M"/>
    </source>
</evidence>
<evidence type="ECO:0007744" key="99">
    <source>
    </source>
</evidence>
<evidence type="ECO:0007829" key="100">
    <source>
        <dbReference type="PDB" id="1KUP"/>
    </source>
</evidence>
<evidence type="ECO:0007829" key="101">
    <source>
        <dbReference type="PDB" id="1M1X"/>
    </source>
</evidence>
<evidence type="ECO:0007829" key="102">
    <source>
        <dbReference type="PDB" id="1MK7"/>
    </source>
</evidence>
<evidence type="ECO:0007829" key="103">
    <source>
        <dbReference type="PDB" id="1S4X"/>
    </source>
</evidence>
<evidence type="ECO:0007829" key="104">
    <source>
        <dbReference type="PDB" id="1U8C"/>
    </source>
</evidence>
<evidence type="ECO:0007829" key="105">
    <source>
        <dbReference type="PDB" id="2KNC"/>
    </source>
</evidence>
<evidence type="ECO:0007829" key="106">
    <source>
        <dbReference type="PDB" id="2LJD"/>
    </source>
</evidence>
<evidence type="ECO:0007829" key="107">
    <source>
        <dbReference type="PDB" id="3FCS"/>
    </source>
</evidence>
<evidence type="ECO:0007829" key="108">
    <source>
        <dbReference type="PDB" id="3IJE"/>
    </source>
</evidence>
<evidence type="ECO:0007829" key="109">
    <source>
        <dbReference type="PDB" id="3NID"/>
    </source>
</evidence>
<evidence type="ECO:0007829" key="110">
    <source>
        <dbReference type="PDB" id="3ZE2"/>
    </source>
</evidence>
<evidence type="ECO:0007829" key="111">
    <source>
        <dbReference type="PDB" id="4G1E"/>
    </source>
</evidence>
<evidence type="ECO:0007829" key="112">
    <source>
        <dbReference type="PDB" id="4MMX"/>
    </source>
</evidence>
<evidence type="ECO:0007829" key="113">
    <source>
        <dbReference type="PDB" id="5HDB"/>
    </source>
</evidence>
<evidence type="ECO:0007829" key="114">
    <source>
        <dbReference type="PDB" id="6BXB"/>
    </source>
</evidence>
<evidence type="ECO:0007829" key="115">
    <source>
        <dbReference type="PDB" id="6BXJ"/>
    </source>
</evidence>
<evidence type="ECO:0007829" key="116">
    <source>
        <dbReference type="PDB" id="6MK0"/>
    </source>
</evidence>
<evidence type="ECO:0007829" key="117">
    <source>
        <dbReference type="PDB" id="7UDH"/>
    </source>
</evidence>
<evidence type="ECO:0007829" key="118">
    <source>
        <dbReference type="PDB" id="8GCD"/>
    </source>
</evidence>
<organism>
    <name type="scientific">Homo sapiens</name>
    <name type="common">Human</name>
    <dbReference type="NCBI Taxonomy" id="9606"/>
    <lineage>
        <taxon>Eukaryota</taxon>
        <taxon>Metazoa</taxon>
        <taxon>Chordata</taxon>
        <taxon>Craniata</taxon>
        <taxon>Vertebrata</taxon>
        <taxon>Euteleostomi</taxon>
        <taxon>Mammalia</taxon>
        <taxon>Eutheria</taxon>
        <taxon>Euarchontoglires</taxon>
        <taxon>Primates</taxon>
        <taxon>Haplorrhini</taxon>
        <taxon>Catarrhini</taxon>
        <taxon>Hominidae</taxon>
        <taxon>Homo</taxon>
    </lineage>
</organism>